<dbReference type="EC" id="3.4.23.16" evidence="44 45"/>
<dbReference type="EC" id="2.7.7.49" evidence="2"/>
<dbReference type="EC" id="2.7.7.7" evidence="2"/>
<dbReference type="EC" id="3.1.26.13" evidence="2"/>
<dbReference type="EC" id="3.1.13.2"/>
<dbReference type="EC" id="2.7.7.-" evidence="57"/>
<dbReference type="EC" id="3.1.-.-" evidence="57"/>
<dbReference type="EMBL" id="K03455">
    <property type="protein sequence ID" value="AAB50259.1"/>
    <property type="status" value="ALT_SEQ"/>
    <property type="molecule type" value="Genomic_RNA"/>
</dbReference>
<dbReference type="EMBL" id="AF033819">
    <property type="protein sequence ID" value="AAC82598.2"/>
    <property type="status" value="ALT_SEQ"/>
    <property type="molecule type" value="Genomic_RNA"/>
</dbReference>
<dbReference type="RefSeq" id="NP_057849.4">
    <property type="nucleotide sequence ID" value="NC_001802.1"/>
</dbReference>
<dbReference type="PDB" id="1A30">
    <property type="method" value="X-ray"/>
    <property type="resolution" value="2.00 A"/>
    <property type="chains" value="A/B=489-587"/>
</dbReference>
<dbReference type="PDB" id="1BV7">
    <property type="method" value="X-ray"/>
    <property type="resolution" value="2.00 A"/>
    <property type="chains" value="A/B=489-587"/>
</dbReference>
<dbReference type="PDB" id="1BV9">
    <property type="method" value="X-ray"/>
    <property type="resolution" value="2.00 A"/>
    <property type="chains" value="A/B=489-587"/>
</dbReference>
<dbReference type="PDB" id="1BVE">
    <property type="method" value="NMR"/>
    <property type="chains" value="A/B=489-587"/>
</dbReference>
<dbReference type="PDB" id="1BVG">
    <property type="method" value="NMR"/>
    <property type="chains" value="A/B=489-587"/>
</dbReference>
<dbReference type="PDB" id="1BWA">
    <property type="method" value="X-ray"/>
    <property type="resolution" value="1.90 A"/>
    <property type="chains" value="A/B=489-587"/>
</dbReference>
<dbReference type="PDB" id="1BWB">
    <property type="method" value="X-ray"/>
    <property type="resolution" value="1.80 A"/>
    <property type="chains" value="A/B=489-587"/>
</dbReference>
<dbReference type="PDB" id="1C0T">
    <property type="method" value="X-ray"/>
    <property type="resolution" value="2.70 A"/>
    <property type="chains" value="A=588-1147, B=588-1027"/>
</dbReference>
<dbReference type="PDB" id="1C0U">
    <property type="method" value="X-ray"/>
    <property type="resolution" value="2.52 A"/>
    <property type="chains" value="A=588-1147, B=588-1027"/>
</dbReference>
<dbReference type="PDB" id="1C1B">
    <property type="method" value="X-ray"/>
    <property type="resolution" value="2.50 A"/>
    <property type="chains" value="A=588-1147, B=588-1027"/>
</dbReference>
<dbReference type="PDB" id="1C1C">
    <property type="method" value="X-ray"/>
    <property type="resolution" value="2.50 A"/>
    <property type="chains" value="A=588-1147, B=588-1027"/>
</dbReference>
<dbReference type="PDB" id="1DMP">
    <property type="method" value="X-ray"/>
    <property type="resolution" value="2.00 A"/>
    <property type="chains" value="A/B=489-587"/>
</dbReference>
<dbReference type="PDB" id="1DTQ">
    <property type="method" value="X-ray"/>
    <property type="resolution" value="2.80 A"/>
    <property type="chains" value="A=588-1147, B=588-1027"/>
</dbReference>
<dbReference type="PDB" id="1DTT">
    <property type="method" value="X-ray"/>
    <property type="resolution" value="3.00 A"/>
    <property type="chains" value="A=588-1147, B=588-1027"/>
</dbReference>
<dbReference type="PDB" id="1E6J">
    <property type="method" value="X-ray"/>
    <property type="resolution" value="3.00 A"/>
    <property type="chains" value="P=143-352"/>
</dbReference>
<dbReference type="PDB" id="1EP4">
    <property type="method" value="X-ray"/>
    <property type="resolution" value="2.50 A"/>
    <property type="chains" value="A=588-1147, B=588-1027"/>
</dbReference>
<dbReference type="PDB" id="1ESK">
    <property type="method" value="NMR"/>
    <property type="chains" value="A=390-430"/>
</dbReference>
<dbReference type="PDB" id="1EX4">
    <property type="method" value="X-ray"/>
    <property type="resolution" value="2.80 A"/>
    <property type="chains" value="A/B=1199-1435"/>
</dbReference>
<dbReference type="PDB" id="1EXQ">
    <property type="method" value="X-ray"/>
    <property type="resolution" value="1.60 A"/>
    <property type="chains" value="A/B=1203-1356"/>
</dbReference>
<dbReference type="PDB" id="1FB7">
    <property type="method" value="X-ray"/>
    <property type="resolution" value="2.60 A"/>
    <property type="chains" value="A=489-587"/>
</dbReference>
<dbReference type="PDB" id="1FK9">
    <property type="method" value="X-ray"/>
    <property type="resolution" value="2.50 A"/>
    <property type="chains" value="A=588-1130, B=588-1027"/>
</dbReference>
<dbReference type="PDB" id="1FKO">
    <property type="method" value="X-ray"/>
    <property type="resolution" value="2.90 A"/>
    <property type="chains" value="A=588-1130, B=588-1027"/>
</dbReference>
<dbReference type="PDB" id="1FKP">
    <property type="method" value="X-ray"/>
    <property type="resolution" value="2.90 A"/>
    <property type="chains" value="A=588-1130, B=588-1027"/>
</dbReference>
<dbReference type="PDB" id="1G6L">
    <property type="method" value="X-ray"/>
    <property type="resolution" value="1.90 A"/>
    <property type="chains" value="A=484-587"/>
</dbReference>
<dbReference type="PDB" id="1HIV">
    <property type="method" value="X-ray"/>
    <property type="resolution" value="2.00 A"/>
    <property type="chains" value="A/B=489-587"/>
</dbReference>
<dbReference type="PDB" id="1HVH">
    <property type="method" value="X-ray"/>
    <property type="resolution" value="1.80 A"/>
    <property type="chains" value="A/B=489-587"/>
</dbReference>
<dbReference type="PDB" id="1HVR">
    <property type="method" value="X-ray"/>
    <property type="resolution" value="1.80 A"/>
    <property type="chains" value="A/B=489-587"/>
</dbReference>
<dbReference type="PDB" id="1HWR">
    <property type="method" value="X-ray"/>
    <property type="resolution" value="1.80 A"/>
    <property type="chains" value="A/B=489-587"/>
</dbReference>
<dbReference type="PDB" id="1HXB">
    <property type="method" value="X-ray"/>
    <property type="resolution" value="2.30 A"/>
    <property type="chains" value="A/B=489-587"/>
</dbReference>
<dbReference type="PDB" id="1JKH">
    <property type="method" value="X-ray"/>
    <property type="resolution" value="2.50 A"/>
    <property type="chains" value="A=588-1147, B=588-1027"/>
</dbReference>
<dbReference type="PDB" id="1JLA">
    <property type="method" value="X-ray"/>
    <property type="resolution" value="2.50 A"/>
    <property type="chains" value="A=588-1147, B=588-1027"/>
</dbReference>
<dbReference type="PDB" id="1JLB">
    <property type="method" value="X-ray"/>
    <property type="resolution" value="3.00 A"/>
    <property type="chains" value="A=588-1147, B=588-1027"/>
</dbReference>
<dbReference type="PDB" id="1JLC">
    <property type="method" value="X-ray"/>
    <property type="resolution" value="3.00 A"/>
    <property type="chains" value="A=588-1147, B=588-1027"/>
</dbReference>
<dbReference type="PDB" id="1JLE">
    <property type="method" value="X-ray"/>
    <property type="resolution" value="2.80 A"/>
    <property type="chains" value="A=588-1147, B=588-1027"/>
</dbReference>
<dbReference type="PDB" id="1JLF">
    <property type="method" value="X-ray"/>
    <property type="resolution" value="2.60 A"/>
    <property type="chains" value="A=588-1147, B=588-1027"/>
</dbReference>
<dbReference type="PDB" id="1JLG">
    <property type="method" value="X-ray"/>
    <property type="resolution" value="2.60 A"/>
    <property type="chains" value="A=588-1147, B=588-1027"/>
</dbReference>
<dbReference type="PDB" id="1JLQ">
    <property type="method" value="X-ray"/>
    <property type="resolution" value="3.00 A"/>
    <property type="chains" value="A=588-1147, B=588-1027"/>
</dbReference>
<dbReference type="PDB" id="1KLM">
    <property type="method" value="X-ray"/>
    <property type="resolution" value="2.65 A"/>
    <property type="chains" value="A=588-1147, B=588-1027"/>
</dbReference>
<dbReference type="PDB" id="1LV1">
    <property type="method" value="X-ray"/>
    <property type="resolution" value="2.10 A"/>
    <property type="chains" value="A=484-587"/>
</dbReference>
<dbReference type="PDB" id="1LW0">
    <property type="method" value="X-ray"/>
    <property type="resolution" value="2.80 A"/>
    <property type="chains" value="A=588-1147, B=588-1027"/>
</dbReference>
<dbReference type="PDB" id="1LW2">
    <property type="method" value="X-ray"/>
    <property type="resolution" value="3.00 A"/>
    <property type="chains" value="A=588-1147, B=588-1027"/>
</dbReference>
<dbReference type="PDB" id="1LWC">
    <property type="method" value="X-ray"/>
    <property type="resolution" value="2.62 A"/>
    <property type="chains" value="A=588-1147, B=588-1027"/>
</dbReference>
<dbReference type="PDB" id="1LWE">
    <property type="method" value="X-ray"/>
    <property type="resolution" value="2.81 A"/>
    <property type="chains" value="A=588-1147, B=588-1027"/>
</dbReference>
<dbReference type="PDB" id="1LWF">
    <property type="method" value="X-ray"/>
    <property type="resolution" value="2.80 A"/>
    <property type="chains" value="A=588-1147, B=588-1027"/>
</dbReference>
<dbReference type="PDB" id="1NCP">
    <property type="method" value="NMR"/>
    <property type="chains" value="N=390-406"/>
</dbReference>
<dbReference type="PDB" id="1O1W">
    <property type="method" value="NMR"/>
    <property type="chains" value="A=1014-1147"/>
</dbReference>
<dbReference type="PDB" id="1ODW">
    <property type="method" value="X-ray"/>
    <property type="resolution" value="2.10 A"/>
    <property type="chains" value="A/B=489-587"/>
</dbReference>
<dbReference type="PDB" id="1ODY">
    <property type="method" value="X-ray"/>
    <property type="resolution" value="2.00 A"/>
    <property type="chains" value="A/B=489-587"/>
</dbReference>
<dbReference type="PDB" id="1QBR">
    <property type="method" value="X-ray"/>
    <property type="resolution" value="1.80 A"/>
    <property type="chains" value="A/B=489-587"/>
</dbReference>
<dbReference type="PDB" id="1QBS">
    <property type="method" value="X-ray"/>
    <property type="resolution" value="1.80 A"/>
    <property type="chains" value="A/B=489-587"/>
</dbReference>
<dbReference type="PDB" id="1QBT">
    <property type="method" value="X-ray"/>
    <property type="resolution" value="2.10 A"/>
    <property type="chains" value="A/B=489-587"/>
</dbReference>
<dbReference type="PDB" id="1QBU">
    <property type="method" value="X-ray"/>
    <property type="resolution" value="1.80 A"/>
    <property type="chains" value="A/B=489-587"/>
</dbReference>
<dbReference type="PDB" id="1REV">
    <property type="method" value="X-ray"/>
    <property type="resolution" value="2.60 A"/>
    <property type="chains" value="A=588-1147, B=588-1027"/>
</dbReference>
<dbReference type="PDB" id="1RT1">
    <property type="method" value="X-ray"/>
    <property type="resolution" value="2.55 A"/>
    <property type="chains" value="A=588-1147, B=588-1027"/>
</dbReference>
<dbReference type="PDB" id="1RT2">
    <property type="method" value="X-ray"/>
    <property type="resolution" value="2.55 A"/>
    <property type="chains" value="A=588-1147, B=588-1027"/>
</dbReference>
<dbReference type="PDB" id="1RT3">
    <property type="method" value="X-ray"/>
    <property type="resolution" value="3.00 A"/>
    <property type="chains" value="A=588-1147, B=588-1027"/>
</dbReference>
<dbReference type="PDB" id="1RT4">
    <property type="method" value="X-ray"/>
    <property type="resolution" value="2.90 A"/>
    <property type="chains" value="A=588-1147, B=588-1027"/>
</dbReference>
<dbReference type="PDB" id="1RT5">
    <property type="method" value="X-ray"/>
    <property type="resolution" value="2.90 A"/>
    <property type="chains" value="A=588-1147, B=588-1027"/>
</dbReference>
<dbReference type="PDB" id="1RT6">
    <property type="method" value="X-ray"/>
    <property type="resolution" value="2.80 A"/>
    <property type="chains" value="A=588-1147, B=588-1027"/>
</dbReference>
<dbReference type="PDB" id="1RT7">
    <property type="method" value="X-ray"/>
    <property type="resolution" value="3.00 A"/>
    <property type="chains" value="A=588-1147, B=588-1027"/>
</dbReference>
<dbReference type="PDB" id="1RTD">
    <property type="method" value="X-ray"/>
    <property type="resolution" value="3.20 A"/>
    <property type="chains" value="B/D=588-1027"/>
</dbReference>
<dbReference type="PDB" id="1RTH">
    <property type="method" value="X-ray"/>
    <property type="resolution" value="2.20 A"/>
    <property type="chains" value="A=588-1147, B=588-1027"/>
</dbReference>
<dbReference type="PDB" id="1RTI">
    <property type="method" value="X-ray"/>
    <property type="resolution" value="3.00 A"/>
    <property type="chains" value="A=588-1147, B=588-1027"/>
</dbReference>
<dbReference type="PDB" id="1RTJ">
    <property type="method" value="X-ray"/>
    <property type="resolution" value="2.35 A"/>
    <property type="chains" value="A=588-1147, B=588-1027"/>
</dbReference>
<dbReference type="PDB" id="1S1T">
    <property type="method" value="X-ray"/>
    <property type="resolution" value="2.40 A"/>
    <property type="chains" value="A=588-1147, B=588-1027"/>
</dbReference>
<dbReference type="PDB" id="1S1U">
    <property type="method" value="X-ray"/>
    <property type="resolution" value="3.00 A"/>
    <property type="chains" value="A=588-1147, B=588-1027"/>
</dbReference>
<dbReference type="PDB" id="1S1V">
    <property type="method" value="X-ray"/>
    <property type="resolution" value="2.60 A"/>
    <property type="chains" value="A=588-1147, B=588-1027"/>
</dbReference>
<dbReference type="PDB" id="1S1W">
    <property type="method" value="X-ray"/>
    <property type="resolution" value="2.70 A"/>
    <property type="chains" value="A=588-1147, B=588-1027"/>
</dbReference>
<dbReference type="PDB" id="1S1X">
    <property type="method" value="X-ray"/>
    <property type="resolution" value="2.80 A"/>
    <property type="chains" value="A=588-1147, B=588-1027"/>
</dbReference>
<dbReference type="PDB" id="1T05">
    <property type="method" value="X-ray"/>
    <property type="resolution" value="3.00 A"/>
    <property type="chains" value="B=588-1016"/>
</dbReference>
<dbReference type="PDB" id="1TAM">
    <property type="method" value="NMR"/>
    <property type="chains" value="A=1-132"/>
</dbReference>
<dbReference type="PDB" id="1TKT">
    <property type="method" value="X-ray"/>
    <property type="resolution" value="2.60 A"/>
    <property type="chains" value="A=588-1147, B=588-1027"/>
</dbReference>
<dbReference type="PDB" id="1TKX">
    <property type="method" value="X-ray"/>
    <property type="resolution" value="2.85 A"/>
    <property type="chains" value="A=588-1147, B=588-1027"/>
</dbReference>
<dbReference type="PDB" id="1TKZ">
    <property type="method" value="X-ray"/>
    <property type="resolution" value="2.81 A"/>
    <property type="chains" value="A=588-1147, B=588-1027"/>
</dbReference>
<dbReference type="PDB" id="1TL1">
    <property type="method" value="X-ray"/>
    <property type="resolution" value="2.90 A"/>
    <property type="chains" value="A=588-1147, B=588-1027"/>
</dbReference>
<dbReference type="PDB" id="1TL3">
    <property type="method" value="X-ray"/>
    <property type="resolution" value="2.80 A"/>
    <property type="chains" value="A=588-1147, B=588-1027"/>
</dbReference>
<dbReference type="PDB" id="1VRT">
    <property type="method" value="X-ray"/>
    <property type="resolution" value="2.20 A"/>
    <property type="chains" value="A=588-1147, B=588-1027"/>
</dbReference>
<dbReference type="PDB" id="1VRU">
    <property type="method" value="X-ray"/>
    <property type="resolution" value="2.40 A"/>
    <property type="chains" value="A=588-1147, B=588-1027"/>
</dbReference>
<dbReference type="PDB" id="2HND">
    <property type="method" value="X-ray"/>
    <property type="resolution" value="2.50 A"/>
    <property type="chains" value="A=591-1124"/>
</dbReference>
<dbReference type="PDB" id="2HNY">
    <property type="method" value="X-ray"/>
    <property type="resolution" value="2.50 A"/>
    <property type="chains" value="A=591-1124"/>
</dbReference>
<dbReference type="PDB" id="2HNZ">
    <property type="method" value="X-ray"/>
    <property type="resolution" value="3.00 A"/>
    <property type="chains" value="A=591-1124, B=594-1015"/>
</dbReference>
<dbReference type="PDB" id="2KOD">
    <property type="method" value="NMR"/>
    <property type="chains" value="A/B=276-363"/>
</dbReference>
<dbReference type="PDB" id="2NPH">
    <property type="method" value="X-ray"/>
    <property type="resolution" value="1.65 A"/>
    <property type="chains" value="A/B=489-587"/>
</dbReference>
<dbReference type="PDB" id="2OPP">
    <property type="method" value="X-ray"/>
    <property type="resolution" value="2.55 A"/>
    <property type="chains" value="A=591-1132, B=592-1018"/>
</dbReference>
<dbReference type="PDB" id="2OPQ">
    <property type="method" value="X-ray"/>
    <property type="resolution" value="2.80 A"/>
    <property type="chains" value="A=591-1124, B=592-1015"/>
</dbReference>
<dbReference type="PDB" id="2OPR">
    <property type="method" value="X-ray"/>
    <property type="resolution" value="2.90 A"/>
    <property type="chains" value="A=589-1135, B=593-1018"/>
</dbReference>
<dbReference type="PDB" id="2OPS">
    <property type="method" value="X-ray"/>
    <property type="resolution" value="2.30 A"/>
    <property type="chains" value="A=589-1130, B=593-1027"/>
</dbReference>
<dbReference type="PDB" id="2RF2">
    <property type="method" value="X-ray"/>
    <property type="resolution" value="2.40 A"/>
    <property type="chains" value="A=588-1147, B=588-1027"/>
</dbReference>
<dbReference type="PDB" id="2RKI">
    <property type="method" value="X-ray"/>
    <property type="resolution" value="2.30 A"/>
    <property type="chains" value="A=588-1147, B=588-1027"/>
</dbReference>
<dbReference type="PDB" id="2WHH">
    <property type="method" value="X-ray"/>
    <property type="resolution" value="1.69 A"/>
    <property type="chains" value="A=489-587"/>
</dbReference>
<dbReference type="PDB" id="2WOM">
    <property type="method" value="X-ray"/>
    <property type="resolution" value="3.20 A"/>
    <property type="chains" value="A=588-1147, B=588-1027"/>
</dbReference>
<dbReference type="PDB" id="2WON">
    <property type="method" value="X-ray"/>
    <property type="resolution" value="2.80 A"/>
    <property type="chains" value="A=588-1147, B=588-1027"/>
</dbReference>
<dbReference type="PDB" id="2YNF">
    <property type="method" value="X-ray"/>
    <property type="resolution" value="2.36 A"/>
    <property type="chains" value="A=588-1147, B=588-1015"/>
</dbReference>
<dbReference type="PDB" id="2YNG">
    <property type="method" value="X-ray"/>
    <property type="resolution" value="2.12 A"/>
    <property type="chains" value="A=588-1147, B=588-1015"/>
</dbReference>
<dbReference type="PDB" id="2YNH">
    <property type="method" value="X-ray"/>
    <property type="resolution" value="2.90 A"/>
    <property type="chains" value="A=588-1147, B=588-1015"/>
</dbReference>
<dbReference type="PDB" id="2YNI">
    <property type="method" value="X-ray"/>
    <property type="resolution" value="2.49 A"/>
    <property type="chains" value="A=588-1147, B=588-1015"/>
</dbReference>
<dbReference type="PDB" id="3AO2">
    <property type="method" value="X-ray"/>
    <property type="resolution" value="1.80 A"/>
    <property type="chains" value="A/B=1197-1359"/>
</dbReference>
<dbReference type="PDB" id="3C6T">
    <property type="method" value="X-ray"/>
    <property type="resolution" value="2.70 A"/>
    <property type="chains" value="A=588-1147, B=588-1027"/>
</dbReference>
<dbReference type="PDB" id="3C6U">
    <property type="method" value="X-ray"/>
    <property type="resolution" value="2.70 A"/>
    <property type="chains" value="A=588-1147, B=588-1027"/>
</dbReference>
<dbReference type="PDB" id="3DI6">
    <property type="method" value="X-ray"/>
    <property type="resolution" value="2.65 A"/>
    <property type="chains" value="A=588-1148, B=588-1027"/>
</dbReference>
<dbReference type="PDB" id="3DLE">
    <property type="method" value="X-ray"/>
    <property type="resolution" value="2.50 A"/>
    <property type="chains" value="A=588-1147, B=588-1027"/>
</dbReference>
<dbReference type="PDB" id="3DLG">
    <property type="method" value="X-ray"/>
    <property type="resolution" value="2.20 A"/>
    <property type="chains" value="A=588-1147, B=588-1027"/>
</dbReference>
<dbReference type="PDB" id="3DM2">
    <property type="method" value="X-ray"/>
    <property type="resolution" value="3.10 A"/>
    <property type="chains" value="A=588-1147, B=588-1027"/>
</dbReference>
<dbReference type="PDB" id="3DMJ">
    <property type="method" value="X-ray"/>
    <property type="resolution" value="2.60 A"/>
    <property type="chains" value="A=588-1147, B=588-1027"/>
</dbReference>
<dbReference type="PDB" id="3DOK">
    <property type="method" value="X-ray"/>
    <property type="resolution" value="2.90 A"/>
    <property type="chains" value="A=588-1147, B=588-1027"/>
</dbReference>
<dbReference type="PDB" id="3DOL">
    <property type="method" value="X-ray"/>
    <property type="resolution" value="2.50 A"/>
    <property type="chains" value="A=588-1147, B=588-1027"/>
</dbReference>
<dbReference type="PDB" id="3DOX">
    <property type="method" value="X-ray"/>
    <property type="resolution" value="2.00 A"/>
    <property type="chains" value="A=484-587"/>
</dbReference>
<dbReference type="PDB" id="3DRP">
    <property type="method" value="X-ray"/>
    <property type="resolution" value="2.60 A"/>
    <property type="chains" value="A=588-1147, B=588-1027"/>
</dbReference>
<dbReference type="PDB" id="3DRR">
    <property type="method" value="X-ray"/>
    <property type="resolution" value="2.89 A"/>
    <property type="chains" value="A=588-1147, B=588-1027"/>
</dbReference>
<dbReference type="PDB" id="3DRS">
    <property type="method" value="X-ray"/>
    <property type="resolution" value="3.15 A"/>
    <property type="chains" value="A=588-1147, B=588-1027"/>
</dbReference>
<dbReference type="PDB" id="3DYA">
    <property type="method" value="X-ray"/>
    <property type="resolution" value="2.30 A"/>
    <property type="chains" value="A=588-1148, B=588-1027"/>
</dbReference>
<dbReference type="PDB" id="3E01">
    <property type="method" value="X-ray"/>
    <property type="resolution" value="2.95 A"/>
    <property type="chains" value="A=588-1148, B=588-1027"/>
</dbReference>
<dbReference type="PDB" id="3FFI">
    <property type="method" value="X-ray"/>
    <property type="resolution" value="2.60 A"/>
    <property type="chains" value="A=588-1147, B=588-1027"/>
</dbReference>
<dbReference type="PDB" id="3I0R">
    <property type="method" value="X-ray"/>
    <property type="resolution" value="2.98 A"/>
    <property type="chains" value="A=588-1147, B=588-1027"/>
</dbReference>
<dbReference type="PDB" id="3I0S">
    <property type="method" value="X-ray"/>
    <property type="resolution" value="2.70 A"/>
    <property type="chains" value="A=588-1147, B=588-1027"/>
</dbReference>
<dbReference type="PDB" id="3KJV">
    <property type="method" value="X-ray"/>
    <property type="resolution" value="3.10 A"/>
    <property type="chains" value="A=588-1147, B=588-1027"/>
</dbReference>
<dbReference type="PDB" id="3KK1">
    <property type="method" value="X-ray"/>
    <property type="resolution" value="2.70 A"/>
    <property type="chains" value="A=588-1147, B=588-1027"/>
</dbReference>
<dbReference type="PDB" id="3KK2">
    <property type="method" value="X-ray"/>
    <property type="resolution" value="2.90 A"/>
    <property type="chains" value="A=588-1147, B=588-1027"/>
</dbReference>
<dbReference type="PDB" id="3KK3">
    <property type="method" value="X-ray"/>
    <property type="resolution" value="2.90 A"/>
    <property type="chains" value="A=588-1147, B=588-1027"/>
</dbReference>
<dbReference type="PDB" id="3KT2">
    <property type="method" value="X-ray"/>
    <property type="resolution" value="1.65 A"/>
    <property type="chains" value="A=484-587"/>
</dbReference>
<dbReference type="PDB" id="3KT5">
    <property type="method" value="X-ray"/>
    <property type="resolution" value="1.80 A"/>
    <property type="chains" value="A=484-587"/>
</dbReference>
<dbReference type="PDB" id="3LAK">
    <property type="method" value="X-ray"/>
    <property type="resolution" value="2.30 A"/>
    <property type="chains" value="A/B=588-1147"/>
</dbReference>
<dbReference type="PDB" id="3LAL">
    <property type="method" value="X-ray"/>
    <property type="resolution" value="2.51 A"/>
    <property type="chains" value="A/B=588-1147"/>
</dbReference>
<dbReference type="PDB" id="3LAM">
    <property type="method" value="X-ray"/>
    <property type="resolution" value="2.76 A"/>
    <property type="chains" value="A/B=588-1147"/>
</dbReference>
<dbReference type="PDB" id="3LAN">
    <property type="method" value="X-ray"/>
    <property type="resolution" value="2.55 A"/>
    <property type="chains" value="A/B=588-1147"/>
</dbReference>
<dbReference type="PDB" id="3LP0">
    <property type="method" value="X-ray"/>
    <property type="resolution" value="2.79 A"/>
    <property type="chains" value="A=588-1147, B=588-1027"/>
</dbReference>
<dbReference type="PDB" id="3LP1">
    <property type="method" value="X-ray"/>
    <property type="resolution" value="2.23 A"/>
    <property type="chains" value="A=588-1147, B=588-1027"/>
</dbReference>
<dbReference type="PDB" id="3LP2">
    <property type="method" value="X-ray"/>
    <property type="resolution" value="2.80 A"/>
    <property type="chains" value="A=588-1147, B=588-1027"/>
</dbReference>
<dbReference type="PDB" id="3M8P">
    <property type="method" value="X-ray"/>
    <property type="resolution" value="2.67 A"/>
    <property type="chains" value="A=588-1148, B=588-1027"/>
</dbReference>
<dbReference type="PDB" id="3M8Q">
    <property type="method" value="X-ray"/>
    <property type="resolution" value="2.70 A"/>
    <property type="chains" value="A=588-1148, B=588-1027"/>
</dbReference>
<dbReference type="PDB" id="3MEC">
    <property type="method" value="X-ray"/>
    <property type="resolution" value="2.30 A"/>
    <property type="chains" value="A=588-1147, B=588-1027"/>
</dbReference>
<dbReference type="PDB" id="3MED">
    <property type="method" value="X-ray"/>
    <property type="resolution" value="2.50 A"/>
    <property type="chains" value="A=588-1147, B=588-1027"/>
</dbReference>
<dbReference type="PDB" id="3MEE">
    <property type="method" value="X-ray"/>
    <property type="resolution" value="2.40 A"/>
    <property type="chains" value="A=588-1147, B=588-1027"/>
</dbReference>
<dbReference type="PDB" id="3MEG">
    <property type="method" value="X-ray"/>
    <property type="resolution" value="2.80 A"/>
    <property type="chains" value="A=588-1147, B=588-1027"/>
</dbReference>
<dbReference type="PDB" id="3N3I">
    <property type="method" value="X-ray"/>
    <property type="resolution" value="2.50 A"/>
    <property type="chains" value="A=484-587"/>
</dbReference>
<dbReference type="PDB" id="3NBP">
    <property type="method" value="X-ray"/>
    <property type="resolution" value="2.95 A"/>
    <property type="chains" value="A=588-1148, B=588-1027"/>
</dbReference>
<dbReference type="PDB" id="3PHV">
    <property type="method" value="X-ray"/>
    <property type="resolution" value="2.70 A"/>
    <property type="chains" value="A=489-587"/>
</dbReference>
<dbReference type="PDB" id="3QIN">
    <property type="method" value="X-ray"/>
    <property type="resolution" value="1.70 A"/>
    <property type="chains" value="A=1014-1103, A=1142-1148"/>
</dbReference>
<dbReference type="PDB" id="3QIO">
    <property type="method" value="X-ray"/>
    <property type="resolution" value="1.40 A"/>
    <property type="chains" value="A=1014-1148"/>
</dbReference>
<dbReference type="PDB" id="3QIP">
    <property type="method" value="X-ray"/>
    <property type="resolution" value="2.09 A"/>
    <property type="chains" value="A=588-1147, B=588-1027"/>
</dbReference>
<dbReference type="PDB" id="3T19">
    <property type="method" value="X-ray"/>
    <property type="resolution" value="2.60 A"/>
    <property type="chains" value="A/B=588-1147"/>
</dbReference>
<dbReference type="PDB" id="3T1A">
    <property type="method" value="X-ray"/>
    <property type="resolution" value="2.40 A"/>
    <property type="chains" value="A/B=588-1147"/>
</dbReference>
<dbReference type="PDB" id="3TAM">
    <property type="method" value="X-ray"/>
    <property type="resolution" value="2.51 A"/>
    <property type="chains" value="A=590-1147, B=588-1027"/>
</dbReference>
<dbReference type="PDB" id="4B3O">
    <property type="method" value="X-ray"/>
    <property type="resolution" value="3.30 A"/>
    <property type="chains" value="A=588-1145, B=588-1027"/>
</dbReference>
<dbReference type="PDB" id="4B3P">
    <property type="method" value="X-ray"/>
    <property type="resolution" value="4.84 A"/>
    <property type="chains" value="A=588-1145, B=588-1027"/>
</dbReference>
<dbReference type="PDB" id="4B3Q">
    <property type="method" value="X-ray"/>
    <property type="resolution" value="5.00 A"/>
    <property type="chains" value="A=588-1145, B=588-1027"/>
</dbReference>
<dbReference type="PDB" id="4I7F">
    <property type="method" value="X-ray"/>
    <property type="resolution" value="2.50 A"/>
    <property type="chains" value="A=588-1147, B=588-1027"/>
</dbReference>
<dbReference type="PDB" id="4KSE">
    <property type="method" value="X-ray"/>
    <property type="resolution" value="2.68 A"/>
    <property type="chains" value="B=588-1017"/>
</dbReference>
<dbReference type="PDB" id="4KV8">
    <property type="method" value="X-ray"/>
    <property type="resolution" value="2.30 A"/>
    <property type="chains" value="A=588-1147, B=588-1027"/>
</dbReference>
<dbReference type="PDB" id="4NCG">
    <property type="method" value="X-ray"/>
    <property type="resolution" value="2.58 A"/>
    <property type="chains" value="A=588-1147, B=585-1027"/>
</dbReference>
<dbReference type="PDB" id="4Q1W">
    <property type="method" value="X-ray"/>
    <property type="resolution" value="1.85 A"/>
    <property type="chains" value="A/B=496-587"/>
</dbReference>
<dbReference type="PDB" id="4Q1X">
    <property type="method" value="X-ray"/>
    <property type="resolution" value="1.90 A"/>
    <property type="chains" value="A/B=496-587"/>
</dbReference>
<dbReference type="PDB" id="4Q1Y">
    <property type="method" value="X-ray"/>
    <property type="resolution" value="1.50 A"/>
    <property type="chains" value="A/B=496-587"/>
</dbReference>
<dbReference type="PDB" id="4Q5M">
    <property type="method" value="X-ray"/>
    <property type="resolution" value="1.79 A"/>
    <property type="chains" value="A=484-587"/>
</dbReference>
<dbReference type="PDB" id="4QLH">
    <property type="method" value="X-ray"/>
    <property type="resolution" value="2.45 A"/>
    <property type="chains" value="A=489-592"/>
</dbReference>
<dbReference type="PDB" id="4U1H">
    <property type="method" value="X-ray"/>
    <property type="resolution" value="1.59 A"/>
    <property type="chains" value="C=180-188"/>
</dbReference>
<dbReference type="PDB" id="4U1I">
    <property type="method" value="X-ray"/>
    <property type="resolution" value="1.92 A"/>
    <property type="chains" value="C=180-188"/>
</dbReference>
<dbReference type="PDB" id="4U1J">
    <property type="method" value="X-ray"/>
    <property type="resolution" value="1.38 A"/>
    <property type="chains" value="C=180-188"/>
</dbReference>
<dbReference type="PDB" id="4U7Q">
    <property type="method" value="X-ray"/>
    <property type="resolution" value="1.70 A"/>
    <property type="chains" value="A/B=496-587"/>
</dbReference>
<dbReference type="PDB" id="4U7V">
    <property type="method" value="X-ray"/>
    <property type="resolution" value="1.38 A"/>
    <property type="chains" value="A/B=496-587"/>
</dbReference>
<dbReference type="PDB" id="5DGU">
    <property type="method" value="X-ray"/>
    <property type="resolution" value="1.22 A"/>
    <property type="chains" value="A/B=496-587"/>
</dbReference>
<dbReference type="PDB" id="5DGW">
    <property type="method" value="X-ray"/>
    <property type="resolution" value="1.62 A"/>
    <property type="chains" value="A/B=496-587"/>
</dbReference>
<dbReference type="PDB" id="5EU7">
    <property type="method" value="X-ray"/>
    <property type="resolution" value="2.64 A"/>
    <property type="chains" value="A/B=1204-1356"/>
</dbReference>
<dbReference type="PDB" id="5HRN">
    <property type="method" value="X-ray"/>
    <property type="resolution" value="1.75 A"/>
    <property type="chains" value="A=1197-1359"/>
</dbReference>
<dbReference type="PDB" id="5HRP">
    <property type="method" value="X-ray"/>
    <property type="resolution" value="1.81 A"/>
    <property type="chains" value="A=1197-1359"/>
</dbReference>
<dbReference type="PDB" id="5HRR">
    <property type="method" value="X-ray"/>
    <property type="resolution" value="1.88 A"/>
    <property type="chains" value="A=1197-1359"/>
</dbReference>
<dbReference type="PDB" id="5HRS">
    <property type="method" value="X-ray"/>
    <property type="resolution" value="1.86 A"/>
    <property type="chains" value="A=1197-1359"/>
</dbReference>
<dbReference type="PDB" id="5IM7">
    <property type="method" value="X-ray"/>
    <property type="resolution" value="2.50 A"/>
    <property type="chains" value="E/F=308-316"/>
</dbReference>
<dbReference type="PDB" id="5J2M">
    <property type="method" value="X-ray"/>
    <property type="resolution" value="2.43 A"/>
    <property type="chains" value="A=588-1147, B=588-1027"/>
</dbReference>
<dbReference type="PDB" id="5J2N">
    <property type="method" value="X-ray"/>
    <property type="resolution" value="2.90 A"/>
    <property type="chains" value="A=588-1147, B=588-1027"/>
</dbReference>
<dbReference type="PDB" id="5J2P">
    <property type="method" value="X-ray"/>
    <property type="resolution" value="2.53 A"/>
    <property type="chains" value="A=588-1147, B=588-1027"/>
</dbReference>
<dbReference type="PDB" id="5J2Q">
    <property type="method" value="X-ray"/>
    <property type="resolution" value="2.79 A"/>
    <property type="chains" value="A=588-1147, B=588-1027"/>
</dbReference>
<dbReference type="PDB" id="5K14">
    <property type="method" value="X-ray"/>
    <property type="resolution" value="2.40 A"/>
    <property type="chains" value="A=588-1147"/>
</dbReference>
<dbReference type="PDB" id="5KAO">
    <property type="method" value="X-ray"/>
    <property type="resolution" value="1.80 A"/>
    <property type="chains" value="A/B=489-587"/>
</dbReference>
<dbReference type="PDB" id="5T82">
    <property type="method" value="NMR"/>
    <property type="chains" value="A=824-905"/>
</dbReference>
<dbReference type="PDB" id="5TC2">
    <property type="method" value="X-ray"/>
    <property type="resolution" value="1.84 A"/>
    <property type="chains" value="A/B=1366-1420"/>
</dbReference>
<dbReference type="PDB" id="5VZ6">
    <property type="method" value="X-ray"/>
    <property type="resolution" value="2.60 A"/>
    <property type="chains" value="A=585-1147, B=585-1027"/>
</dbReference>
<dbReference type="PDB" id="5XOS">
    <property type="method" value="X-ray"/>
    <property type="resolution" value="1.70 A"/>
    <property type="chains" value="C=880-888"/>
</dbReference>
<dbReference type="PDB" id="5XOT">
    <property type="method" value="X-ray"/>
    <property type="resolution" value="2.79 A"/>
    <property type="chains" value="C=880-888"/>
</dbReference>
<dbReference type="PDB" id="5YRS">
    <property type="method" value="X-ray"/>
    <property type="resolution" value="1.76 A"/>
    <property type="chains" value="A/B=489-587"/>
</dbReference>
<dbReference type="PDB" id="6BJ2">
    <property type="method" value="X-ray"/>
    <property type="resolution" value="3.35 A"/>
    <property type="chains" value="C=880-888"/>
</dbReference>
<dbReference type="PDB" id="6BJ3">
    <property type="method" value="X-ray"/>
    <property type="resolution" value="1.90 A"/>
    <property type="chains" value="C=880-888"/>
</dbReference>
<dbReference type="PDB" id="6BSG">
    <property type="method" value="X-ray"/>
    <property type="resolution" value="2.44 A"/>
    <property type="chains" value="A=588-1144, B=588-1027"/>
</dbReference>
<dbReference type="PDB" id="6BSH">
    <property type="method" value="X-ray"/>
    <property type="resolution" value="2.65 A"/>
    <property type="chains" value="A=588-1144, B=588-1027"/>
</dbReference>
<dbReference type="PDB" id="6BSI">
    <property type="method" value="X-ray"/>
    <property type="resolution" value="3.25 A"/>
    <property type="chains" value="A=588-1144, B=588-1027"/>
</dbReference>
<dbReference type="PDB" id="6BSJ">
    <property type="method" value="X-ray"/>
    <property type="resolution" value="2.89 A"/>
    <property type="chains" value="A=588-1144, B=588-1027"/>
</dbReference>
<dbReference type="PDB" id="6DIF">
    <property type="method" value="X-ray"/>
    <property type="resolution" value="1.20 A"/>
    <property type="chains" value="A/B=489-587"/>
</dbReference>
<dbReference type="PDB" id="6DIL">
    <property type="method" value="X-ray"/>
    <property type="resolution" value="1.48 A"/>
    <property type="chains" value="A/B=489-587"/>
</dbReference>
<dbReference type="PDB" id="6DJ1">
    <property type="method" value="X-ray"/>
    <property type="resolution" value="1.26 A"/>
    <property type="chains" value="A/B=489-587"/>
</dbReference>
<dbReference type="PDB" id="6DJ2">
    <property type="method" value="X-ray"/>
    <property type="resolution" value="1.36 A"/>
    <property type="chains" value="A/B=489-587"/>
</dbReference>
<dbReference type="PDB" id="6DJ5">
    <property type="method" value="X-ray"/>
    <property type="resolution" value="1.75 A"/>
    <property type="chains" value="A/B=489-587"/>
</dbReference>
<dbReference type="PDB" id="6DJ7">
    <property type="method" value="X-ray"/>
    <property type="resolution" value="1.31 A"/>
    <property type="chains" value="A/B=489-587"/>
</dbReference>
<dbReference type="PDB" id="6DV0">
    <property type="method" value="X-ray"/>
    <property type="resolution" value="1.20 A"/>
    <property type="chains" value="A/B=489-587"/>
</dbReference>
<dbReference type="PDB" id="6DV4">
    <property type="method" value="X-ray"/>
    <property type="resolution" value="1.14 A"/>
    <property type="chains" value="A/B=489-587"/>
</dbReference>
<dbReference type="PDB" id="6E7J">
    <property type="method" value="X-ray"/>
    <property type="resolution" value="1.30 A"/>
    <property type="chains" value="A/B=489-587"/>
</dbReference>
<dbReference type="PDB" id="6E9A">
    <property type="method" value="X-ray"/>
    <property type="resolution" value="1.22 A"/>
    <property type="chains" value="A/B=489-587"/>
</dbReference>
<dbReference type="PDB" id="6EWA">
    <property type="method" value="X-ray"/>
    <property type="resolution" value="2.39 A"/>
    <property type="chains" value="C/G=896-904"/>
</dbReference>
<dbReference type="PDB" id="6EX9">
    <property type="method" value="X-ray"/>
    <property type="resolution" value="2.01 A"/>
    <property type="chains" value="A=1204-1355"/>
</dbReference>
<dbReference type="PDB" id="6GL1">
    <property type="method" value="X-ray"/>
    <property type="resolution" value="2.62 A"/>
    <property type="chains" value="P/Q/R/T=275-283"/>
</dbReference>
<dbReference type="PDB" id="6J1V">
    <property type="method" value="X-ray"/>
    <property type="resolution" value="2.00 A"/>
    <property type="chains" value="C=745-753"/>
</dbReference>
<dbReference type="PDB" id="6J1W">
    <property type="method" value="X-ray"/>
    <property type="resolution" value="1.50 A"/>
    <property type="chains" value="C=745-753"/>
</dbReference>
<dbReference type="PDB" id="6OR7">
    <property type="method" value="X-ray"/>
    <property type="resolution" value="2.53 A"/>
    <property type="chains" value="A=588-1147, B=588-1027"/>
</dbReference>
<dbReference type="PDB" id="6OTZ">
    <property type="method" value="X-ray"/>
    <property type="resolution" value="2.86 A"/>
    <property type="chains" value="A=588-1145, B=588-1027"/>
</dbReference>
<dbReference type="PDB" id="6P1I">
    <property type="method" value="X-ray"/>
    <property type="resolution" value="2.74 A"/>
    <property type="chains" value="A=588-1147, B=588-1027"/>
</dbReference>
<dbReference type="PDB" id="6P1X">
    <property type="method" value="X-ray"/>
    <property type="resolution" value="2.55 A"/>
    <property type="chains" value="A=588-1147, B=588-1027"/>
</dbReference>
<dbReference type="PDB" id="6P2G">
    <property type="method" value="X-ray"/>
    <property type="resolution" value="2.99 A"/>
    <property type="chains" value="A=588-1147, B=588-1027"/>
</dbReference>
<dbReference type="PDB" id="6PYL">
    <property type="method" value="X-ray"/>
    <property type="resolution" value="1.52 A"/>
    <property type="chains" value="C=263-272"/>
</dbReference>
<dbReference type="PDB" id="6SKK">
    <property type="method" value="EM"/>
    <property type="resolution" value="3.60 A"/>
    <property type="chains" value="A/B/C/D/E/F=133-363"/>
</dbReference>
<dbReference type="PDB" id="6SKM">
    <property type="method" value="EM"/>
    <property type="resolution" value="4.90 A"/>
    <property type="chains" value="A/B/C/D/E/F=133-363"/>
</dbReference>
<dbReference type="PDB" id="6SKN">
    <property type="method" value="EM"/>
    <property type="resolution" value="4.50 A"/>
    <property type="chains" value="A/B/C/D/E/F/G/H/I/J/K/L/M/N/O/P/Q/R=133-363"/>
</dbReference>
<dbReference type="PDB" id="6SLQ">
    <property type="method" value="EM"/>
    <property type="resolution" value="4.40 A"/>
    <property type="chains" value="A/B/C/D/E/F=133-363"/>
</dbReference>
<dbReference type="PDB" id="6SLU">
    <property type="method" value="EM"/>
    <property type="resolution" value="4.70 A"/>
    <property type="chains" value="A/B/C/D/E/F=133-363"/>
</dbReference>
<dbReference type="PDB" id="6SMU">
    <property type="method" value="EM"/>
    <property type="resolution" value="5.00 A"/>
    <property type="chains" value="A/B/C/D/E/F=133-363"/>
</dbReference>
<dbReference type="PDB" id="6UIR">
    <property type="method" value="X-ray"/>
    <property type="resolution" value="2.64 A"/>
    <property type="chains" value="A=588-1147, B=588-1027"/>
</dbReference>
<dbReference type="PDB" id="6UIS">
    <property type="method" value="X-ray"/>
    <property type="resolution" value="2.75 A"/>
    <property type="chains" value="A=588-1147, B=588-1027"/>
</dbReference>
<dbReference type="PDB" id="6UIT">
    <property type="method" value="X-ray"/>
    <property type="resolution" value="2.81 A"/>
    <property type="chains" value="A=588-1147, B=588-1027"/>
</dbReference>
<dbReference type="PDB" id="6UJX">
    <property type="method" value="X-ray"/>
    <property type="resolution" value="2.70 A"/>
    <property type="chains" value="A=588-1147, B=588-1027"/>
</dbReference>
<dbReference type="PDB" id="6UJY">
    <property type="method" value="X-ray"/>
    <property type="resolution" value="2.59 A"/>
    <property type="chains" value="A=588-1147, B=588-1027"/>
</dbReference>
<dbReference type="PDB" id="6UJZ">
    <property type="method" value="X-ray"/>
    <property type="resolution" value="2.56 A"/>
    <property type="chains" value="A=588-1147, B=588-1027"/>
</dbReference>
<dbReference type="PDB" id="6UK0">
    <property type="method" value="X-ray"/>
    <property type="resolution" value="2.76 A"/>
    <property type="chains" value="A=588-1147, B=588-1027"/>
</dbReference>
<dbReference type="PDB" id="6VPZ">
    <property type="method" value="X-ray"/>
    <property type="resolution" value="2.10 A"/>
    <property type="chains" value="C=263-273"/>
</dbReference>
<dbReference type="PDB" id="6VQ2">
    <property type="method" value="X-ray"/>
    <property type="resolution" value="2.25 A"/>
    <property type="chains" value="C=263-276"/>
</dbReference>
<dbReference type="PDB" id="6VQD">
    <property type="method" value="X-ray"/>
    <property type="resolution" value="1.88 A"/>
    <property type="chains" value="C=263-270"/>
</dbReference>
<dbReference type="PDB" id="6VQE">
    <property type="method" value="X-ray"/>
    <property type="resolution" value="1.77 A"/>
    <property type="chains" value="C=263-275"/>
</dbReference>
<dbReference type="PDB" id="6VQY">
    <property type="method" value="X-ray"/>
    <property type="resolution" value="2.57 A"/>
    <property type="chains" value="F/G=263-269"/>
</dbReference>
<dbReference type="PDB" id="6VQZ">
    <property type="method" value="X-ray"/>
    <property type="resolution" value="2.25 A"/>
    <property type="chains" value="F/G=263-268"/>
</dbReference>
<dbReference type="PDB" id="6WAZ">
    <property type="method" value="EM"/>
    <property type="resolution" value="4.10 A"/>
    <property type="chains" value="B=588-1027"/>
</dbReference>
<dbReference type="PDB" id="6WB1">
    <property type="method" value="EM"/>
    <property type="resolution" value="4.70 A"/>
    <property type="chains" value="B=588-1027"/>
</dbReference>
<dbReference type="PDB" id="6WPF">
    <property type="method" value="X-ray"/>
    <property type="resolution" value="2.53 A"/>
    <property type="chains" value="A=588-1147, B=588-1027"/>
</dbReference>
<dbReference type="PDB" id="6WPH">
    <property type="method" value="X-ray"/>
    <property type="resolution" value="2.72 A"/>
    <property type="chains" value="A=588-1147, B=588-1027"/>
</dbReference>
<dbReference type="PDB" id="6WPJ">
    <property type="method" value="X-ray"/>
    <property type="resolution" value="2.73 A"/>
    <property type="chains" value="A=588-1147, B=588-1027"/>
</dbReference>
<dbReference type="PDB" id="7DOZ">
    <property type="method" value="X-ray"/>
    <property type="resolution" value="1.91 A"/>
    <property type="chains" value="A=489-593"/>
</dbReference>
<dbReference type="PDB" id="7DPQ">
    <property type="method" value="X-ray"/>
    <property type="resolution" value="1.65 A"/>
    <property type="chains" value="A=489-593"/>
</dbReference>
<dbReference type="PDB" id="7DT9">
    <property type="method" value="X-ray"/>
    <property type="resolution" value="1.89 A"/>
    <property type="chains" value="A=489-593"/>
</dbReference>
<dbReference type="PDB" id="7R7V">
    <property type="method" value="X-ray"/>
    <property type="resolution" value="1.60 A"/>
    <property type="chains" value="C=308-316"/>
</dbReference>
<dbReference type="PDB" id="7R7X">
    <property type="method" value="X-ray"/>
    <property type="resolution" value="2.10 A"/>
    <property type="chains" value="E/F=308-316"/>
</dbReference>
<dbReference type="PDB" id="7R80">
    <property type="method" value="X-ray"/>
    <property type="resolution" value="2.90 A"/>
    <property type="chains" value="E=308-316"/>
</dbReference>
<dbReference type="PDB" id="7SLR">
    <property type="method" value="X-ray"/>
    <property type="resolution" value="2.18 A"/>
    <property type="chains" value="A/B=587-1147"/>
</dbReference>
<dbReference type="PDB" id="7SLS">
    <property type="method" value="X-ray"/>
    <property type="resolution" value="2.08 A"/>
    <property type="chains" value="A/B=587-1147"/>
</dbReference>
<dbReference type="PDB" id="7XIU">
    <property type="method" value="X-ray"/>
    <property type="resolution" value="2.09 A"/>
    <property type="chains" value="A=1014-1087, A=1103-1148"/>
</dbReference>
<dbReference type="PDB" id="7XJ4">
    <property type="method" value="X-ray"/>
    <property type="resolution" value="1.80 A"/>
    <property type="chains" value="A=1014-1087, A=1103-1148"/>
</dbReference>
<dbReference type="PDB" id="7XJ5">
    <property type="method" value="X-ray"/>
    <property type="resolution" value="1.75 A"/>
    <property type="chains" value="A=1014-1087, A=1103-1148"/>
</dbReference>
<dbReference type="PDB" id="7XJ7">
    <property type="method" value="X-ray"/>
    <property type="resolution" value="1.80 A"/>
    <property type="chains" value="A=1014-1087, A=1103-1148"/>
</dbReference>
<dbReference type="PDB" id="8ERX">
    <property type="method" value="X-ray"/>
    <property type="resolution" value="2.07 A"/>
    <property type="chains" value="C=745-753"/>
</dbReference>
<dbReference type="PDB" id="8ESX">
    <property type="method" value="X-ray"/>
    <property type="resolution" value="1.35 A"/>
    <property type="chains" value="A/B=489-587"/>
</dbReference>
<dbReference type="PDB" id="8ESY">
    <property type="method" value="X-ray"/>
    <property type="resolution" value="1.35 A"/>
    <property type="chains" value="A/B=489-587"/>
</dbReference>
<dbReference type="PDB" id="8F0F">
    <property type="method" value="X-ray"/>
    <property type="resolution" value="1.29 A"/>
    <property type="chains" value="A/B=489-587"/>
</dbReference>
<dbReference type="PDB" id="8F5A">
    <property type="method" value="X-ray"/>
    <property type="resolution" value="1.95 A"/>
    <property type="chains" value="E=240-249"/>
</dbReference>
<dbReference type="PDB" id="8F7M">
    <property type="method" value="X-ray"/>
    <property type="resolution" value="1.88 A"/>
    <property type="chains" value="C=240-249"/>
</dbReference>
<dbReference type="PDB" id="8FCC">
    <property type="method" value="X-ray"/>
    <property type="resolution" value="2.57 A"/>
    <property type="chains" value="A=588-1147, B=588-1027"/>
</dbReference>
<dbReference type="PDB" id="8FCD">
    <property type="method" value="X-ray"/>
    <property type="resolution" value="2.57 A"/>
    <property type="chains" value="A=588-1147, B=588-1027"/>
</dbReference>
<dbReference type="PDB" id="8FCE">
    <property type="method" value="X-ray"/>
    <property type="resolution" value="2.77 A"/>
    <property type="chains" value="A=588-1147, B=588-1027"/>
</dbReference>
<dbReference type="PDB" id="8JYH">
    <property type="method" value="X-ray"/>
    <property type="resolution" value="2.21 A"/>
    <property type="chains" value="A=1014-1148"/>
</dbReference>
<dbReference type="PDB" id="8JYI">
    <property type="method" value="X-ray"/>
    <property type="resolution" value="1.92 A"/>
    <property type="chains" value="A=1014-1148"/>
</dbReference>
<dbReference type="PDB" id="8JYJ">
    <property type="method" value="X-ray"/>
    <property type="resolution" value="2.01 A"/>
    <property type="chains" value="A=1014-1148"/>
</dbReference>
<dbReference type="PDB" id="8TCJ">
    <property type="method" value="X-ray"/>
    <property type="resolution" value="1.85 A"/>
    <property type="chains" value="B=588-1005"/>
</dbReference>
<dbReference type="PDB" id="8TCK">
    <property type="method" value="X-ray"/>
    <property type="resolution" value="2.20 A"/>
    <property type="chains" value="B=588-1005"/>
</dbReference>
<dbReference type="PDB" id="8TCL">
    <property type="method" value="X-ray"/>
    <property type="resolution" value="1.95 A"/>
    <property type="chains" value="B=588-1005"/>
</dbReference>
<dbReference type="PDB" id="8TCM">
    <property type="method" value="X-ray"/>
    <property type="resolution" value="1.82 A"/>
    <property type="chains" value="B=588-1005"/>
</dbReference>
<dbReference type="PDBsum" id="1A30"/>
<dbReference type="PDBsum" id="1BV7"/>
<dbReference type="PDBsum" id="1BV9"/>
<dbReference type="PDBsum" id="1BVE"/>
<dbReference type="PDBsum" id="1BVG"/>
<dbReference type="PDBsum" id="1BWA"/>
<dbReference type="PDBsum" id="1BWB"/>
<dbReference type="PDBsum" id="1C0T"/>
<dbReference type="PDBsum" id="1C0U"/>
<dbReference type="PDBsum" id="1C1B"/>
<dbReference type="PDBsum" id="1C1C"/>
<dbReference type="PDBsum" id="1DMP"/>
<dbReference type="PDBsum" id="1DTQ"/>
<dbReference type="PDBsum" id="1DTT"/>
<dbReference type="PDBsum" id="1E6J"/>
<dbReference type="PDBsum" id="1EP4"/>
<dbReference type="PDBsum" id="1ESK"/>
<dbReference type="PDBsum" id="1EX4"/>
<dbReference type="PDBsum" id="1EXQ"/>
<dbReference type="PDBsum" id="1FB7"/>
<dbReference type="PDBsum" id="1FK9"/>
<dbReference type="PDBsum" id="1FKO"/>
<dbReference type="PDBsum" id="1FKP"/>
<dbReference type="PDBsum" id="1G6L"/>
<dbReference type="PDBsum" id="1HIV"/>
<dbReference type="PDBsum" id="1HVH"/>
<dbReference type="PDBsum" id="1HVR"/>
<dbReference type="PDBsum" id="1HWR"/>
<dbReference type="PDBsum" id="1HXB"/>
<dbReference type="PDBsum" id="1JKH"/>
<dbReference type="PDBsum" id="1JLA"/>
<dbReference type="PDBsum" id="1JLB"/>
<dbReference type="PDBsum" id="1JLC"/>
<dbReference type="PDBsum" id="1JLE"/>
<dbReference type="PDBsum" id="1JLF"/>
<dbReference type="PDBsum" id="1JLG"/>
<dbReference type="PDBsum" id="1JLQ"/>
<dbReference type="PDBsum" id="1KLM"/>
<dbReference type="PDBsum" id="1LV1"/>
<dbReference type="PDBsum" id="1LW0"/>
<dbReference type="PDBsum" id="1LW2"/>
<dbReference type="PDBsum" id="1LWC"/>
<dbReference type="PDBsum" id="1LWE"/>
<dbReference type="PDBsum" id="1LWF"/>
<dbReference type="PDBsum" id="1NCP"/>
<dbReference type="PDBsum" id="1O1W"/>
<dbReference type="PDBsum" id="1ODW"/>
<dbReference type="PDBsum" id="1ODY"/>
<dbReference type="PDBsum" id="1QBR"/>
<dbReference type="PDBsum" id="1QBS"/>
<dbReference type="PDBsum" id="1QBT"/>
<dbReference type="PDBsum" id="1QBU"/>
<dbReference type="PDBsum" id="1REV"/>
<dbReference type="PDBsum" id="1RT1"/>
<dbReference type="PDBsum" id="1RT2"/>
<dbReference type="PDBsum" id="1RT3"/>
<dbReference type="PDBsum" id="1RT4"/>
<dbReference type="PDBsum" id="1RT5"/>
<dbReference type="PDBsum" id="1RT6"/>
<dbReference type="PDBsum" id="1RT7"/>
<dbReference type="PDBsum" id="1RTD"/>
<dbReference type="PDBsum" id="1RTH"/>
<dbReference type="PDBsum" id="1RTI"/>
<dbReference type="PDBsum" id="1RTJ"/>
<dbReference type="PDBsum" id="1S1T"/>
<dbReference type="PDBsum" id="1S1U"/>
<dbReference type="PDBsum" id="1S1V"/>
<dbReference type="PDBsum" id="1S1W"/>
<dbReference type="PDBsum" id="1S1X"/>
<dbReference type="PDBsum" id="1T05"/>
<dbReference type="PDBsum" id="1TAM"/>
<dbReference type="PDBsum" id="1TKT"/>
<dbReference type="PDBsum" id="1TKX"/>
<dbReference type="PDBsum" id="1TKZ"/>
<dbReference type="PDBsum" id="1TL1"/>
<dbReference type="PDBsum" id="1TL3"/>
<dbReference type="PDBsum" id="1VRT"/>
<dbReference type="PDBsum" id="1VRU"/>
<dbReference type="PDBsum" id="2HND"/>
<dbReference type="PDBsum" id="2HNY"/>
<dbReference type="PDBsum" id="2HNZ"/>
<dbReference type="PDBsum" id="2KOD"/>
<dbReference type="PDBsum" id="2NPH"/>
<dbReference type="PDBsum" id="2OPP"/>
<dbReference type="PDBsum" id="2OPQ"/>
<dbReference type="PDBsum" id="2OPR"/>
<dbReference type="PDBsum" id="2OPS"/>
<dbReference type="PDBsum" id="2RF2"/>
<dbReference type="PDBsum" id="2RKI"/>
<dbReference type="PDBsum" id="2WHH"/>
<dbReference type="PDBsum" id="2WOM"/>
<dbReference type="PDBsum" id="2WON"/>
<dbReference type="PDBsum" id="2YNF"/>
<dbReference type="PDBsum" id="2YNG"/>
<dbReference type="PDBsum" id="2YNH"/>
<dbReference type="PDBsum" id="2YNI"/>
<dbReference type="PDBsum" id="3AO2"/>
<dbReference type="PDBsum" id="3C6T"/>
<dbReference type="PDBsum" id="3C6U"/>
<dbReference type="PDBsum" id="3DI6"/>
<dbReference type="PDBsum" id="3DLE"/>
<dbReference type="PDBsum" id="3DLG"/>
<dbReference type="PDBsum" id="3DM2"/>
<dbReference type="PDBsum" id="3DMJ"/>
<dbReference type="PDBsum" id="3DOK"/>
<dbReference type="PDBsum" id="3DOL"/>
<dbReference type="PDBsum" id="3DOX"/>
<dbReference type="PDBsum" id="3DRP"/>
<dbReference type="PDBsum" id="3DRR"/>
<dbReference type="PDBsum" id="3DRS"/>
<dbReference type="PDBsum" id="3DYA"/>
<dbReference type="PDBsum" id="3E01"/>
<dbReference type="PDBsum" id="3FFI"/>
<dbReference type="PDBsum" id="3I0R"/>
<dbReference type="PDBsum" id="3I0S"/>
<dbReference type="PDBsum" id="3KJV"/>
<dbReference type="PDBsum" id="3KK1"/>
<dbReference type="PDBsum" id="3KK2"/>
<dbReference type="PDBsum" id="3KK3"/>
<dbReference type="PDBsum" id="3KT2"/>
<dbReference type="PDBsum" id="3KT5"/>
<dbReference type="PDBsum" id="3LAK"/>
<dbReference type="PDBsum" id="3LAL"/>
<dbReference type="PDBsum" id="3LAM"/>
<dbReference type="PDBsum" id="3LAN"/>
<dbReference type="PDBsum" id="3LP0"/>
<dbReference type="PDBsum" id="3LP1"/>
<dbReference type="PDBsum" id="3LP2"/>
<dbReference type="PDBsum" id="3M8P"/>
<dbReference type="PDBsum" id="3M8Q"/>
<dbReference type="PDBsum" id="3MEC"/>
<dbReference type="PDBsum" id="3MED"/>
<dbReference type="PDBsum" id="3MEE"/>
<dbReference type="PDBsum" id="3MEG"/>
<dbReference type="PDBsum" id="3N3I"/>
<dbReference type="PDBsum" id="3NBP"/>
<dbReference type="PDBsum" id="3PHV"/>
<dbReference type="PDBsum" id="3QIN"/>
<dbReference type="PDBsum" id="3QIO"/>
<dbReference type="PDBsum" id="3QIP"/>
<dbReference type="PDBsum" id="3T19"/>
<dbReference type="PDBsum" id="3T1A"/>
<dbReference type="PDBsum" id="3TAM"/>
<dbReference type="PDBsum" id="4B3O"/>
<dbReference type="PDBsum" id="4B3P"/>
<dbReference type="PDBsum" id="4B3Q"/>
<dbReference type="PDBsum" id="4I7F"/>
<dbReference type="PDBsum" id="4KSE"/>
<dbReference type="PDBsum" id="4KV8"/>
<dbReference type="PDBsum" id="4NCG"/>
<dbReference type="PDBsum" id="4Q1W"/>
<dbReference type="PDBsum" id="4Q1X"/>
<dbReference type="PDBsum" id="4Q1Y"/>
<dbReference type="PDBsum" id="4Q5M"/>
<dbReference type="PDBsum" id="4QLH"/>
<dbReference type="PDBsum" id="4U1H"/>
<dbReference type="PDBsum" id="4U1I"/>
<dbReference type="PDBsum" id="4U1J"/>
<dbReference type="PDBsum" id="4U7Q"/>
<dbReference type="PDBsum" id="4U7V"/>
<dbReference type="PDBsum" id="5DGU"/>
<dbReference type="PDBsum" id="5DGW"/>
<dbReference type="PDBsum" id="5EU7"/>
<dbReference type="PDBsum" id="5HRN"/>
<dbReference type="PDBsum" id="5HRP"/>
<dbReference type="PDBsum" id="5HRR"/>
<dbReference type="PDBsum" id="5HRS"/>
<dbReference type="PDBsum" id="5IM7"/>
<dbReference type="PDBsum" id="5J2M"/>
<dbReference type="PDBsum" id="5J2N"/>
<dbReference type="PDBsum" id="5J2P"/>
<dbReference type="PDBsum" id="5J2Q"/>
<dbReference type="PDBsum" id="5K14"/>
<dbReference type="PDBsum" id="5KAO"/>
<dbReference type="PDBsum" id="5T82"/>
<dbReference type="PDBsum" id="5TC2"/>
<dbReference type="PDBsum" id="5VZ6"/>
<dbReference type="PDBsum" id="5XOS"/>
<dbReference type="PDBsum" id="5XOT"/>
<dbReference type="PDBsum" id="5YRS"/>
<dbReference type="PDBsum" id="6BJ2"/>
<dbReference type="PDBsum" id="6BJ3"/>
<dbReference type="PDBsum" id="6BSG"/>
<dbReference type="PDBsum" id="6BSH"/>
<dbReference type="PDBsum" id="6BSI"/>
<dbReference type="PDBsum" id="6BSJ"/>
<dbReference type="PDBsum" id="6DIF"/>
<dbReference type="PDBsum" id="6DIL"/>
<dbReference type="PDBsum" id="6DJ1"/>
<dbReference type="PDBsum" id="6DJ2"/>
<dbReference type="PDBsum" id="6DJ5"/>
<dbReference type="PDBsum" id="6DJ7"/>
<dbReference type="PDBsum" id="6DV0"/>
<dbReference type="PDBsum" id="6DV4"/>
<dbReference type="PDBsum" id="6E7J"/>
<dbReference type="PDBsum" id="6E9A"/>
<dbReference type="PDBsum" id="6EWA"/>
<dbReference type="PDBsum" id="6EX9"/>
<dbReference type="PDBsum" id="6GL1"/>
<dbReference type="PDBsum" id="6J1V"/>
<dbReference type="PDBsum" id="6J1W"/>
<dbReference type="PDBsum" id="6OR7"/>
<dbReference type="PDBsum" id="6OTZ"/>
<dbReference type="PDBsum" id="6P1I"/>
<dbReference type="PDBsum" id="6P1X"/>
<dbReference type="PDBsum" id="6P2G"/>
<dbReference type="PDBsum" id="6PYL"/>
<dbReference type="PDBsum" id="6SKK"/>
<dbReference type="PDBsum" id="6SKM"/>
<dbReference type="PDBsum" id="6SKN"/>
<dbReference type="PDBsum" id="6SLQ"/>
<dbReference type="PDBsum" id="6SLU"/>
<dbReference type="PDBsum" id="6SMU"/>
<dbReference type="PDBsum" id="6UIR"/>
<dbReference type="PDBsum" id="6UIS"/>
<dbReference type="PDBsum" id="6UIT"/>
<dbReference type="PDBsum" id="6UJX"/>
<dbReference type="PDBsum" id="6UJY"/>
<dbReference type="PDBsum" id="6UJZ"/>
<dbReference type="PDBsum" id="6UK0"/>
<dbReference type="PDBsum" id="6VPZ"/>
<dbReference type="PDBsum" id="6VQ2"/>
<dbReference type="PDBsum" id="6VQD"/>
<dbReference type="PDBsum" id="6VQE"/>
<dbReference type="PDBsum" id="6VQY"/>
<dbReference type="PDBsum" id="6VQZ"/>
<dbReference type="PDBsum" id="6WAZ"/>
<dbReference type="PDBsum" id="6WB1"/>
<dbReference type="PDBsum" id="6WPF"/>
<dbReference type="PDBsum" id="6WPH"/>
<dbReference type="PDBsum" id="6WPJ"/>
<dbReference type="PDBsum" id="7DOZ"/>
<dbReference type="PDBsum" id="7DPQ"/>
<dbReference type="PDBsum" id="7DT9"/>
<dbReference type="PDBsum" id="7R7V"/>
<dbReference type="PDBsum" id="7R7X"/>
<dbReference type="PDBsum" id="7R80"/>
<dbReference type="PDBsum" id="7SLR"/>
<dbReference type="PDBsum" id="7SLS"/>
<dbReference type="PDBsum" id="7XIU"/>
<dbReference type="PDBsum" id="7XJ4"/>
<dbReference type="PDBsum" id="7XJ5"/>
<dbReference type="PDBsum" id="7XJ7"/>
<dbReference type="PDBsum" id="8ERX"/>
<dbReference type="PDBsum" id="8ESX"/>
<dbReference type="PDBsum" id="8ESY"/>
<dbReference type="PDBsum" id="8F0F"/>
<dbReference type="PDBsum" id="8F5A"/>
<dbReference type="PDBsum" id="8F7M"/>
<dbReference type="PDBsum" id="8FCC"/>
<dbReference type="PDBsum" id="8FCD"/>
<dbReference type="PDBsum" id="8FCE"/>
<dbReference type="PDBsum" id="8JYH"/>
<dbReference type="PDBsum" id="8JYI"/>
<dbReference type="PDBsum" id="8JYJ"/>
<dbReference type="PDBsum" id="8TCJ"/>
<dbReference type="PDBsum" id="8TCK"/>
<dbReference type="PDBsum" id="8TCL"/>
<dbReference type="PDBsum" id="8TCM"/>
<dbReference type="BMRB" id="P04585"/>
<dbReference type="SASBDB" id="P04585"/>
<dbReference type="SMR" id="P04585"/>
<dbReference type="BioGRID" id="1205538">
    <property type="interactions" value="133"/>
</dbReference>
<dbReference type="IntAct" id="P04585">
    <property type="interactions" value="6"/>
</dbReference>
<dbReference type="MINT" id="P04585"/>
<dbReference type="BindingDB" id="P04585"/>
<dbReference type="ChEMBL" id="CHEMBL3638360"/>
<dbReference type="DrugBank" id="DB07910">
    <property type="generic name" value="(2S)-2-amino-3-phenylpropane-1,1-diol"/>
</dbReference>
<dbReference type="DrugBank" id="DB07473">
    <property type="generic name" value="(R)-(+) 5(9BH)-OXO-9B-PHENYL-2,3-DIHYDROTHIAZOLO[2,3-A]ISOINDOL-3-CARBOXYLIC ACID METHYL ESTER"/>
</dbReference>
<dbReference type="DrugBank" id="DB07472">
    <property type="generic name" value="(R)-(+)9B-(3-METHYL)PHENYL-2,3-DIHYDROTHIAZOLO[2,3-A]ISOINDOL-5(9BH)-ONE"/>
</dbReference>
<dbReference type="DrugBank" id="DB07892">
    <property type="generic name" value="1-(2-HYDROXYETHYLOXYMETHYL)-6-PHENYL THIOTHYMINE"/>
</dbReference>
<dbReference type="DrugBank" id="DB08372">
    <property type="generic name" value="1-[2-(4-ETHOXY-3-FLUOROPYRIDIN-2-YL)ETHYL]-3-(5-METHYLPYRIDIN-2-YL)THIOUREA"/>
</dbReference>
<dbReference type="DrugBank" id="DB08682">
    <property type="generic name" value="1-METHYL ETHYL 1-CHLORO-5-[[(5,6DIHYDRO-2-METHYL-1,4-OXATHIIN-3-YL)CARBONYL]AMINO]BENZOATE"/>
</dbReference>
<dbReference type="DrugBank" id="DB08681">
    <property type="generic name" value="1-METHYL ETHYL 2-CHLORO-5-[[[(1-METHYLETHOXY)THIOOXO]METHYL]AMINO]-BENZOATE"/>
</dbReference>
<dbReference type="DrugBank" id="DB08286">
    <property type="generic name" value="1-Naphthoxyacetic acid"/>
</dbReference>
<dbReference type="DrugBank" id="DB07826">
    <property type="generic name" value="2-[4-chloro-2-(phenylcarbonyl)phenoxy]-N-phenylacetamide"/>
</dbReference>
<dbReference type="DrugBank" id="DB08528">
    <property type="generic name" value="2-AMINO-6-(3,5-DIMETHYLPHENYL)SULFONYLBENZONITRILE"/>
</dbReference>
<dbReference type="DrugBank" id="DB08444">
    <property type="generic name" value="3-[2-bromo-4-(1H-pyrazolo[3,4-c]pyridazin-3-ylmethyl)phenoxy]-5-methylbenzonitrile"/>
</dbReference>
<dbReference type="DrugBank" id="DB08446">
    <property type="generic name" value="3-[6-bromo-2-fluoro-3-(1H-pyrazolo[3,4-c]pyridazin-3-ylmethyl)phenoxy]-5-chlorobenzonitrile"/>
</dbReference>
<dbReference type="DrugBank" id="DB08154">
    <property type="generic name" value="3-chloro-5-[2-chloro-5-(1H-indazol-3-ylmethoxy)phenoxy]benzonitrile"/>
</dbReference>
<dbReference type="DrugBank" id="DB08459">
    <property type="generic name" value="3-chloro-5-[2-chloro-5-(1H-pyrazolo[3,4-b]pyridin-3-ylmethoxy)phenoxy]benzonitrile"/>
</dbReference>
<dbReference type="DrugBank" id="DB07864">
    <property type="generic name" value="4-[(CYCLOPROPYLETHYNYL)OXY]-6-FLUORO-3-ISOPROPYLQUINOLIN-2(1H)-ONE"/>
</dbReference>
<dbReference type="DrugBank" id="DB08211">
    <property type="generic name" value="5-bromo-3-(pyrrolidin-1-ylsulfonyl)-1H-indole-2-carboxamide"/>
</dbReference>
<dbReference type="DrugBank" id="DB08665">
    <property type="generic name" value="6,11-DIHYDRO-11-ETHYL-6-METHYL-9-NITRO-5H-PYRIDO[2,3-B][1,5]BENZODIAZEPIN-5-ONE"/>
</dbReference>
<dbReference type="DrugBank" id="DB07820">
    <property type="generic name" value="6-(3',5'-DIMETHYLBENZYL)-1-ETHOXYMETHYL-5-ISOPROPYLURACIL"/>
</dbReference>
<dbReference type="DrugBank" id="DB08379">
    <property type="generic name" value="6-(4-chloro-2-fluoro-3-phenoxybenzyl)pyridazin-3(2H)-one"/>
</dbReference>
<dbReference type="DrugBank" id="DB07184">
    <property type="generic name" value="6-(cyclohexylsulfanyl)-1-(ethoxymethyl)-5-(1-methylethyl)pyrimidine-2,4(1H,3H)-dione"/>
</dbReference>
<dbReference type="DrugBank" id="DB08634">
    <property type="generic name" value="6-BENZYL-1-BENZYLOXYMETHYL-5-ISOPROPYL URACIL"/>
</dbReference>
<dbReference type="DrugBank" id="DB07871">
    <property type="generic name" value="6-CHLORO-4-(CYCLOHEXYLOXY)-3-ISOPROPYLQUINOLIN-2(1H)-ONE"/>
</dbReference>
<dbReference type="DrugBank" id="DB07867">
    <property type="generic name" value="6-CHLORO-4-(CYCLOHEXYLOXY)-3-PROPYLQUINOLIN-2(1H)-ONE"/>
</dbReference>
<dbReference type="DrugBank" id="DB07868">
    <property type="generic name" value="6-CHLORO-4-(CYCLOHEXYLSULFANYL)-3-PROPYLQUINOLIN-2(1H)-ONE"/>
</dbReference>
<dbReference type="DrugBank" id="DB07869">
    <property type="generic name" value="6-Chloro-4-[(R)-cyclohexylsulfinyl]-3-propyl-2(1H)-quinolinone"/>
</dbReference>
<dbReference type="DrugBank" id="DB06910">
    <property type="generic name" value="[4-R-(4-ALPHA,6-BETA,7-BETA]-HEXAHYDRO-5,6-DI(HYDROXY)-1,3-DI(ALLYL)-4,7-BISPHENYLMETHYL)-2H-1,3-DIAZEPINONE"/>
</dbReference>
<dbReference type="DrugBank" id="DB07332">
    <property type="generic name" value="ALPHA-(2,6-DICHLOROPHENYL)-ALPHA-(2-ACETYL-5-METHYLANILINO)ACETAMIDE"/>
</dbReference>
<dbReference type="DrugBank" id="DB06581">
    <property type="generic name" value="Bevirimat"/>
</dbReference>
<dbReference type="DrugBank" id="DB08502">
    <property type="generic name" value="Capravirine"/>
</dbReference>
<dbReference type="DrugBank" id="DB08188">
    <property type="generic name" value="Emivirine"/>
</dbReference>
<dbReference type="DrugBank" id="DB06414">
    <property type="generic name" value="Etravirine"/>
</dbReference>
<dbReference type="DrugBank" id="DB13119">
    <property type="generic name" value="GSK-364735"/>
</dbReference>
<dbReference type="DrugBank" id="DB04609">
    <property type="generic name" value="INHIBITOR Q8467 OF DUPONT MERCK"/>
</dbReference>
<dbReference type="DrugBank" id="DB15673">
    <property type="generic name" value="Lenacapavir"/>
</dbReference>
<dbReference type="DrugBank" id="DB08460">
    <property type="generic name" value="MK-4965"/>
</dbReference>
<dbReference type="DrugBank" id="DB02102">
    <property type="generic name" value="Mozenavir"/>
</dbReference>
<dbReference type="DrugBank" id="DB07797">
    <property type="generic name" value="N-[[3-FLUORO-4-ETHOXY-PYRID-2-YL]ETHYL]-N'-[5-CHLORO-PYRIDYL]-THIOUREA"/>
</dbReference>
<dbReference type="DrugBank" id="DB07781">
    <property type="generic name" value="N-[[3-FLUORO-4-ETHOXY-PYRID-2-YL]ETHYL]-N'-[5-NITRILOMETHYL-PYRIDYL]-THIOUREA"/>
</dbReference>
<dbReference type="DrugBank" id="DB08680">
    <property type="generic name" value="N-{3-[(E)-(tert-butoxyimino)methyl]-4-chlorophenyl}-2-methylfuran-3-carbimidothioic acid"/>
</dbReference>
<dbReference type="DrugBank" id="DB07884">
    <property type="generic name" value="Opaviraline"/>
</dbReference>
<dbReference type="DrugBank" id="DB08598">
    <property type="generic name" value="R-82913"/>
</dbReference>
<dbReference type="DrugBank" id="DB08494">
    <property type="generic name" value="S-{2-[(2-chloro-4-sulfamoylphenyl)amino]-2-oxoethyl} 6-methyl-3,4-dihydroquinoline-1(2H)-carbothioate"/>
</dbReference>
<dbReference type="DrugBank" id="DB02729">
    <property type="generic name" value="SD146"/>
</dbReference>
<dbReference type="DrugBank" id="DB05328">
    <property type="generic name" value="VGV-1"/>
</dbReference>
<dbReference type="DrugBank" id="DB02702">
    <property type="generic name" value="XV638"/>
</dbReference>
<dbReference type="MEROPS" id="A02.001"/>
<dbReference type="ABCD" id="P04585">
    <property type="antibodies" value="3 sequenced antibodies"/>
</dbReference>
<dbReference type="GeneID" id="155348"/>
<dbReference type="KEGG" id="vg:155348"/>
<dbReference type="Reactome" id="R-HSA-162585">
    <property type="pathway name" value="Uncoating of the HIV Virion"/>
</dbReference>
<dbReference type="Reactome" id="R-HSA-162588">
    <property type="pathway name" value="Budding and maturation of HIV virion"/>
</dbReference>
<dbReference type="Reactome" id="R-HSA-162592">
    <property type="pathway name" value="Integration of provirus"/>
</dbReference>
<dbReference type="Reactome" id="R-HSA-162594">
    <property type="pathway name" value="Early Phase of HIV Life Cycle"/>
</dbReference>
<dbReference type="Reactome" id="R-HSA-164516">
    <property type="pathway name" value="Minus-strand DNA synthesis"/>
</dbReference>
<dbReference type="Reactome" id="R-HSA-164525">
    <property type="pathway name" value="Plus-strand DNA synthesis"/>
</dbReference>
<dbReference type="Reactome" id="R-HSA-164843">
    <property type="pathway name" value="2-LTR circle formation"/>
</dbReference>
<dbReference type="Reactome" id="R-HSA-173107">
    <property type="pathway name" value="Binding and entry of HIV virion"/>
</dbReference>
<dbReference type="Reactome" id="R-HSA-175474">
    <property type="pathway name" value="Assembly Of The HIV Virion"/>
</dbReference>
<dbReference type="Reactome" id="R-HSA-175567">
    <property type="pathway name" value="Integration of viral DNA into host genomic DNA"/>
</dbReference>
<dbReference type="Reactome" id="R-HSA-177539">
    <property type="pathway name" value="Autointegration results in viral DNA circles"/>
</dbReference>
<dbReference type="Reactome" id="R-HSA-180689">
    <property type="pathway name" value="APOBEC3G mediated resistance to HIV-1 infection"/>
</dbReference>
<dbReference type="Reactome" id="R-HSA-180910">
    <property type="pathway name" value="Vpr-mediated nuclear import of PICs"/>
</dbReference>
<dbReference type="SABIO-RK" id="P04585"/>
<dbReference type="EvolutionaryTrace" id="P04585"/>
<dbReference type="PRO" id="PR:P04585"/>
<dbReference type="Proteomes" id="UP000002241">
    <property type="component" value="Segment"/>
</dbReference>
<dbReference type="Proteomes" id="UP000105453">
    <property type="component" value="Segment"/>
</dbReference>
<dbReference type="GO" id="GO:0043657">
    <property type="term" value="C:host cell"/>
    <property type="evidence" value="ECO:0007669"/>
    <property type="project" value="GOC"/>
</dbReference>
<dbReference type="GO" id="GO:0042025">
    <property type="term" value="C:host cell nucleus"/>
    <property type="evidence" value="ECO:0007669"/>
    <property type="project" value="UniProtKB-SubCell"/>
</dbReference>
<dbReference type="GO" id="GO:0020002">
    <property type="term" value="C:host cell plasma membrane"/>
    <property type="evidence" value="ECO:0007669"/>
    <property type="project" value="UniProtKB-SubCell"/>
</dbReference>
<dbReference type="GO" id="GO:0072494">
    <property type="term" value="C:host multivesicular body"/>
    <property type="evidence" value="ECO:0007669"/>
    <property type="project" value="UniProtKB-SubCell"/>
</dbReference>
<dbReference type="GO" id="GO:0016020">
    <property type="term" value="C:membrane"/>
    <property type="evidence" value="ECO:0007669"/>
    <property type="project" value="UniProtKB-KW"/>
</dbReference>
<dbReference type="GO" id="GO:0019013">
    <property type="term" value="C:viral nucleocapsid"/>
    <property type="evidence" value="ECO:0007669"/>
    <property type="project" value="UniProtKB-KW"/>
</dbReference>
<dbReference type="GO" id="GO:0055036">
    <property type="term" value="C:virion membrane"/>
    <property type="evidence" value="ECO:0007669"/>
    <property type="project" value="UniProtKB-SubCell"/>
</dbReference>
<dbReference type="GO" id="GO:0004190">
    <property type="term" value="F:aspartic-type endopeptidase activity"/>
    <property type="evidence" value="ECO:0000314"/>
    <property type="project" value="UniProt"/>
</dbReference>
<dbReference type="GO" id="GO:0003677">
    <property type="term" value="F:DNA binding"/>
    <property type="evidence" value="ECO:0007669"/>
    <property type="project" value="UniProtKB-KW"/>
</dbReference>
<dbReference type="GO" id="GO:0003887">
    <property type="term" value="F:DNA-directed DNA polymerase activity"/>
    <property type="evidence" value="ECO:0007669"/>
    <property type="project" value="UniProtKB-KW"/>
</dbReference>
<dbReference type="GO" id="GO:0004533">
    <property type="term" value="F:exoribonuclease H activity"/>
    <property type="evidence" value="ECO:0007669"/>
    <property type="project" value="UniProtKB-EC"/>
</dbReference>
<dbReference type="GO" id="GO:0042802">
    <property type="term" value="F:identical protein binding"/>
    <property type="evidence" value="ECO:0000353"/>
    <property type="project" value="IntAct"/>
</dbReference>
<dbReference type="GO" id="GO:0008907">
    <property type="term" value="F:integrase activity"/>
    <property type="evidence" value="ECO:0000304"/>
    <property type="project" value="Reactome"/>
</dbReference>
<dbReference type="GO" id="GO:0008289">
    <property type="term" value="F:lipid binding"/>
    <property type="evidence" value="ECO:0007669"/>
    <property type="project" value="UniProtKB-KW"/>
</dbReference>
<dbReference type="GO" id="GO:0008233">
    <property type="term" value="F:peptidase activity"/>
    <property type="evidence" value="ECO:0000304"/>
    <property type="project" value="Reactome"/>
</dbReference>
<dbReference type="GO" id="GO:0035613">
    <property type="term" value="F:RNA stem-loop binding"/>
    <property type="evidence" value="ECO:0007669"/>
    <property type="project" value="TreeGrafter"/>
</dbReference>
<dbReference type="GO" id="GO:0003964">
    <property type="term" value="F:RNA-directed DNA polymerase activity"/>
    <property type="evidence" value="ECO:0007669"/>
    <property type="project" value="UniProtKB-KW"/>
</dbReference>
<dbReference type="GO" id="GO:0004523">
    <property type="term" value="F:RNA-DNA hybrid ribonuclease activity"/>
    <property type="evidence" value="ECO:0007669"/>
    <property type="project" value="InterPro"/>
</dbReference>
<dbReference type="GO" id="GO:0005198">
    <property type="term" value="F:structural molecule activity"/>
    <property type="evidence" value="ECO:0007669"/>
    <property type="project" value="InterPro"/>
</dbReference>
<dbReference type="GO" id="GO:0008270">
    <property type="term" value="F:zinc ion binding"/>
    <property type="evidence" value="ECO:0000314"/>
    <property type="project" value="CAFA"/>
</dbReference>
<dbReference type="GO" id="GO:0006310">
    <property type="term" value="P:DNA recombination"/>
    <property type="evidence" value="ECO:0007669"/>
    <property type="project" value="UniProtKB-KW"/>
</dbReference>
<dbReference type="GO" id="GO:0075713">
    <property type="term" value="P:establishment of integrated proviral latency"/>
    <property type="evidence" value="ECO:0000304"/>
    <property type="project" value="Reactome"/>
</dbReference>
<dbReference type="GO" id="GO:0016485">
    <property type="term" value="P:protein processing"/>
    <property type="evidence" value="ECO:0000314"/>
    <property type="project" value="UniProt"/>
</dbReference>
<dbReference type="GO" id="GO:0046718">
    <property type="term" value="P:symbiont entry into host cell"/>
    <property type="evidence" value="ECO:0007669"/>
    <property type="project" value="UniProtKB-KW"/>
</dbReference>
<dbReference type="GO" id="GO:0052151">
    <property type="term" value="P:symbiont-mediated activation of host apoptosis"/>
    <property type="evidence" value="ECO:0007669"/>
    <property type="project" value="UniProtKB-KW"/>
</dbReference>
<dbReference type="GO" id="GO:0039657">
    <property type="term" value="P:symbiont-mediated suppression of host gene expression"/>
    <property type="evidence" value="ECO:0007669"/>
    <property type="project" value="UniProtKB-KW"/>
</dbReference>
<dbReference type="GO" id="GO:0044826">
    <property type="term" value="P:viral genome integration into host DNA"/>
    <property type="evidence" value="ECO:0007669"/>
    <property type="project" value="UniProtKB-KW"/>
</dbReference>
<dbReference type="GO" id="GO:0019058">
    <property type="term" value="P:viral life cycle"/>
    <property type="evidence" value="ECO:0000304"/>
    <property type="project" value="Reactome"/>
</dbReference>
<dbReference type="GO" id="GO:0075732">
    <property type="term" value="P:viral penetration into host nucleus"/>
    <property type="evidence" value="ECO:0007669"/>
    <property type="project" value="UniProtKB-KW"/>
</dbReference>
<dbReference type="GO" id="GO:0075523">
    <property type="term" value="P:viral translational frameshifting"/>
    <property type="evidence" value="ECO:0007669"/>
    <property type="project" value="UniProtKB-KW"/>
</dbReference>
<dbReference type="CDD" id="cd05482">
    <property type="entry name" value="HIV_retropepsin_like"/>
    <property type="match status" value="1"/>
</dbReference>
<dbReference type="CDD" id="cd01645">
    <property type="entry name" value="RT_Rtv"/>
    <property type="match status" value="1"/>
</dbReference>
<dbReference type="FunFam" id="1.10.1200.30:FF:000001">
    <property type="entry name" value="Gag polyprotein"/>
    <property type="match status" value="1"/>
</dbReference>
<dbReference type="FunFam" id="1.10.150.90:FF:000001">
    <property type="entry name" value="Gag polyprotein"/>
    <property type="match status" value="1"/>
</dbReference>
<dbReference type="FunFam" id="1.10.375.10:FF:000001">
    <property type="entry name" value="Gag polyprotein"/>
    <property type="match status" value="1"/>
</dbReference>
<dbReference type="FunFam" id="1.20.5.760:FF:000001">
    <property type="entry name" value="Gag polyprotein"/>
    <property type="match status" value="1"/>
</dbReference>
<dbReference type="FunFam" id="4.10.60.10:FF:000001">
    <property type="entry name" value="Gag polyprotein"/>
    <property type="match status" value="1"/>
</dbReference>
<dbReference type="FunFam" id="2.40.70.10:FF:000001">
    <property type="entry name" value="Gag-Pol polyprotein"/>
    <property type="match status" value="1"/>
</dbReference>
<dbReference type="FunFam" id="3.30.420.10:FF:000025">
    <property type="entry name" value="Gag-Pol polyprotein"/>
    <property type="match status" value="1"/>
</dbReference>
<dbReference type="FunFam" id="2.30.30.10:FF:000001">
    <property type="entry name" value="POL polyprotein"/>
    <property type="match status" value="1"/>
</dbReference>
<dbReference type="FunFam" id="3.30.420.10:FF:000017">
    <property type="entry name" value="POL polyprotein"/>
    <property type="match status" value="1"/>
</dbReference>
<dbReference type="FunFam" id="3.30.70.270:FF:000016">
    <property type="entry name" value="POL polyprotein"/>
    <property type="match status" value="1"/>
</dbReference>
<dbReference type="Gene3D" id="1.10.10.200">
    <property type="match status" value="1"/>
</dbReference>
<dbReference type="Gene3D" id="1.10.1200.30">
    <property type="match status" value="1"/>
</dbReference>
<dbReference type="Gene3D" id="3.30.70.270">
    <property type="match status" value="3"/>
</dbReference>
<dbReference type="Gene3D" id="2.40.70.10">
    <property type="entry name" value="Acid Proteases"/>
    <property type="match status" value="1"/>
</dbReference>
<dbReference type="Gene3D" id="3.10.10.10">
    <property type="entry name" value="HIV Type 1 Reverse Transcriptase, subunit A, domain 1"/>
    <property type="match status" value="1"/>
</dbReference>
<dbReference type="Gene3D" id="1.10.375.10">
    <property type="entry name" value="Human Immunodeficiency Virus Type 1 Capsid Protein"/>
    <property type="match status" value="1"/>
</dbReference>
<dbReference type="Gene3D" id="1.10.150.90">
    <property type="entry name" value="Immunodeficiency lentiviruses, gag gene matrix protein p17"/>
    <property type="match status" value="1"/>
</dbReference>
<dbReference type="Gene3D" id="2.30.30.10">
    <property type="entry name" value="Integrase, C-terminal domain superfamily, retroviral"/>
    <property type="match status" value="1"/>
</dbReference>
<dbReference type="Gene3D" id="3.30.420.10">
    <property type="entry name" value="Ribonuclease H-like superfamily/Ribonuclease H"/>
    <property type="match status" value="2"/>
</dbReference>
<dbReference type="Gene3D" id="1.20.5.760">
    <property type="entry name" value="Single helix bin"/>
    <property type="match status" value="1"/>
</dbReference>
<dbReference type="Gene3D" id="4.10.60.10">
    <property type="entry name" value="Zinc finger, CCHC-type"/>
    <property type="match status" value="1"/>
</dbReference>
<dbReference type="InterPro" id="IPR001969">
    <property type="entry name" value="Aspartic_peptidase_AS"/>
</dbReference>
<dbReference type="InterPro" id="IPR043502">
    <property type="entry name" value="DNA/RNA_pol_sf"/>
</dbReference>
<dbReference type="InterPro" id="IPR045345">
    <property type="entry name" value="Gag_p24_C"/>
</dbReference>
<dbReference type="InterPro" id="IPR017856">
    <property type="entry name" value="Integrase-like_N"/>
</dbReference>
<dbReference type="InterPro" id="IPR036862">
    <property type="entry name" value="Integrase_C_dom_sf_retrovir"/>
</dbReference>
<dbReference type="InterPro" id="IPR001037">
    <property type="entry name" value="Integrase_C_retrovir"/>
</dbReference>
<dbReference type="InterPro" id="IPR001584">
    <property type="entry name" value="Integrase_cat-core"/>
</dbReference>
<dbReference type="InterPro" id="IPR003308">
    <property type="entry name" value="Integrase_Zn-bd_dom_N"/>
</dbReference>
<dbReference type="InterPro" id="IPR000071">
    <property type="entry name" value="Lentvrl_matrix_N"/>
</dbReference>
<dbReference type="InterPro" id="IPR012344">
    <property type="entry name" value="Matrix_HIV/RSV_N"/>
</dbReference>
<dbReference type="InterPro" id="IPR001995">
    <property type="entry name" value="Peptidase_A2_cat"/>
</dbReference>
<dbReference type="InterPro" id="IPR021109">
    <property type="entry name" value="Peptidase_aspartic_dom_sf"/>
</dbReference>
<dbReference type="InterPro" id="IPR034170">
    <property type="entry name" value="Retropepsin-like_cat_dom"/>
</dbReference>
<dbReference type="InterPro" id="IPR018061">
    <property type="entry name" value="Retropepsins"/>
</dbReference>
<dbReference type="InterPro" id="IPR008916">
    <property type="entry name" value="Retrov_capsid_C"/>
</dbReference>
<dbReference type="InterPro" id="IPR008919">
    <property type="entry name" value="Retrov_capsid_N"/>
</dbReference>
<dbReference type="InterPro" id="IPR010999">
    <property type="entry name" value="Retrovr_matrix"/>
</dbReference>
<dbReference type="InterPro" id="IPR043128">
    <property type="entry name" value="Rev_trsase/Diguanyl_cyclase"/>
</dbReference>
<dbReference type="InterPro" id="IPR012337">
    <property type="entry name" value="RNaseH-like_sf"/>
</dbReference>
<dbReference type="InterPro" id="IPR002156">
    <property type="entry name" value="RNaseH_domain"/>
</dbReference>
<dbReference type="InterPro" id="IPR036397">
    <property type="entry name" value="RNaseH_sf"/>
</dbReference>
<dbReference type="InterPro" id="IPR000477">
    <property type="entry name" value="RT_dom"/>
</dbReference>
<dbReference type="InterPro" id="IPR010659">
    <property type="entry name" value="RVT_connect"/>
</dbReference>
<dbReference type="InterPro" id="IPR010661">
    <property type="entry name" value="RVT_thumb"/>
</dbReference>
<dbReference type="InterPro" id="IPR001878">
    <property type="entry name" value="Znf_CCHC"/>
</dbReference>
<dbReference type="InterPro" id="IPR036875">
    <property type="entry name" value="Znf_CCHC_sf"/>
</dbReference>
<dbReference type="PANTHER" id="PTHR41694">
    <property type="entry name" value="ENDOGENOUS RETROVIRUS GROUP K MEMBER POL PROTEIN"/>
    <property type="match status" value="1"/>
</dbReference>
<dbReference type="PANTHER" id="PTHR41694:SF3">
    <property type="entry name" value="RNA-DIRECTED DNA POLYMERASE-RELATED"/>
    <property type="match status" value="1"/>
</dbReference>
<dbReference type="Pfam" id="PF00540">
    <property type="entry name" value="Gag_p17"/>
    <property type="match status" value="1"/>
</dbReference>
<dbReference type="Pfam" id="PF19317">
    <property type="entry name" value="Gag_p24_C"/>
    <property type="match status" value="1"/>
</dbReference>
<dbReference type="Pfam" id="PF00552">
    <property type="entry name" value="IN_DBD_C"/>
    <property type="match status" value="1"/>
</dbReference>
<dbReference type="Pfam" id="PF02022">
    <property type="entry name" value="Integrase_Zn"/>
    <property type="match status" value="1"/>
</dbReference>
<dbReference type="Pfam" id="PF00075">
    <property type="entry name" value="RNase_H"/>
    <property type="match status" value="1"/>
</dbReference>
<dbReference type="Pfam" id="PF00665">
    <property type="entry name" value="rve"/>
    <property type="match status" value="1"/>
</dbReference>
<dbReference type="Pfam" id="PF00077">
    <property type="entry name" value="RVP"/>
    <property type="match status" value="1"/>
</dbReference>
<dbReference type="Pfam" id="PF00078">
    <property type="entry name" value="RVT_1"/>
    <property type="match status" value="1"/>
</dbReference>
<dbReference type="Pfam" id="PF06815">
    <property type="entry name" value="RVT_connect"/>
    <property type="match status" value="1"/>
</dbReference>
<dbReference type="Pfam" id="PF06817">
    <property type="entry name" value="RVT_thumb"/>
    <property type="match status" value="1"/>
</dbReference>
<dbReference type="Pfam" id="PF00098">
    <property type="entry name" value="zf-CCHC"/>
    <property type="match status" value="2"/>
</dbReference>
<dbReference type="PRINTS" id="PR00234">
    <property type="entry name" value="HIV1MATRIX"/>
</dbReference>
<dbReference type="SMART" id="SM00343">
    <property type="entry name" value="ZnF_C2HC"/>
    <property type="match status" value="2"/>
</dbReference>
<dbReference type="SUPFAM" id="SSF50630">
    <property type="entry name" value="Acid proteases"/>
    <property type="match status" value="1"/>
</dbReference>
<dbReference type="SUPFAM" id="SSF50122">
    <property type="entry name" value="DNA-binding domain of retroviral integrase"/>
    <property type="match status" value="1"/>
</dbReference>
<dbReference type="SUPFAM" id="SSF56672">
    <property type="entry name" value="DNA/RNA polymerases"/>
    <property type="match status" value="1"/>
</dbReference>
<dbReference type="SUPFAM" id="SSF46919">
    <property type="entry name" value="N-terminal Zn binding domain of HIV integrase"/>
    <property type="match status" value="1"/>
</dbReference>
<dbReference type="SUPFAM" id="SSF47836">
    <property type="entry name" value="Retroviral matrix proteins"/>
    <property type="match status" value="1"/>
</dbReference>
<dbReference type="SUPFAM" id="SSF47353">
    <property type="entry name" value="Retrovirus capsid dimerization domain-like"/>
    <property type="match status" value="1"/>
</dbReference>
<dbReference type="SUPFAM" id="SSF47943">
    <property type="entry name" value="Retrovirus capsid protein, N-terminal core domain"/>
    <property type="match status" value="1"/>
</dbReference>
<dbReference type="SUPFAM" id="SSF57756">
    <property type="entry name" value="Retrovirus zinc finger-like domains"/>
    <property type="match status" value="1"/>
</dbReference>
<dbReference type="SUPFAM" id="SSF53098">
    <property type="entry name" value="Ribonuclease H-like"/>
    <property type="match status" value="2"/>
</dbReference>
<dbReference type="PROSITE" id="PS50175">
    <property type="entry name" value="ASP_PROT_RETROV"/>
    <property type="match status" value="1"/>
</dbReference>
<dbReference type="PROSITE" id="PS00141">
    <property type="entry name" value="ASP_PROTEASE"/>
    <property type="match status" value="1"/>
</dbReference>
<dbReference type="PROSITE" id="PS50994">
    <property type="entry name" value="INTEGRASE"/>
    <property type="match status" value="1"/>
</dbReference>
<dbReference type="PROSITE" id="PS51027">
    <property type="entry name" value="INTEGRASE_DBD"/>
    <property type="match status" value="1"/>
</dbReference>
<dbReference type="PROSITE" id="PS50879">
    <property type="entry name" value="RNASE_H_1"/>
    <property type="match status" value="1"/>
</dbReference>
<dbReference type="PROSITE" id="PS50878">
    <property type="entry name" value="RT_POL"/>
    <property type="match status" value="1"/>
</dbReference>
<dbReference type="PROSITE" id="PS50158">
    <property type="entry name" value="ZF_CCHC"/>
    <property type="match status" value="2"/>
</dbReference>
<dbReference type="PROSITE" id="PS50876">
    <property type="entry name" value="ZF_INTEGRASE"/>
    <property type="match status" value="1"/>
</dbReference>
<accession>P04585</accession>
<accession>O09777</accession>
<accession>Q9WJC5</accession>
<sequence>MGARASVLSGGELDRWEKIRLRPGGKKKYKLKHIVWASRELERFAVNPGLLETSEGCRQILGQLQPSLQTGSEELRSLYNTVATLYCVHQRIEIKDTKEALDKIEEEQNKSKKKAQQAAADTGHSNQVSQNYPIVQNIQGQMVHQAISPRTLNAWVKVVEEKAFSPEVIPMFSALSEGATPQDLNTMLNTVGGHQAAMQMLKETINEEAAEWDRVHPVHAGPIAPGQMREPRGSDIAGTTSTLQEQIGWMTNNPPIPVGEIYKRWIILGLNKIVRMYSPTSILDIRQGPKEPFRDYVDRFYKTLRAEQASQEVKNWMTETLLVQNANPDCKTILKALGPAATLEEMMTACQGVGGPGHKARVLAEAMSQVTNSATIMMQRGNFRNQRKIVKCFNCGKEGHTARNCRAPRKKGCWKCGKEGHQMKDCTERQANFLREDLAFLQGKAREFSSEQTRANSPTRRELQVWGRDNNSPSEAGADRQGTVSFNFPQVTLWQRPLVTIKIGGQLKEALLDTGADDTVLEEMSLPGRWKPKMIGGIGGFIKVRQYDQILIEICGHKAIGTVLVGPTPVNIIGRNLLTQIGCTLNFPISPIETVPVKLKPGMDGPKVKQWPLTEEKIKALVEICTEMEKEGKISKIGPENPYNTPVFAIKKKDSTKWRKLVDFRELNKRTQDFWEVQLGIPHPAGLKKKKSVTVLDVGDAYFSVPLDEDFRKYTAFTIPSINNETPGIRYQYNVLPQGWKGSPAIFQSSMTKILEPFRKQNPDIVIYQYMDDLYVGSDLEIGQHRTKIEELRQHLLRWGLTTPDKKHQKEPPFLWMGYELHPDKWTVQPIVLPEKDSWTVNDIQKLVGKLNWASQIYPGIKVRQLCKLLRGTKALTEVIPLTEEAELELAENREILKEPVHGVYYDPSKDLIAEIQKQGQGQWTYQIYQEPFKNLKTGKYARMRGAHTNDVKQLTEAVQKITTESIVIWGKTPKFKLPIQKETWETWWTEYWQATWIPEWEFVNTPPLVKLWYQLEKEPIVGAETFYVDGAANRETKLGKAGYVTNRGRQKVVTLTDTTNQKTELQAIYLALQDSGLEVNIVTDSQYALGIIQAQPDQSESELVNQIIEQLIKKEKVYLAWVPAHKGIGGNEQVDKLVSAGIRKVLFLDGIDKAQDEHEKYHSNWRAMASDFNLPPVVAKEIVASCDKCQLKGEAMHGQVDCSPGIWQLDCTHLEGKVILVAVHVASGYIEAEVIPAETGQETAYFLLKLAGRWPVKTIHTDNGSNFTGATVRAACWWAGIKQEFGIPYNPQSQGVVESMNKELKKIIGQVRDQAEHLKTAVQMAVFIHNFKRKGGIGGYSAGERIVDIIATDIQTKELQKQITKIQNFRVYYRDSRNPLWKGPAKLLWKGEGAVVIQDNSDIKVVPRRKAKIIRDYGKQMAGDDCVASRQDED</sequence>
<proteinExistence type="evidence at protein level"/>
<protein>
    <recommendedName>
        <fullName>Gag-Pol polyprotein</fullName>
    </recommendedName>
    <alternativeName>
        <fullName>Pr160Gag-Pol</fullName>
    </alternativeName>
    <component>
        <recommendedName>
            <fullName>Matrix protein p17</fullName>
            <shortName>MA</shortName>
        </recommendedName>
    </component>
    <component>
        <recommendedName>
            <fullName>Capsid protein p24</fullName>
            <shortName>CA</shortName>
        </recommendedName>
    </component>
    <component>
        <recommendedName>
            <fullName evidence="5">Spacer peptide 1</fullName>
            <shortName>SP1</shortName>
        </recommendedName>
        <alternativeName>
            <fullName>p2</fullName>
        </alternativeName>
    </component>
    <component>
        <recommendedName>
            <fullName>Nucleocapsid protein p7</fullName>
            <shortName>NC</shortName>
        </recommendedName>
    </component>
    <component>
        <recommendedName>
            <fullName>Transframe peptide</fullName>
            <shortName>TF</shortName>
        </recommendedName>
    </component>
    <component>
        <recommendedName>
            <fullName>p6-pol</fullName>
            <shortName>p6*</shortName>
        </recommendedName>
    </component>
    <component>
        <recommendedName>
            <fullName>Protease</fullName>
            <ecNumber evidence="44 45">3.4.23.16</ecNumber>
        </recommendedName>
        <alternativeName>
            <fullName>PR</fullName>
        </alternativeName>
        <alternativeName>
            <fullName>Retropepsin</fullName>
        </alternativeName>
    </component>
    <component>
        <recommendedName>
            <fullName>Reverse transcriptase/ribonuclease H</fullName>
            <ecNumber evidence="2">2.7.7.49</ecNumber>
            <ecNumber evidence="2">2.7.7.7</ecNumber>
            <ecNumber evidence="2">3.1.26.13</ecNumber>
        </recommendedName>
        <alternativeName>
            <fullName>Exoribonuclease H</fullName>
            <ecNumber>3.1.13.2</ecNumber>
        </alternativeName>
        <alternativeName>
            <fullName>p66 RT</fullName>
        </alternativeName>
    </component>
    <component>
        <recommendedName>
            <fullName>p51 RT</fullName>
        </recommendedName>
    </component>
    <component>
        <recommendedName>
            <fullName>p15</fullName>
        </recommendedName>
    </component>
    <component>
        <recommendedName>
            <fullName>Integrase</fullName>
            <shortName>IN</shortName>
            <ecNumber evidence="57">2.7.7.-</ecNumber>
            <ecNumber evidence="57">3.1.-.-</ecNumber>
        </recommendedName>
    </component>
</protein>
<comment type="function">
    <molecule>Gag-Pol polyprotein</molecule>
    <text>Mediates, with Gag polyprotein, the essential events in virion assembly, including binding the plasma membrane, making the protein-protein interactions necessary to create spherical particles, recruiting the viral Env proteins, and packaging the genomic RNA via direct interactions with the RNA packaging sequence (Psi). Gag-Pol polyprotein may regulate its own translation, by the binding genomic RNA in the 5'-UTR. At low concentration, the polyprotein would promote translation, whereas at high concentration, the polyprotein would encapsidate genomic RNA and then shut off translation.</text>
</comment>
<comment type="function">
    <molecule>Matrix protein p17</molecule>
    <text evidence="5">Targets the polyprotein to the plasma membrane via a multipartite membrane-binding signal, that includes its myristoylated N-terminus (By similarity). Matrix protein is part of the pre-integration complex. Implicated in the release from host cell mediated by Vpu. Binds to RNA (By similarity).</text>
</comment>
<comment type="function">
    <molecule>Capsid protein p24</molecule>
    <text evidence="5 23 40 43 51">Forms the conical core that encapsulates the genomic RNA-nucleocapsid complex in the virion (PubMed:8648689). Most core are conical, with only 7% tubular. The core is constituted by capsid protein hexamer subunits. The core is disassembled soon after virion entry (PubMed:12660176). Host restriction factors such as monkey TRIM5-alpha or TRIMCyp bind retroviral capsids and cause premature capsid disassembly, leading to blocks in reverse transcription. Capsid restriction by TRIM5 is one of the factors which restricts HIV-1 to the human species (PubMed:23785198). Host PIN1 apparently facilitates the virion uncoating (By similarity). On the other hand, interactions with PDZD8 or CYPA stabilize the capsid (PubMed:24554657).</text>
</comment>
<comment type="function">
    <molecule>Nucleocapsid protein p7</molecule>
    <text evidence="18 28 30 37 54">Encapsulates and protects viral dimeric unspliced genomic RNA (gRNA). Binds these RNAs through its zinc fingers. Acts as a nucleic acid chaperone which is involved in rearangement of nucleic acid secondary structure during gRNA retrotranscription. Also facilitates template switch leading to recombination. As part of the polyprotein, participates in gRNA dimerization, packaging, tRNA incorporation and virion assembly.</text>
</comment>
<comment type="function">
    <molecule>Protease</molecule>
    <text evidence="8 22 34 44 45 47">Aspartyl protease that mediates proteolytic cleavages of Gag and Gag-Pol polyproteins during or shortly after the release of the virion from the plasma membrane (PubMed:11932404, PubMed:9573231). Cleavages take place as an ordered, step-wise cascade to yield mature proteins (PubMed:11932404, PubMed:9573231). This process is called maturation (PubMed:11932404, PubMed:9573231). Displays maximal activity during the budding process just prior to particle release from the cell (PubMed:11932404, PubMed:9573231). Also cleaves Nef and Vif, probably concomitantly with viral structural proteins on maturation of virus particles (PubMed:7835426). Hydrolyzes host EIF4GI and PABP1 in order to shut off the capped cellular mRNA translation. The resulting inhibition of cellular protein synthesis serves to ensure maximal viral gene expression and to evade host immune response (PubMed:12660176, PubMed:19914170). Also mediates cleavage of host YTHDF3 (PubMed:32053707). Mediates cleavage of host CARD8, thereby activating the CARD8 inflammasome, leading to the clearance of latent HIV-1 in patient CD4(+) T-cells after viral reactivation; in contrast, HIV-1 can evade CARD8-sensing when its protease remains inactive in infected cells prior to viral budding (PubMed:33542150).</text>
</comment>
<comment type="function">
    <molecule>Reverse transcriptase/ribonuclease H</molecule>
    <text evidence="26">Multifunctional enzyme that converts the viral RNA genome into dsDNA in the cytoplasm, shortly after virus entry into the cell. This enzyme displays a DNA polymerase activity that can copy either DNA or RNA templates, and a ribonuclease H (RNase H) activity that cleaves the RNA strand of RNA-DNA heteroduplexes in a partially processive 3' to 5' endonucleasic mode. Conversion of viral genomic RNA into dsDNA requires many steps. A tRNA(3)-Lys binds to the primer-binding site (PBS) situated at the 5'-end of the viral RNA. RT uses the 3' end of the tRNA primer to perform a short round of RNA-dependent minus-strand DNA synthesis. The reading proceeds through the U5 region and ends after the repeated (R) region which is present at both ends of viral RNA. The portion of the RNA-DNA heteroduplex is digested by the RNase H, resulting in a ssDNA product attached to the tRNA primer. This ssDNA/tRNA hybridizes with the identical R region situated at the 3' end of viral RNA. This template exchange, known as minus-strand DNA strong stop transfer, can be either intra- or intermolecular. RT uses the 3' end of this newly synthesized short ssDNA to perform the RNA-dependent minus-strand DNA synthesis of the whole template. RNase H digests the RNA template except for two polypurine tracts (PPTs) situated at the 5'-end and near the center of the genome. It is not clear if both polymerase and RNase H activities are simultaneous. RNase H probably can proceed both in a polymerase-dependent (RNA cut into small fragments by the same RT performing DNA synthesis) and a polymerase-independent mode (cleavage of remaining RNA fragments by free RTs). Secondly, RT performs DNA-directed plus-strand DNA synthesis using the PPTs that have not been removed by RNase H as primers. PPTs and tRNA primers are then removed by RNase H. The 3' and 5' ssDNA PBS regions hybridize to form a circular dsDNA intermediate. Strand displacement synthesis by RT to the PBS and PPT ends produces a blunt ended, linear dsDNA copy of the viral genome that includes long terminal repeats (LTRs) at both ends.</text>
</comment>
<comment type="function">
    <molecule>Integrase</molecule>
    <text evidence="35 39">Catalyzes viral DNA integration into the host chromosome, by performing a series of DNA cutting and joining reactions. This enzyme activity takes place after virion entry into a cell and reverse transcription of the RNA genome in dsDNA. The first step in the integration process is 3' processing. This step requires a complex comprising the viral genome, matrix protein, Vpr and integrase. This complex is called the pre-integration complex (PIC). The integrase protein removes 2 nucleotides from each 3' end of the viral DNA, leaving recessed CA OH's at the 3' ends. In the second step, the PIC enters cell nucleus. This process is mediated through integrase and Vpr proteins, and allows the virus to infect a non dividing cell. This ability to enter the nucleus is specific of lentiviruses, other retroviruses cannot and rely on cell division to access cell chromosomes. In the third step, termed strand transfer, the integrase protein joins the previously processed 3' ends to the 5' ends of strands of target cellular DNA at the site of integration. The 5'-ends are produced by integrase-catalyzed staggered cuts, 5 bp apart. A Y-shaped, gapped, recombination intermediate results, with the 5'-ends of the viral DNA strands and the 3' ends of target DNA strands remaining unjoined, flanking a gap of 5 bp. The last step is viral DNA integration into host chromosome. This involves host DNA repair synthesis in which the 5 bp gaps between the unjoined strands are filled in and then ligated. Since this process occurs at both cuts flanking the HIV genome, a 5 bp duplication of host DNA is produced at the ends of HIV-1 integration. Alternatively, Integrase may catalyze the excision of viral DNA just after strand transfer, this is termed disintegration.</text>
</comment>
<comment type="catalytic activity">
    <reaction evidence="8 44 45">
        <text>Specific for a P1 residue that is hydrophobic, and P1' variable, but often Pro.</text>
        <dbReference type="EC" id="3.4.23.16"/>
    </reaction>
</comment>
<comment type="catalytic activity">
    <reaction evidence="2">
        <text>Endohydrolysis of RNA in RNA/DNA hybrids. Three different cleavage modes: 1. sequence-specific internal cleavage of RNA. Human immunodeficiency virus type 1 and Moloney murine leukemia virus enzymes prefer to cleave the RNA strand one nucleotide away from the RNA-DNA junction. 2. RNA 5'-end directed cleavage 13-19 nucleotides from the RNA end. 3. DNA 3'-end directed cleavage 15-20 nucleotides away from the primer terminus.</text>
        <dbReference type="EC" id="3.1.26.13"/>
    </reaction>
</comment>
<comment type="catalytic activity">
    <reaction>
        <text>3'-end directed exonucleolytic cleavage of viral RNA-DNA hybrid.</text>
        <dbReference type="EC" id="3.1.13.2"/>
    </reaction>
</comment>
<comment type="catalytic activity">
    <reaction evidence="9">
        <text>DNA(n) + a 2'-deoxyribonucleoside 5'-triphosphate = DNA(n+1) + diphosphate</text>
        <dbReference type="Rhea" id="RHEA:22508"/>
        <dbReference type="Rhea" id="RHEA-COMP:17339"/>
        <dbReference type="Rhea" id="RHEA-COMP:17340"/>
        <dbReference type="ChEBI" id="CHEBI:33019"/>
        <dbReference type="ChEBI" id="CHEBI:61560"/>
        <dbReference type="ChEBI" id="CHEBI:173112"/>
        <dbReference type="EC" id="2.7.7.49"/>
    </reaction>
</comment>
<comment type="catalytic activity">
    <reaction evidence="9">
        <text>DNA(n) + a 2'-deoxyribonucleoside 5'-triphosphate = DNA(n+1) + diphosphate</text>
        <dbReference type="Rhea" id="RHEA:22508"/>
        <dbReference type="Rhea" id="RHEA-COMP:17339"/>
        <dbReference type="Rhea" id="RHEA-COMP:17340"/>
        <dbReference type="ChEBI" id="CHEBI:33019"/>
        <dbReference type="ChEBI" id="CHEBI:61560"/>
        <dbReference type="ChEBI" id="CHEBI:173112"/>
        <dbReference type="EC" id="2.7.7.7"/>
    </reaction>
</comment>
<comment type="cofactor">
    <cofactor evidence="1">
        <name>Mg(2+)</name>
        <dbReference type="ChEBI" id="CHEBI:18420"/>
    </cofactor>
    <text evidence="1">Binds 2 magnesium ions for reverse transcriptase polymerase activity.</text>
</comment>
<comment type="cofactor">
    <cofactor evidence="1">
        <name>Mg(2+)</name>
        <dbReference type="ChEBI" id="CHEBI:18420"/>
    </cofactor>
    <text evidence="1">Binds 2 magnesium ions for ribonuclease H (RNase H) activity. Substrate-binding is a precondition for magnesium binding.</text>
</comment>
<comment type="cofactor">
    <cofactor evidence="1">
        <name>Mg(2+)</name>
        <dbReference type="ChEBI" id="CHEBI:18420"/>
    </cofactor>
    <text evidence="1">Magnesium ions are required for integrase activity. Binds at least 1, maybe 2 magnesium ions.</text>
</comment>
<comment type="activity regulation">
    <text>Protease: The viral protease is inhibited by many synthetic protease inhibitors (PIs), such as amprenavir, atazanavir, indinavir, loprinavir, nelfinavir, ritonavir and saquinavir. Use of protease inhibitors in tritherapy regimens permit more ambitious therapeutic strategies. Reverse transcriptase/ribonuclease H: RT can be inhibited either by nucleoside RT inhibitors (NRTIs) or by non nucleoside RT inhibitors (NNRTIs). NRTIs act as chain terminators, whereas NNRTIs inhibit DNA polymerization by binding a small hydrophobic pocket near the RT active site and inducing an allosteric change in this region. Classical NRTIs are abacavir, adefovir (PMEA), didanosine (ddI), lamivudine (3TC), stavudine (d4T), tenofovir (PMPA), zalcitabine (ddC), and zidovudine (AZT). Classical NNRTIs are atevirdine (BHAP U-87201E), delavirdine, efavirenz (DMP-266), emivirine (I-EBU), and nevirapine (BI-RG-587). The tritherapies used as a basic effective treatment of AIDS associate two NRTIs and one NNRTI.</text>
</comment>
<comment type="subunit">
    <molecule>Matrix protein p17</molecule>
    <text evidence="5 32 42">Homotrimer; further assembles as hexamers of trimers (PubMed:19327811). Interacts with gp41 (via C-terminus) (By similarity). Interacts with host CALM1; this interaction induces a conformational change in the Matrix protein, triggering exposure of the myristate group (PubMed:24500712). Interacts with host AP3D1; this interaction allows the polyprotein trafficking to multivesicular bodies during virus assembly (By similarity). Part of the pre-integration complex (PIC) which is composed of viral genome, matrix protein, Vpr and integrase (By similarity).</text>
</comment>
<comment type="subunit">
    <molecule>Capsid protein p24</molecule>
    <text evidence="5 33 36 40 50 52">Homodimer; the homodimer further multimerizes as homohexamers or homopentamers (PubMed:19914170). Interacts with human PPIA/CYPA (PubMed:9223641, PubMed:8513493); this interaction stabilizes the capsid. Interacts with human NUP153 (By similarity). Interacts with host PDZD8; this interaction stabilizes the capsid (PubMed:20573829). Interacts with monkey TRIM5; this interaction destabilizes the capsid (PubMed:23785198).</text>
</comment>
<comment type="subunit">
    <molecule>Protease</molecule>
    <text evidence="38 41">Homodimer, whose active site consists of two apposed aspartic acid residues (PubMed:2162350, PubMed:24132393).</text>
</comment>
<comment type="subunit">
    <molecule>Reverse transcriptase/ribonuclease H</molecule>
    <text evidence="2 25">Heterodimer of p66 RT and p51 RT (RT p66/p51) (PubMed:15183348). Heterodimerization of RT is essential for DNA polymerase activity (By similarity). The overall folding of the subdomains is similar in p66 RT and p51 RT but the spatial arrangements of the subdomains are dramatically different (By similarity).</text>
</comment>
<comment type="subunit">
    <molecule>Integrase</molecule>
    <text evidence="3 5 33 46">Homotetramer; may further associate as a homohexadecamer (By similarity). Part of the pre-integration complex (PIC) which is composed of viral genome, matrix protein, Vpr and integrase. Interacts with human SMARCB1/INI1 and human PSIP1/LEDGF isoform 1 (PubMed:7801128). Interacts with human KPNA3; this interaction might play a role in nuclear import of the pre-. integration complex (PubMed:19914170). Interacts with human NUP153; this interaction might play a role in nuclear import of the pre-integration complex (By similarity).</text>
</comment>
<comment type="interaction">
    <interactant intactId="EBI-3989067">
        <id>P04585</id>
    </interactant>
    <interactant intactId="EBI-3989067">
        <id>P04585</id>
        <label>gag-pol</label>
    </interactant>
    <organismsDiffer>false</organismsDiffer>
    <experiments>29</experiments>
</comment>
<comment type="interaction">
    <interactant intactId="EBI-3989067">
        <id>P04585</id>
    </interactant>
    <interactant intactId="EBI-1801773">
        <id>O75475</id>
        <label>PSIP1</label>
    </interactant>
    <organismsDiffer>true</organismsDiffer>
    <experiments>21</experiments>
</comment>
<comment type="interaction">
    <interactant intactId="EBI-3989067">
        <id>P04585</id>
    </interactant>
    <interactant intactId="EBI-8540156">
        <id>P69718</id>
        <label>rev</label>
    </interactant>
    <organismsDiffer>true</organismsDiffer>
    <experiments>8</experiments>
</comment>
<comment type="interaction">
    <interactant intactId="EBI-2504097">
        <id>PRO_0000042440</id>
    </interactant>
    <interactant intactId="EBI-2504097">
        <id>PRO_0000042440</id>
        <label>gag-pol</label>
        <dbReference type="UniProtKB" id="P04585"/>
    </interactant>
    <organismsDiffer>false</organismsDiffer>
    <experiments>5</experiments>
</comment>
<comment type="interaction">
    <interactant intactId="EBI-9872653">
        <id>PRO_0000042447</id>
    </interactant>
    <interactant intactId="EBI-396343">
        <id>O00629</id>
        <label>KPNA4</label>
    </interactant>
    <organismsDiffer>true</organismsDiffer>
    <experiments>4</experiments>
</comment>
<comment type="interaction">
    <interactant intactId="EBI-9872653">
        <id>PRO_0000042447</id>
    </interactant>
    <interactant intactId="EBI-5279836">
        <id>O75475-1</id>
        <label>PSIP1</label>
    </interactant>
    <organismsDiffer>true</organismsDiffer>
    <experiments>2</experiments>
</comment>
<comment type="interaction">
    <interactant intactId="EBI-9872653">
        <id>PRO_0000042447</id>
    </interactant>
    <interactant intactId="EBI-358419">
        <id>Q12824</id>
        <label>SMARCB1</label>
    </interactant>
    <organismsDiffer>true</organismsDiffer>
    <experiments>3</experiments>
</comment>
<comment type="interaction">
    <interactant intactId="EBI-9872653">
        <id>PRO_0000042447</id>
    </interactant>
    <interactant intactId="EBI-1042571">
        <id>Q9Y5L0</id>
        <label>TNPO3</label>
    </interactant>
    <organismsDiffer>true</organismsDiffer>
    <experiments>6</experiments>
</comment>
<comment type="subcellular location">
    <molecule>Gag-Pol polyprotein</molecule>
    <subcellularLocation>
        <location>Host cell membrane</location>
        <topology evidence="4">Lipid-anchor</topology>
    </subcellularLocation>
    <subcellularLocation>
        <location evidence="4">Host endosome</location>
        <location evidence="4">Host multivesicular body</location>
    </subcellularLocation>
    <text evidence="4">These locations are linked to virus assembly sites. The main location is the cell membrane, but under some circumstances, late endosomal compartments can serve as productive sites for virion assembly.</text>
</comment>
<comment type="subcellular location">
    <molecule>Matrix protein p17</molecule>
    <subcellularLocation>
        <location>Virion membrane</location>
        <topology evidence="55">Lipid-anchor</topology>
    </subcellularLocation>
    <subcellularLocation>
        <location evidence="1">Host nucleus</location>
    </subcellularLocation>
    <subcellularLocation>
        <location evidence="1">Host cytoplasm</location>
    </subcellularLocation>
</comment>
<comment type="subcellular location">
    <molecule>Capsid protein p24</molecule>
    <subcellularLocation>
        <location evidence="55">Virion</location>
    </subcellularLocation>
</comment>
<comment type="subcellular location">
    <molecule>Nucleocapsid protein p7</molecule>
    <subcellularLocation>
        <location evidence="55">Virion</location>
    </subcellularLocation>
</comment>
<comment type="subcellular location">
    <molecule>Reverse transcriptase/ribonuclease H</molecule>
    <subcellularLocation>
        <location evidence="55">Virion</location>
    </subcellularLocation>
</comment>
<comment type="subcellular location">
    <molecule>Integrase</molecule>
    <subcellularLocation>
        <location evidence="55">Virion</location>
    </subcellularLocation>
    <subcellularLocation>
        <location evidence="31">Host nucleus</location>
    </subcellularLocation>
    <subcellularLocation>
        <location evidence="55">Host cytoplasm</location>
    </subcellularLocation>
    <text evidence="55">Nuclear at initial phase, cytoplasmic at assembly.</text>
</comment>
<comment type="alternative products">
    <event type="ribosomal frameshifting"/>
    <isoform>
        <id>P04585-1</id>
        <name>Gag-Pol polyprotein</name>
        <sequence type="displayed"/>
    </isoform>
    <isoform>
        <id>P04591-1</id>
        <name>Gag polyprotein</name>
        <sequence type="external"/>
    </isoform>
    <text>Translation results in the formation of the Gag polyprotein most of the time. Ribosomal frameshifting at the gag-pol genes boundary occurs at low frequency and produces the Gag-Pol polyprotein. This strategy of translation probably allows the virus to modulate the quantity of each viral protein. Maintenance of a correct Gag to Gag-Pol ratio is essential for RNA dimerization and viral infectivity.</text>
</comment>
<comment type="domain">
    <molecule>Reverse transcriptase/ribonuclease H</molecule>
    <text evidence="1">RT is structured in five subdomains: finger, palm, thumb, connection and RNase H. Within the palm subdomain, the 'primer grip' region is thought to be involved in the positioning of the primer terminus for accommodating the incoming nucleotide. The RNase H domain stabilizes the association of RT with primer-template (By similarity).</text>
</comment>
<comment type="domain">
    <molecule>Reverse transcriptase/ribonuclease H</molecule>
    <text>The tryptophan repeat motif is involved in RT p66/p51 dimerization.</text>
</comment>
<comment type="domain">
    <molecule>Integrase</molecule>
    <text>The core domain contains the D-x(n)-D-x(35)-E motif, named for the phylogenetically conserved glutamic acid and aspartic acid residues and the invariant 35 amino acid spacing between the second and third acidic residues. Each acidic residue of the D,D(35)E motif is independently essential for the 3'-processing and strand transfer activities of purified integrase protein.</text>
</comment>
<comment type="PTM">
    <molecule>Gag-Pol polyprotein</molecule>
    <text evidence="9 16 21 24">Specific enzymatic cleavages by the viral protease yield mature proteins. The protease is released by autocatalytic cleavage. The polyprotein is cleaved during and after budding, this process is termed maturation. Proteolytic cleavage of p66 RT removes the RNase H domain to yield the p51 RT subunit. Nucleocapsid protein p7 might be further cleaved after virus entry.</text>
</comment>
<comment type="PTM">
    <molecule>Matrix protein p17</molecule>
    <text evidence="29">Tyrosine phosphorylated presumably in the virion by a host kinase. Phosphorylation is apparently not a major regulator of membrane association (PubMed:17656588).</text>
</comment>
<comment type="PTM">
    <molecule>Capsid protein p24</molecule>
    <text evidence="4">Phosphorylated possibly by host MAPK1; this phosphorylation is necessary for Pin1-mediated virion uncoating.</text>
</comment>
<comment type="PTM">
    <molecule>Nucleocapsid protein p7</molecule>
    <text evidence="2">Methylated by host PRMT6, impairing its function by reducing RNA annealing and the initiation of reverse transcription.</text>
</comment>
<comment type="miscellaneous">
    <molecule>Reverse transcriptase/ribonuclease H</molecule>
    <text>Error-prone enzyme that lacks a proof-reading function. High mutations rate is a direct consequence of this characteristic. RT also displays frequent template switching leading to high recombination rate. Recombination mostly occurs between homologous regions of the two copackaged RNA genomes. If these two RNA molecules derive from different viral strains, reverse transcription will give rise to highly recombinated proviral DNAs.</text>
</comment>
<comment type="miscellaneous">
    <text>HIV-1 lineages are divided in three main groups, M (for Major), O (for Outlier), and N (for New, or Non-M, Non-O). The vast majority of strains found worldwide belong to the group M. Group O seems to be endemic to and largely confined to Cameroon and neighboring countries in West Central Africa, where these viruses represent a small minority of HIV-1 strains. The group N is represented by a limited number of isolates from Cameroonian persons. The group M is further subdivided in 9 clades or subtypes (A to D, F to H, J and K).</text>
</comment>
<comment type="miscellaneous">
    <text>Resistance to inhibitors associated with mutations are observed both in viral protease and in reverse transcriptase. Most of the time, single mutations confer only a modest reduction in drug susceptibility. Combination of several mutations is usually required to develop a high-level drug resistance. These mutations are predominantly found in clade B viruses and not in other genotypes. They are listed in this entry which is a representative of clade B.</text>
</comment>
<comment type="miscellaneous">
    <molecule>Isoform Gag-Pol polyprotein</molecule>
    <text>Produced by -1 ribosomal frameshifting.</text>
</comment>
<comment type="online information" name="HIV drug resistance mutations">
    <link uri="https://www.iasusa.org/hiv-drug-resistance/hiv-drug-resistance-mutations/"/>
</comment>
<comment type="online information" name="hivdb">
    <link uri="https://hivdb.stanford.edu"/>
    <text>HIV drug resistance database</text>
</comment>
<name>POL_HV1H2</name>
<organism>
    <name type="scientific">Human immunodeficiency virus type 1 group M subtype B (isolate HXB2)</name>
    <name type="common">HIV-1</name>
    <dbReference type="NCBI Taxonomy" id="11706"/>
    <lineage>
        <taxon>Viruses</taxon>
        <taxon>Riboviria</taxon>
        <taxon>Pararnavirae</taxon>
        <taxon>Artverviricota</taxon>
        <taxon>Revtraviricetes</taxon>
        <taxon>Ortervirales</taxon>
        <taxon>Retroviridae</taxon>
        <taxon>Orthoretrovirinae</taxon>
        <taxon>Lentivirus</taxon>
        <taxon>Human immunodeficiency virus type 1</taxon>
    </lineage>
</organism>
<organismHost>
    <name type="scientific">Homo sapiens</name>
    <name type="common">Human</name>
    <dbReference type="NCBI Taxonomy" id="9606"/>
</organismHost>
<keyword id="KW-0002">3D-structure</keyword>
<keyword id="KW-1073">Activation of host caspases by virus</keyword>
<keyword id="KW-0014">AIDS</keyword>
<keyword id="KW-0064">Aspartyl protease</keyword>
<keyword id="KW-0167">Capsid protein</keyword>
<keyword id="KW-0229">DNA integration</keyword>
<keyword id="KW-0233">DNA recombination</keyword>
<keyword id="KW-0238">DNA-binding</keyword>
<keyword id="KW-0239">DNA-directed DNA polymerase</keyword>
<keyword id="KW-0255">Endonuclease</keyword>
<keyword id="KW-1262">Eukaryotic host gene expression shutoff by virus</keyword>
<keyword id="KW-1193">Eukaryotic host translation shutoff by virus</keyword>
<keyword id="KW-1032">Host cell membrane</keyword>
<keyword id="KW-1035">Host cytoplasm</keyword>
<keyword id="KW-1039">Host endosome</keyword>
<keyword id="KW-1190">Host gene expression shutoff by virus</keyword>
<keyword id="KW-1043">Host membrane</keyword>
<keyword id="KW-1048">Host nucleus</keyword>
<keyword id="KW-0945">Host-virus interaction</keyword>
<keyword id="KW-0378">Hydrolase</keyword>
<keyword id="KW-0446">Lipid-binding</keyword>
<keyword id="KW-0449">Lipoprotein</keyword>
<keyword id="KW-0460">Magnesium</keyword>
<keyword id="KW-0472">Membrane</keyword>
<keyword id="KW-0479">Metal-binding</keyword>
<keyword id="KW-1119">Modulation of host cell apoptosis by virus</keyword>
<keyword id="KW-0511">Multifunctional enzyme</keyword>
<keyword id="KW-0519">Myristate</keyword>
<keyword id="KW-0540">Nuclease</keyword>
<keyword id="KW-0548">Nucleotidyltransferase</keyword>
<keyword id="KW-0597">Phosphoprotein</keyword>
<keyword id="KW-0645">Protease</keyword>
<keyword id="KW-1185">Reference proteome</keyword>
<keyword id="KW-0677">Repeat</keyword>
<keyword id="KW-0688">Ribosomal frameshifting</keyword>
<keyword id="KW-0694">RNA-binding</keyword>
<keyword id="KW-0695">RNA-directed DNA polymerase</keyword>
<keyword id="KW-0808">Transferase</keyword>
<keyword id="KW-1179">Viral genome integration</keyword>
<keyword id="KW-0543">Viral nucleoprotein</keyword>
<keyword id="KW-1163">Viral penetration into host nucleus</keyword>
<keyword id="KW-1188">Viral release from host cell</keyword>
<keyword id="KW-0946">Virion</keyword>
<keyword id="KW-0917">Virion maturation</keyword>
<keyword id="KW-1160">Virus entry into host cell</keyword>
<keyword id="KW-0862">Zinc</keyword>
<keyword id="KW-0863">Zinc-finger</keyword>
<reference key="1">
    <citation type="journal article" date="1987" name="AIDS Res. Hum. Retroviruses">
        <title>Complete nucleotide sequences of functional clones of the AIDS virus.</title>
        <authorList>
            <person name="Ratner L."/>
            <person name="Fisher A."/>
            <person name="Jagodzinski L.L."/>
            <person name="Mitsuya H."/>
            <person name="Liou R.-S."/>
            <person name="Gallo R.C."/>
            <person name="Wong-Staal F."/>
        </authorList>
    </citation>
    <scope>NUCLEOTIDE SEQUENCE [GENOMIC RNA]</scope>
</reference>
<reference key="2">
    <citation type="submission" date="1996-06" db="EMBL/GenBank/DDBJ databases">
        <authorList>
            <person name="Ogata N."/>
            <person name="Alter H.J."/>
            <person name="Miller R.H."/>
            <person name="Purcell R.H."/>
        </authorList>
    </citation>
    <scope>SEQUENCE REVISION</scope>
</reference>
<reference key="3">
    <citation type="submission" date="1999-03" db="EMBL/GenBank/DDBJ databases">
        <authorList>
            <person name="Chappey C."/>
        </authorList>
    </citation>
    <scope>NUCLEOTIDE SEQUENCE [GENOMIC RNA]</scope>
</reference>
<reference key="4">
    <citation type="journal article" date="1990" name="Proc. Natl. Acad. Sci. U.S.A.">
        <title>Integration of human immunodeficiency virus type 1 DNA in vitro.</title>
        <authorList>
            <person name="Farnet C.M."/>
            <person name="Haseltine W.A."/>
        </authorList>
    </citation>
    <scope>FUNCTION (INTEGRASE)</scope>
</reference>
<reference key="5">
    <citation type="journal article" date="1990" name="J. Biol. Chem.">
        <title>Comparison of the crystal structures and intersubunit interactions of human immunodeficiency and Rous sarcoma virus proteases.</title>
        <authorList>
            <person name="Weber I.T."/>
        </authorList>
    </citation>
    <scope>DIMERIZATION (PROTEASE)</scope>
</reference>
<reference key="6">
    <citation type="journal article" date="1993" name="J. Biol. Chem.">
        <title>Site-directed mutagenesis of HIV-1 integrase demonstrates differential effects on integrase functions in vitro.</title>
        <authorList>
            <person name="Leavitt A.D."/>
            <person name="Shiue L."/>
            <person name="Varmus H.E."/>
        </authorList>
    </citation>
    <scope>MUTAGENESIS OF HIS-1159; HIS-1163; GLN-1200; ASP-1211; SER-1228; ASP-1263; GLU-1299; ARG-1346 AND TRP-1382</scope>
</reference>
<reference key="7">
    <citation type="journal article" date="1994" name="J. Virol.">
        <title>Human immunodeficiency virus type 1 integrase: effect on viral replication of mutations at highly conserved residues.</title>
        <authorList>
            <person name="Cannon P.M."/>
            <person name="Wilson W."/>
            <person name="Byles E."/>
            <person name="Kingsman S.M."/>
            <person name="Kingsman A.J."/>
        </authorList>
    </citation>
    <scope>MUTAGENESIS OF CYS-1187; CYS-1190; TRP-1208; ASP-1211; THR-1213; VAL-1222; SER-1228; THR-1262; ASP-1263; GLY-1270; ILE-1282; VAL-1298; GLU-1299; LYS-1306; ALA-1326 AND TRP-1382</scope>
    <source>
        <strain>Isolate WI3</strain>
    </source>
</reference>
<reference key="8">
    <citation type="journal article" date="1993" name="Cell">
        <title>Human immunodeficiency virus type 1 Gag protein binds to cyclophilins A and B.</title>
        <authorList>
            <person name="Luban J."/>
            <person name="Bossolt K.L."/>
            <person name="Franke E.K."/>
            <person name="Kalpana G.V."/>
            <person name="Goff S.P."/>
        </authorList>
    </citation>
    <scope>INTERACTION OF CAPSID WITH HUMAN PPIA/CYPA</scope>
</reference>
<reference key="9">
    <citation type="journal article" date="1994" name="Science">
        <title>Binding and stimulation of HIV-1 integrase by a human homolog of yeast transcription factor SNF5.</title>
        <authorList>
            <person name="Kalpana G.V."/>
            <person name="Marmon S."/>
            <person name="Wang W."/>
            <person name="Crabtree G.R."/>
            <person name="Goff S.P."/>
        </authorList>
    </citation>
    <scope>INTERACTION WITH HUMAN SMARCB1/INI1 (INTEGRASE)</scope>
</reference>
<reference key="10">
    <citation type="journal article" date="1995" name="FEBS Lett.">
        <title>Cleavage of recombinant and cell derived human immunodeficiency virus 1 (HIV-1) Nef protein by HIV-1 protease.</title>
        <authorList>
            <person name="Gaedigk-Nitschko K."/>
            <person name="Schoen A."/>
            <person name="Wachinger G."/>
            <person name="Erfle V."/>
            <person name="Kohleisen B."/>
        </authorList>
    </citation>
    <scope>FUNCTION (PROTEASE)</scope>
</reference>
<reference key="11">
    <citation type="journal article" date="1996" name="J. Virol.">
        <title>Cyclophilin A is required for an early step in the life cycle of human immunodeficiency virus type 1 before the initiation of reverse transcription.</title>
        <authorList>
            <person name="Braaten D."/>
            <person name="Franke E.K."/>
            <person name="Luban J."/>
        </authorList>
    </citation>
    <scope>FUNCTION (CAPSID PROTEIN P24)</scope>
</reference>
<reference key="12">
    <citation type="journal article" date="1997" name="J. Mol. Biol.">
        <title>Molecular recognition in the HIV-1 capsid/cyclophilin A complex.</title>
        <authorList>
            <person name="Yoo S."/>
            <person name="Myszka D.G."/>
            <person name="Yeh C."/>
            <person name="McMurray M."/>
            <person name="Hill C.P."/>
            <person name="Sundquist W.I."/>
        </authorList>
    </citation>
    <scope>MUTAGENESIS OF PRO-217; VAL-218; HIS-219; ALA-220; GLY-221; PRO-222; ILE-223; ALA-224 AND PRO-225</scope>
    <scope>INTERACTION WITH HUMAN CYPA</scope>
</reference>
<reference key="13">
    <citation type="journal article" date="1998" name="J. Virol.">
        <title>Mutations in the human immunodeficiency virus type 1 integrase D,D(35)E motif do not eliminate provirus formation.</title>
        <authorList>
            <person name="Gaur M."/>
            <person name="Leavitt A.D."/>
        </authorList>
    </citation>
    <scope>MUTAGENESIS OF ASP-1211; ASP-1263 AND GLU-1299</scope>
</reference>
<reference key="14">
    <citation type="journal article" date="1999" name="Nature">
        <title>A novel nuclear export activity in HIV-1 matrix protein required for viral replication.</title>
        <authorList>
            <person name="Dupont S."/>
            <person name="Sharova N."/>
            <person name="DeHoratius C."/>
            <person name="Virbasius C.M."/>
            <person name="Zhu X."/>
            <person name="Bukrinskaya A.G."/>
            <person name="Stevenson M."/>
            <person name="Green M.R."/>
        </authorList>
    </citation>
    <scope>MUTAGENESIS OF LYS-18; ARG-22 AND LYS-27</scope>
</reference>
<reference key="15">
    <citation type="journal article" date="1999" name="J. Biomed. Sci.">
        <title>Organization of HIV-1 pol is critical for Pol polyprotein processing.</title>
        <authorList>
            <person name="Chang Y.Y."/>
            <person name="Yu S.L."/>
            <person name="Syu W.J."/>
        </authorList>
    </citation>
    <scope>PROTEOLYTIC PROCESSING OF POLYPROTEIN</scope>
</reference>
<reference key="16">
    <citation type="journal article" date="1999" name="J. Mol. Biol.">
        <title>Recombination during reverse transcription: an evaluation of the role of the nucleocapsid protein.</title>
        <authorList>
            <person name="Negroni M."/>
            <person name="Buc H."/>
        </authorList>
    </citation>
    <scope>FUNCTION (NUCLEOCAPSID PROTEIN P7)</scope>
</reference>
<reference key="17">
    <citation type="journal article" date="2000" name="J. Virol.">
        <title>Roles of Pr55(gag) and NCp7 in tRNA(3)(Lys) genomic placement and the initiation step of reverse transcription in human immunodeficiency virus type 1.</title>
        <authorList>
            <person name="Cen S."/>
            <person name="Khorchid A."/>
            <person name="Gabor J."/>
            <person name="Rong L."/>
            <person name="Wainberg M.A."/>
            <person name="Kleiman L."/>
        </authorList>
    </citation>
    <scope>FUNCTION (NUCLEOCAPSID PROTEIN P7)</scope>
</reference>
<reference key="18">
    <citation type="journal article" date="2001" name="J. Virol.">
        <title>Maintenance of the Gag/Gag-Pol ratio is important for human immunodeficiency virus type 1 RNA dimerization and viral infectivity.</title>
        <authorList>
            <person name="Shehu-Xhilaga M."/>
            <person name="Crowe S.M."/>
            <person name="Mak J."/>
        </authorList>
    </citation>
    <scope>GAG/GAG-POL RATIO</scope>
</reference>
<reference key="19">
    <citation type="journal article" date="2002" name="Biochemistry">
        <title>Mutations in the ribonuclease H active site of HIV-RT reveal a role for this site in stabilizing enzyme-primer-template binding.</title>
        <authorList>
            <person name="Cristofaro J.V."/>
            <person name="Rausch J.W."/>
            <person name="Le Grice S.F."/>
            <person name="DeStefano J.J."/>
        </authorList>
    </citation>
    <scope>ACTIVE SITES (REVERSE TRANSCRIPTASE/RIBONUCLEASE H)</scope>
    <scope>MUTAGENESIS OF GLU-1065 AND ASP-1136</scope>
</reference>
<reference key="20">
    <citation type="journal article" date="2002" name="Proc. Natl. Acad. Sci. U.S.A.">
        <title>Catalysis of cis/trans isomerization in native HIV-1 capsid by human cyclophilin A.</title>
        <authorList>
            <person name="Bosco D.A."/>
            <person name="Eisenmesser E.Z."/>
            <person name="Pochapsky S."/>
            <person name="Sundquist W.I."/>
            <person name="Kern D."/>
        </authorList>
    </citation>
    <scope>CIS/TRANS ISOMERIZATION (CAPSID PROTEIN P24)</scope>
</reference>
<reference key="21">
    <citation type="journal article" date="2002" name="J. Virol.">
        <title>Subtle alterations of the native zinc finger structures have dramatic effects on the nucleic acid chaperone activity of human immunodeficiency virus type 1 nucleocapsid protein.</title>
        <authorList>
            <person name="Guo J."/>
            <person name="Wu T."/>
            <person name="Kane B.F."/>
            <person name="Johnson D.G."/>
            <person name="Henderson L.E."/>
            <person name="Gorelick R.J."/>
            <person name="Levin J.G."/>
        </authorList>
    </citation>
    <scope>MUTAGENESIS OF HIS-400; CYS-405; HIS-421 AND CYS-426</scope>
</reference>
<reference key="22">
    <citation type="journal article" date="2003" name="J. Virol.">
        <title>The dimer interfaces of protease and extra-protease domains influence the activation of protease and the specificity of GagPol cleavage.</title>
        <authorList>
            <person name="Pettit S.C."/>
            <person name="Gulnik S."/>
            <person name="Everitt L."/>
            <person name="Kaplan A.H."/>
        </authorList>
    </citation>
    <scope>PROTEOLYTIC PROCESSING (GAG-POL POLYPROTEIN)</scope>
</reference>
<reference key="23">
    <citation type="journal article" date="2003" name="EMBO J.">
        <title>Structural organization of authentic, mature HIV-1 virions and cores.</title>
        <authorList>
            <person name="Briggs J.A."/>
            <person name="Wilk T."/>
            <person name="Welker R."/>
            <person name="Krausslich H.G."/>
            <person name="Fuller S.D."/>
        </authorList>
    </citation>
    <scope>QUATERNARY STRUCTURE (CAPSID PROTEIN P24)</scope>
</reference>
<reference key="24">
    <citation type="journal article" date="2003" name="FEBS Lett.">
        <title>Cleavage of eIF4G by HIV-1 protease: effects on translation.</title>
        <authorList>
            <person name="Perales C."/>
            <person name="Carrasco L."/>
            <person name="Ventoso I."/>
        </authorList>
    </citation>
    <scope>FUNCTION (PROTEASE)</scope>
</reference>
<reference key="25">
    <citation type="journal article" date="2004" name="Biochemistry">
        <title>In vitro processing of HIV-1 nucleocapsid protein by the viral proteinase: effects of amino acid substitutions at the scissile bond in the proximal zinc finger sequence.</title>
        <authorList>
            <person name="Tozser J."/>
            <person name="Shulenin S."/>
            <person name="Louis J.M."/>
            <person name="Copeland T.D."/>
            <person name="Oroszlan S."/>
        </authorList>
    </citation>
    <scope>CLEAVAGE (NUCLEOCAPSID PROTEIN P7)</scope>
</reference>
<reference key="26">
    <citation type="journal article" date="2004" name="Int. J. Biochem. Cell Biol.">
        <title>Proteolytic processing of an HIV-1 pol polyprotein precursor: insights into the mechanism of reverse transcriptase p66/p51 heterodimer formation.</title>
        <authorList>
            <person name="Sluis-Cremer N."/>
            <person name="Arion D."/>
            <person name="Abram M.E."/>
            <person name="Parniak M.A."/>
        </authorList>
    </citation>
    <scope>SUBUNIT (REVERSE TRANSCRIPTASE/RIBONUCLEASE H)</scope>
    <scope>MUTAGENESIS OF 488-PHE--GLN-490 AND LEU-821</scope>
    <scope>PROTEOLYTIC CLEAVAGE (GAG-POL POLYPROTEIN)</scope>
</reference>
<reference key="27">
    <citation type="journal article" date="2005" name="J. Biol. Chem.">
        <title>Evidence that HIV-1 reverse transcriptase employs the DNA 3' end directed primary/secondary RNase H cleavage mechanism during synthesis and strand transfer.</title>
        <authorList>
            <person name="Purohit V."/>
            <person name="Balakrishnan M."/>
            <person name="Kim B."/>
            <person name="Bambara R.A."/>
        </authorList>
    </citation>
    <scope>FUNCTION (REVERSE TRANSCRIPTASE/RIBONUCLEASE H)</scope>
</reference>
<reference key="28">
    <citation type="journal article" date="2006" name="Virology">
        <title>Characterization of human immunodeficiency virus type 1 (HIV-1) containing mutations in the nucleocapsid protein at a putative HIV-1 protease cleavage site.</title>
        <authorList>
            <person name="Thomas J.A."/>
            <person name="Shulenin S."/>
            <person name="Coren L.V."/>
            <person name="Bosche W.J."/>
            <person name="Gagliardi T.D."/>
            <person name="Gorelick R.J."/>
            <person name="Oroszlan S."/>
        </authorList>
    </citation>
    <scope>MUTAGENESIS OF ASN-394</scope>
</reference>
<reference key="29">
    <citation type="journal article" date="2007" name="J. Mol. Biol.">
        <title>Dissecting the protein-RNA and RNA-RNA interactions in the nucleocapsid-mediated dimerization and isomerization of HIV-1 stemloop 1.</title>
        <authorList>
            <person name="Hagan N.A."/>
            <person name="Fabris D."/>
        </authorList>
    </citation>
    <scope>FUNCTION (NUCLEOCAPSID PROTEIN P7)</scope>
</reference>
<reference key="30">
    <citation type="journal article" date="2007" name="J. Virol.">
        <title>Human immunodeficiency virus type 1 matrix protein assembles on membranes as a hexamer.</title>
        <authorList>
            <person name="Alfadhli A."/>
            <person name="Huseby D."/>
            <person name="Kapit E."/>
            <person name="Colman D."/>
            <person name="Barklis E."/>
        </authorList>
    </citation>
    <scope>SUBUNIT (MATRIX PROTEIN P17)</scope>
</reference>
<reference key="31">
    <citation type="journal article" date="2007" name="Protein Sci.">
        <title>Mutations that mimic phosphorylation of the HIV-1 matrix protein do not perturb the myristyl switch.</title>
        <authorList>
            <person name="Saad J.S."/>
            <person name="Kim A."/>
            <person name="Ghanam R.H."/>
            <person name="Dalton A.K."/>
            <person name="Vogt V.M."/>
            <person name="Wu Z."/>
            <person name="Lu W."/>
            <person name="Summers M.F."/>
        </authorList>
    </citation>
    <scope>MUTAGENESIS OF SER-6; SER-9; SER-67 AND SER-72</scope>
    <scope>POST-TRANSCRIPTIONAL MODIFICATION</scope>
</reference>
<reference key="32">
    <citation type="journal article" date="2008" name="Curr. Biol.">
        <title>Transportin-SR2 imports HIV into the nucleus.</title>
        <authorList>
            <person name="Christ F."/>
            <person name="Thys W."/>
            <person name="De Rijck J."/>
            <person name="Gijsbers R."/>
            <person name="Albanese A."/>
            <person name="Arosio D."/>
            <person name="Emiliani S."/>
            <person name="Rain J.C."/>
            <person name="Benarous R."/>
            <person name="Cereseto A."/>
            <person name="Debyser Z."/>
        </authorList>
    </citation>
    <scope>SUBCELLULAR LOCATION (INTEGRASE)</scope>
</reference>
<reference key="33">
    <citation type="journal article" date="2008" name="Virology">
        <title>Mapping of nucleocapsid residues important for HIV-1 genomic RNA dimerization and packaging.</title>
        <authorList>
            <person name="Kafaie J."/>
            <person name="Song R."/>
            <person name="Abrahamyan L."/>
            <person name="Mouland A.J."/>
            <person name="Laughrea M."/>
        </authorList>
    </citation>
    <scope>FUNCTION (NUCLEOCAPSID PROTEIN P7)</scope>
</reference>
<reference key="34">
    <citation type="journal article" date="2009" name="Cell">
        <title>Structural convergence between Cryo-EM and NMR reveals intersubunit interactions critical for HIV-1 capsid function.</title>
        <authorList>
            <person name="Byeon I.J."/>
            <person name="Meng X."/>
            <person name="Jung J."/>
            <person name="Zhao G."/>
            <person name="Yang R."/>
            <person name="Ahn J."/>
            <person name="Shi J."/>
            <person name="Concel J."/>
            <person name="Aiken C."/>
            <person name="Zhang P."/>
            <person name="Gronenborn A.M."/>
        </authorList>
    </citation>
    <scope>SUBUNIT (CAPSID PROTEIN P24)</scope>
    <scope>FUNCTION (CAPSID PROTEIN P24)</scope>
</reference>
<reference key="35">
    <citation type="journal article" date="2009" name="PLoS ONE">
        <title>HIV- 1 protease inhibits Cap- and poly(A)-dependent translation upon eIF4GI and PABP cleavage.</title>
        <authorList>
            <person name="Castello A."/>
            <person name="Franco D."/>
            <person name="Moral-Lopez P."/>
            <person name="Berlanga J.J."/>
            <person name="Alvarez E."/>
            <person name="Wimmer E."/>
            <person name="Carrasco L."/>
        </authorList>
    </citation>
    <scope>FUNCTION (PROTEASE)</scope>
</reference>
<reference key="36">
    <citation type="journal article" date="2009" name="Virology">
        <title>HIV-1 matrix organizes as a hexamer of trimers on membranes containing phosphatidylinositol-(4,5)-bisphosphate.</title>
        <authorList>
            <person name="Alfadhli A."/>
            <person name="Barklis R.L."/>
            <person name="Barklis E."/>
        </authorList>
    </citation>
    <scope>SUBUNIT (MATRIX PROTEIN P17)</scope>
</reference>
<reference key="37">
    <citation type="journal article" date="2010" name="J. Virol.">
        <title>PDZD8 is a novel Gag-interacting factor that promotes retroviral infection.</title>
        <authorList>
            <person name="Henning M.S."/>
            <person name="Morham S.G."/>
            <person name="Goff S.P."/>
            <person name="Naghavi M.H."/>
        </authorList>
    </citation>
    <scope>INTERACTION OF GAG POLYPROTEIN WITH PDZD8</scope>
</reference>
<reference key="38">
    <citation type="journal article" date="2010" name="J. Virol.">
        <title>Importin alpha3 interacts with HIV-1 integrase and contributes to HIV-1 nuclear import and replication.</title>
        <authorList>
            <person name="Ao Z."/>
            <person name="Danappa Jayappa K."/>
            <person name="Wang B."/>
            <person name="Zheng Y."/>
            <person name="Kung S."/>
            <person name="Rassart E."/>
            <person name="Depping R."/>
            <person name="Kohler M."/>
            <person name="Cohen E.A."/>
            <person name="Yao X."/>
        </authorList>
    </citation>
    <scope>FUNCTION (INTEGRASE)</scope>
    <scope>INTERACTION OF INTEGRASE WITH HUMAN KPNA3</scope>
</reference>
<reference key="39">
    <citation type="journal article" date="2010" name="Virology">
        <title>Formation of immature and mature genomic RNA dimers in wild-type and protease-inactive HIV-1: differential roles of the Gag polyprotein, nucleocapsid proteins NCp15, NCp9, NCp7, and the dimerization initiation site.</title>
        <authorList>
            <person name="Jalalirad M."/>
            <person name="Laughrea M."/>
        </authorList>
    </citation>
    <scope>FUNCTION (NUCLEOCAPSID PROTEIN P7)</scope>
</reference>
<reference key="40">
    <citation type="journal article" date="2013" name="J. Virol.">
        <title>Retrovirus restriction by TRIM5 proteins requires recognition of only a small fraction of viral capsid subunits.</title>
        <authorList>
            <person name="Shi J."/>
            <person name="Friedman D.B."/>
            <person name="Aiken C."/>
        </authorList>
    </citation>
    <scope>INTERACTION WITH MONKEY TRIM5</scope>
</reference>
<reference key="41">
    <citation type="journal article" date="2013" name="Protein J.">
        <title>F99 is critical for dimerization and activation of South African HIV-1 subtype C protease.</title>
        <authorList>
            <person name="Naicker P."/>
            <person name="Seele P."/>
            <person name="Dirr H.W."/>
            <person name="Sayed Y."/>
        </authorList>
    </citation>
    <scope>DIMERIZATION (PROTEASE)</scope>
</reference>
<reference key="42">
    <citation type="journal article" date="2014" name="J. Virol.">
        <title>Contribution of PDZD8 to stabilization of the human immunodeficiency virus type 1 capsid.</title>
        <authorList>
            <person name="Guth C.A."/>
            <person name="Sodroski J."/>
        </authorList>
    </citation>
    <scope>INTERACTION OF CAPSID-NUCLEOCAPSID COMPLEX WITH HUMAN PDZD8</scope>
</reference>
<reference key="43">
    <citation type="journal article" date="2014" name="J. Biol. Chem.">
        <title>Solution structure of calmodulin bound to the binding domain of the HIV-1 matrix protein.</title>
        <authorList>
            <person name="Vlach J."/>
            <person name="Samal A.B."/>
            <person name="Saad J.S."/>
        </authorList>
    </citation>
    <scope>INTERACTION OF MATRIX PROTEIN P17 WITH RAT CALM1</scope>
</reference>
<reference key="44">
    <citation type="journal article" date="2020" name="PLoS Pathog.">
        <title>HIV protease cleaves the antiviral m6A reader protein YTHDF3 in the viral particle.</title>
        <authorList>
            <person name="Jurczyszak D."/>
            <person name="Zhang W."/>
            <person name="Terry S.N."/>
            <person name="Kehrer T."/>
            <person name="Bermudez Gonzalez M.C."/>
            <person name="McGregor E."/>
            <person name="Mulder L.C.F."/>
            <person name="Eckwahl M.J."/>
            <person name="Pan T."/>
            <person name="Simon V."/>
        </authorList>
    </citation>
    <scope>FUNCTION (PROTEASE)</scope>
    <scope>CATALYTIC ACTIVITY (PROTEASE)</scope>
</reference>
<reference key="45">
    <citation type="journal article" date="2021" name="Science">
        <title>CARD8 is an inflammasome sensor for HIV-1 protease activity.</title>
        <authorList>
            <person name="Wang Q."/>
            <person name="Gao H."/>
            <person name="Clark K.M."/>
            <person name="Mugisha C.S."/>
            <person name="Davis K."/>
            <person name="Tang J.P."/>
            <person name="Harlan G.H."/>
            <person name="DeSelm C.J."/>
            <person name="Presti R.M."/>
            <person name="Kutluay S.B."/>
            <person name="Shan L."/>
        </authorList>
    </citation>
    <scope>FUNCTION (PROTEASE)</scope>
    <scope>CATALYTIC ACTIVITY (PROTEASE)</scope>
    <scope>ACTIVE SITE (PROTEASE)</scope>
    <scope>MUTAGENESIS OF ASP-513</scope>
</reference>
<reference key="46">
    <citation type="journal article" date="1996" name="Curr. Top. Microbiol. Immunol.">
        <title>Proteolytic processing and particle maturation.</title>
        <authorList>
            <person name="Vogt V.M."/>
        </authorList>
    </citation>
    <scope>REVIEW</scope>
</reference>
<reference key="47">
    <citation type="journal article" date="1999" name="J. Mol. Biol.">
        <title>Structural biology of HIV.</title>
        <authorList>
            <person name="Turner B.G."/>
            <person name="Summers M.F."/>
        </authorList>
    </citation>
    <scope>REVIEW</scope>
</reference>
<reference key="48">
    <citation type="journal article" date="2001" name="Annu. Rev. Genet.">
        <title>Mechanisms of retroviral recombination.</title>
        <authorList>
            <person name="Negroni M."/>
            <person name="Buc H."/>
        </authorList>
    </citation>
    <scope>REVIEW</scope>
</reference>
<reference key="49">
    <citation type="journal article" date="2002" name="Genome Biol.">
        <title>Retroviral proteases.</title>
        <authorList>
            <person name="Dunn B.M."/>
            <person name="Goodenow M.M."/>
            <person name="Gustchina A."/>
            <person name="Wlodawer A."/>
        </authorList>
    </citation>
    <scope>REVIEW</scope>
</reference>
<reference key="50">
    <citation type="journal article" date="2003" name="Biochim. Biophys. Acta">
        <title>Role of HIV-1 Gag domains in viral assembly.</title>
        <authorList>
            <person name="Scarlata S."/>
            <person name="Carter C."/>
        </authorList>
    </citation>
    <scope>REVIEW</scope>
</reference>
<reference key="51">
    <citation type="journal article" date="2004" name="Front. Biosci.">
        <title>Human cell proteins and human immunodeficiency virus DNA integration.</title>
        <authorList>
            <person name="Turlure F."/>
            <person name="Devroe E."/>
            <person name="Silver P.A."/>
            <person name="Engelman A."/>
        </authorList>
    </citation>
    <scope>REVIEW</scope>
</reference>
<reference key="52">
    <citation type="journal article" date="2006" name="Curr. Opin. Microbiol.">
        <title>Cyclophilin, TRIM5, and innate immunity to HIV-1.</title>
        <authorList>
            <person name="Sokolskaja E."/>
            <person name="Luban J."/>
        </authorList>
    </citation>
    <scope>REVIEW</scope>
</reference>
<reference key="53">
    <citation type="journal article" date="2011" name="J. Mol. Biol.">
        <title>Molecular determinants that regulate plasma membrane association of HIV-1 Gag.</title>
        <authorList>
            <person name="Chukkapalli V."/>
            <person name="Ono A."/>
        </authorList>
    </citation>
    <scope>REVIEW</scope>
</reference>
<reference key="54">
    <citation type="journal article" date="2014" name="Virus Res.">
        <title>Retrospective on the all-in-one retroviral nucleocapsid protein.</title>
        <authorList>
            <person name="Darlix J.L."/>
            <person name="de Rocquigny H."/>
            <person name="Mauffret O."/>
            <person name="Mely Y."/>
        </authorList>
    </citation>
    <scope>REVIEW</scope>
</reference>
<reference key="55">
    <citation type="journal article" date="2014" name="Trends Microbiol.">
        <title>The role of matrix in HIV-1 envelope glycoprotein incorporation.</title>
        <authorList>
            <person name="Tedbury P.R."/>
            <person name="Freed E.O."/>
        </authorList>
    </citation>
    <scope>REVIEW</scope>
</reference>
<reference key="56">
    <citation type="journal article" date="1989" name="Nature">
        <title>X-ray analysis of HIV-1 proteinase at 2.7-A resolution confirms structural homology among retroviral enzymes.</title>
        <authorList>
            <person name="Lapatto R."/>
            <person name="Blundell T."/>
            <person name="Hemmings A."/>
            <person name="Overington J."/>
            <person name="Wilderspin A."/>
            <person name="Wood S."/>
            <person name="Merson J.R."/>
            <person name="Whittle P.J."/>
            <person name="Danley D.E."/>
            <person name="Geoghegan K.F."/>
            <person name="Hawrylik S.J."/>
            <person name="Lee S.E."/>
            <person name="Scheld K.G."/>
            <person name="Hobart P.M."/>
        </authorList>
    </citation>
    <scope>X-RAY CRYSTALLOGRAPHY (2.7 ANGSTROMS) OF 489-587</scope>
</reference>
<reference key="57">
    <citation type="journal article" date="1991" name="J. Med. Chem.">
        <title>Novel binding mode of highly potent HIV-proteinase inhibitors incorporating the (R)-hydroxyethylamine isostere.</title>
        <authorList>
            <person name="Krohn A."/>
            <person name="Redshaw S."/>
            <person name="Ritchie J.C."/>
            <person name="Graves B.J."/>
            <person name="Hatada M.H."/>
        </authorList>
    </citation>
    <scope>X-RAY CRYSTALLOGRAPHY (2.3 ANGSTROMS) OF 489-587 IN COMPLEX WITH THE INHIBITOR RO 32-8959</scope>
</reference>
<reference key="58">
    <citation type="journal article" date="1991" name="FEBS Lett.">
        <title>Structural characterization of a 39-residue synthetic peptide containing the two zinc binding domains from the HIV-1 p7 nucleocapsid protein by CD and NMR spectroscopy.</title>
        <authorList>
            <person name="Omichinski J.G."/>
            <person name="Clore G.M."/>
            <person name="Sakaguchi K."/>
            <person name="Appella E."/>
            <person name="Gronenborn A.M."/>
        </authorList>
    </citation>
    <scope>STRUCTURE BY NMR OF 390-406</scope>
</reference>
<reference key="59">
    <citation type="journal article" date="1992" name="Protein Sci.">
        <title>Crystal structure of a complex of HIV-1 protease with a dihydroxyethylene-containing inhibitor: comparisons with molecular modeling.</title>
        <authorList>
            <person name="Thanki N."/>
            <person name="Rao J.K."/>
            <person name="Foundling S.I."/>
            <person name="Howe W.J."/>
            <person name="Moon J.B."/>
            <person name="Hui J.O."/>
            <person name="Tomasselli A.G."/>
            <person name="Heinrikson R.L."/>
            <person name="Thaisrivongs S."/>
            <person name="Wlodawer A."/>
        </authorList>
    </citation>
    <scope>X-RAY CRYSTALLOGRAPHY (2.0 ANGSTROMS) OF 489-587 IN COMPLEX WITH A DIHYDROXYETHYLENE-CONTAINING INHIBITOR</scope>
</reference>
<reference key="60">
    <citation type="journal article" date="1994" name="J. Mol. Biol.">
        <title>Conformational behaviour of the active and inactive forms of the nucleocapsid NCp7 of HIV-1 studied by 1H NMR.</title>
        <authorList>
            <person name="Morellet N."/>
            <person name="de Rocquigny H."/>
            <person name="Mely Y."/>
            <person name="Jullian N."/>
            <person name="Demene H."/>
            <person name="Ottmann M."/>
            <person name="Gerard D."/>
            <person name="Darlix J.L."/>
            <person name="Fournie-Zaluski M.-C."/>
            <person name="Roques B.P."/>
        </authorList>
    </citation>
    <scope>STRUCTURE BY NMR OF 390-430</scope>
</reference>
<reference key="61">
    <citation type="journal article" date="1994" name="Science">
        <title>Rational design of potent, bioavailable, nonpeptide cyclic ureas as HIV protease inhibitors.</title>
        <authorList>
            <person name="Lam P.Y.S."/>
            <person name="Jadhav P.K."/>
            <person name="Eyermann C.J."/>
            <person name="Hodge C.N."/>
            <person name="Ru Y."/>
            <person name="Bacheler L.T."/>
            <person name="Meek J.L."/>
            <person name="Otto M.J."/>
            <person name="Rayner M.M."/>
            <person name="Wong Y.N."/>
            <person name="Chang C.-H."/>
            <person name="Weber P.C."/>
            <person name="Jackson D.A."/>
            <person name="Sharpe T.R."/>
            <person name="Erickson-Viitanen S."/>
        </authorList>
    </citation>
    <scope>X-RAY CRYSTALLOGRAPHY (1.8 ANGSTROMS) OF 489-587 IN COMPLEX WITH THE INHIBITOR XK263</scope>
</reference>
<reference key="62">
    <citation type="journal article" date="1994" name="J. Mol. Biol.">
        <title>Crystals of HIV-1 reverse transcriptase diffracting to 2.2 A resolution.</title>
        <authorList>
            <person name="Stammers D.K."/>
            <person name="Somers D.O."/>
            <person name="Ross C.K."/>
            <person name="Kirby I."/>
            <person name="Ray P.H."/>
            <person name="Wilson J.E."/>
            <person name="Norman M."/>
            <person name="Ren J.S."/>
            <person name="Esnouf R.M."/>
            <person name="Garman E.F."/>
            <person name="Jones E.Y."/>
            <person name="Stuart D.I."/>
        </authorList>
    </citation>
    <scope>X-RAY CRYSTALLOGRAPHY (2.2 ANGSTROMS) OF 588-1147</scope>
</reference>
<reference key="63">
    <citation type="journal article" date="1995" name="Biochem. Soc. Trans.">
        <title>Refined solution structure of p17, the HIV matrix protein.</title>
        <authorList>
            <person name="Matthews S."/>
            <person name="Barlow P."/>
            <person name="Clark N."/>
            <person name="Kingsman S."/>
            <person name="Kingsman A."/>
            <person name="Campbell I."/>
        </authorList>
    </citation>
    <scope>STRUCTURE BY NMR OF 1-132</scope>
</reference>
<reference key="64">
    <citation type="journal article" date="1995" name="Structure">
        <title>The structure of HIV-1 reverse transcriptase complexed with 9-chloro-TIBO: lessons for inhibitor design.</title>
        <authorList>
            <person name="Ren J.S."/>
            <person name="Esnouf R.M."/>
            <person name="Hopkins A.L."/>
            <person name="Ross C.K."/>
            <person name="Jones E.Y."/>
            <person name="Stammers D.K."/>
            <person name="Stuart D.I."/>
        </authorList>
    </citation>
    <scope>X-RAY CRYSTALLOGRAPHY (2.6 ANGSTROMS) OF 588-1027</scope>
</reference>
<reference key="65">
    <citation type="journal article" date="1995" name="Nat. Struct. Biol.">
        <title>Mechanism of inhibition of HIV-1 reverse transcriptase by non-nucleoside inhibitors.</title>
        <authorList>
            <person name="Esnouf R.M."/>
            <person name="Ren J.S."/>
            <person name="Ross C.K."/>
            <person name="Jones E.Y."/>
            <person name="Stammers D.K."/>
            <person name="Stuart D.I."/>
        </authorList>
    </citation>
    <scope>X-RAY CRYSTALLOGRAPHY (2.35 ANGSTROMS) OF 588-1147</scope>
</reference>
<reference key="66">
    <citation type="journal article" date="1996" name="J. Med. Chem.">
        <title>Complexes of HIV-1 reverse transcriptase with inhibitors of the HEPT series reveal conformational changes relevant to the design of potent non-nucleoside inhibitors.</title>
        <authorList>
            <person name="Hopkins A.L."/>
            <person name="Ren J.S."/>
            <person name="Esnouf R.M."/>
            <person name="Willcox B.E."/>
            <person name="Jones E.Y."/>
            <person name="Ross C.K."/>
            <person name="Miyasaka T."/>
            <person name="Walker R.T."/>
            <person name="Tanaka H."/>
            <person name="Stammers D.K."/>
            <person name="Stuart D.I."/>
        </authorList>
    </citation>
    <scope>X-RAY CRYSTALLOGRAPHY (2.55 ANGSTROMS) OF 588-1027</scope>
</reference>
<reference key="67">
    <citation type="journal article" date="1996" name="Chem. Biol.">
        <title>Improved cyclic urea inhibitors of the HIV-1 protease: synthesis, potency, resistance profile, human pharmacokinetics and X-ray crystal structure of DMP 450.</title>
        <authorList>
            <person name="Hodge C.N."/>
            <person name="Aldrich P.E."/>
            <person name="Bacheler L.T."/>
            <person name="Chang C.-H."/>
            <person name="Eyermann C.J."/>
            <person name="Garber S.S."/>
            <person name="Grubb M."/>
            <person name="Jackson D.A."/>
            <person name="Jadhav P.K."/>
            <person name="Korant B.D."/>
            <person name="Lam P.Y.S."/>
            <person name="Maurin M.B."/>
            <person name="Meek J.L."/>
            <person name="Otto M.J."/>
            <person name="Rayner M.M."/>
            <person name="Reid C."/>
            <person name="Sharpe T.R."/>
            <person name="Shum L."/>
            <person name="Winslow D.L."/>
            <person name="Erickson-Viitanen S."/>
        </authorList>
    </citation>
    <scope>X-RAY CRYSTALLOGRAPHY (2.0 ANGSTROMS) OF 489-587 IN COMPLEX WITH COMPLEX WITH DMP450</scope>
</reference>
<reference key="68">
    <citation type="journal article" date="1996" name="Protein Sci.">
        <title>Three-dimensional solution structure of the HIV-1 protease complexed with DMP323, a novel cyclic urea-type inhibitor, determined by nuclear magnetic resonance spectroscopy.</title>
        <authorList>
            <person name="Yamazaki T."/>
            <person name="Hinck A.P."/>
            <person name="Wang Y.X."/>
            <person name="Nicholson L.K."/>
            <person name="Torchia D.A."/>
            <person name="Wingfield P."/>
            <person name="Stahl S.J."/>
            <person name="Kaufman J.D."/>
            <person name="Chang C.-H."/>
            <person name="Domaille P.J."/>
            <person name="Lam P.Y.S."/>
        </authorList>
    </citation>
    <scope>STRUCTURE BY NMR OF 489-587 IN COMPLEX WITH THE INHIBITOR DMP323</scope>
</reference>
<reference key="69">
    <citation type="journal article" date="1997" name="Proc. Natl. Acad. Sci. U.S.A.">
        <title>Unique features in the structure of the complex between HIV-1 reverse transcriptase and the bis(heteroaryl)piperazine (BHAP) U-90152 explain resistance mutations for this nonnucleoside inhibitor.</title>
        <authorList>
            <person name="Esnouf R.M."/>
            <person name="Ren J.S."/>
            <person name="Hopkins A.L."/>
            <person name="Ross C.K."/>
            <person name="Jones E.Y."/>
            <person name="Stammers D.K."/>
            <person name="Stuart D.I."/>
        </authorList>
    </citation>
    <scope>X-RAY CRYSTALLOGRAPHY (2.65 ANGSTROMS) OF 588-1130</scope>
</reference>
<reference key="70">
    <citation type="journal article" date="1997" name="J. Med. Chem.">
        <title>Cyclic urea amides: HIV-1 protease inhibitors with low nanomolar potency against both wild type and protease inhibitor resistant mutants of HIV.</title>
        <authorList>
            <person name="Jadhav P.K."/>
            <person name="Ala P.J."/>
            <person name="Woerner F.J."/>
            <person name="Chang C.-H."/>
            <person name="Garber S.S."/>
            <person name="Anton E.D."/>
            <person name="Bacheler L.T."/>
        </authorList>
    </citation>
    <scope>X-RAY CRYSTALLOGRAPHY (1.8 ANGSTROMS) OF 489-587</scope>
</reference>
<reference key="71">
    <citation type="journal article" date="1998" name="Protein Sci.">
        <title>Toward a universal inhibitor of retroviral proteases: comparative analysis of the interactions of LP-130 complexed with proteases from HIV-1, FIV, and EIAV.</title>
        <authorList>
            <person name="Kervinen J."/>
            <person name="Lubkowski J."/>
            <person name="Zdanov A."/>
            <person name="Bhatt D."/>
            <person name="Dunn B.M."/>
            <person name="Hui K.Y."/>
            <person name="Powell D.J."/>
            <person name="Kay J."/>
            <person name="Wlodawer A."/>
            <person name="Gustchina A."/>
        </authorList>
    </citation>
    <scope>X-RAY CRYSTALLOGRAPHY (2.0 ANGSTROMS) OF 489-587 IN COMPLEX WITH THE INHIBITOR LP-130</scope>
</reference>
<reference key="72">
    <citation type="journal article" date="1998" name="J. Med. Chem.">
        <title>Nonpeptide cyclic cyanoguanidines as HIV-1 protease inhibitors: synthesis, structure-activity relationships, and X-ray crystal structure studies.</title>
        <authorList>
            <person name="Jadhav P.K."/>
            <person name="Woerner F.J."/>
            <person name="Lam P.Y."/>
            <person name="Hodge C.N."/>
            <person name="Eyermann C.J."/>
            <person name="Man H.W."/>
            <person name="Daneker W.F."/>
            <person name="Bacheler L.T."/>
            <person name="Rayner M.M."/>
            <person name="Meek J.L."/>
            <person name="Erickson-Viitanen S."/>
            <person name="Jackson D.A."/>
            <person name="Calabrese J.C."/>
            <person name="Schadt M.C."/>
            <person name="Chang C.-H."/>
        </authorList>
    </citation>
    <scope>X-RAY CRYSTALLOGRAPHY (1.8 ANGSTROMS) OF 489-587</scope>
</reference>
<reference key="73">
    <citation type="journal article" date="1998" name="Biochemistry">
        <title>Counteracting HIV-1 protease drug resistance: structural analysis of mutant proteases complexed with XV638 and SD146, cyclic urea amides with broad specificities.</title>
        <authorList>
            <person name="Ala P.J."/>
            <person name="Huston E.E."/>
            <person name="Klabe R.M."/>
            <person name="Jadhav P.K."/>
            <person name="Lam P.Y.S."/>
            <person name="Chang C.-H."/>
        </authorList>
    </citation>
    <scope>X-RAY CRYSTALLOGRAPHY (1.8 ANGSTROMS) OF 489-587</scope>
</reference>
<reference key="74">
    <citation type="journal article" date="1998" name="J. Biol. Chem.">
        <title>Molecular recognition of cyclic urea HIV-1 protease inhibitors.</title>
        <authorList>
            <person name="Ala P.J."/>
            <person name="DeLoskey R.J."/>
            <person name="Huston E.E."/>
            <person name="Jadhav P.K."/>
            <person name="Lam P.Y.S."/>
            <person name="Eyermann C.J."/>
            <person name="Hodge C.N."/>
            <person name="Schadt M.C."/>
            <person name="Lewandowski F.A."/>
            <person name="Weber P.C."/>
            <person name="McCabe D.D."/>
            <person name="Duke J.L."/>
            <person name="Chang C.-H."/>
        </authorList>
    </citation>
    <scope>X-RAY CRYSTALLOGRAPHY (1.8 ANGSTROMS) OF 489-587</scope>
</reference>
<reference key="75">
    <citation type="journal article" date="1998" name="Biochemistry">
        <title>Hydrophilic peptides derived from the transframe region of Gag-Pol inhibit the HIV-1 protease.</title>
        <authorList>
            <person name="Louis J.M."/>
            <person name="Dyda F."/>
            <person name="Nashed N.T."/>
            <person name="Kimmel A.R."/>
            <person name="Davies D.R."/>
        </authorList>
    </citation>
    <scope>X-RAY CRYSTALLOGRAPHY (2.0 ANGSTROMS) OF 490-587 IN COMPLEX WITH A TRIPEPTIDE INHIBITOR</scope>
</reference>
<reference key="76">
    <citation type="journal article" date="1998" name="Proc. Natl. Acad. Sci. U.S.A.">
        <title>3'-azido-3'-deoxythymidine drug resistance mutations in HIV-1 reverse transcriptase can induce long range conformational changes.</title>
        <authorList>
            <person name="Ren J.S."/>
            <person name="Esnouf R.M."/>
            <person name="Hopkins A.L."/>
            <person name="Jones E.Y."/>
            <person name="Kirby I."/>
            <person name="Keeling J."/>
            <person name="Ross C.K."/>
            <person name="Larder B.A."/>
            <person name="Stuart D.I."/>
            <person name="Stammers D.K."/>
        </authorList>
    </citation>
    <scope>X-RAY CRYSTALLOGRAPHY (3.0 ANGSTROMS) OF 588-1130</scope>
</reference>
<reference key="77">
    <citation type="journal article" date="1998" name="Biochemistry">
        <title>Crystal structures of HIV-1 reverse transcriptase in complex with carboxanilide derivatives.</title>
        <authorList>
            <person name="Ren J.S."/>
            <person name="Esnouf R.M."/>
            <person name="Hopkins A.L."/>
            <person name="Warren J."/>
            <person name="Balzarini J."/>
            <person name="Stuart D.I."/>
            <person name="Stammers D.K."/>
        </authorList>
    </citation>
    <scope>X-RAY CRYSTALLOGRAPHY (2.5 ANGSTROMS) OF 588-1147 IN COMPLEX WITH CARBOXANILIDE DERIVATIVES</scope>
</reference>
<reference key="78">
    <citation type="journal article" date="1999" name="Eur. J. Biochem.">
        <title>Structural and kinetic analysis of drug resistant mutants of HIV-1 protease.</title>
        <authorList>
            <person name="Mahalingam B."/>
            <person name="Louis J.M."/>
            <person name="Reed C.C."/>
            <person name="Adomat J.M."/>
            <person name="Krouse J."/>
            <person name="Wang Y.-F."/>
            <person name="Harrison R.W."/>
            <person name="Weber I.T."/>
        </authorList>
    </citation>
    <scope>X-RAY CRYSTALLOGRAPHY (1.88 ANGSTROMS) OF 501-599</scope>
</reference>
<reference key="79">
    <citation type="journal article" date="2000" name="Proc. Natl. Acad. Sci. U.S.A.">
        <title>Crystal structure of the HIV-1 integrase catalytic core and C-terminal domains: a model for viral DNA binding.</title>
        <authorList>
            <person name="Chen J.C."/>
            <person name="Krucinski J."/>
            <person name="Miercke L.J."/>
            <person name="Finer-Moore J.S."/>
            <person name="Tang A.H."/>
            <person name="Leavitt A.D."/>
            <person name="Stroud R.M."/>
        </authorList>
    </citation>
    <scope>X-RAY CRYSTALLOGRAPHY (2.8 ANGSTROMS) OF 1199-1435</scope>
</reference>
<reference key="80">
    <citation type="journal article" date="2001" name="Proteins">
        <title>1.9 A X-ray study shows closed flap conformation in crystals of tethered HIV-1 PR.</title>
        <authorList>
            <person name="Pillai B."/>
            <person name="Kannan K.K."/>
            <person name="Hosur M.V."/>
        </authorList>
    </citation>
    <scope>X-RAY CRYSTALLOGRAPHY (1.9 ANGSTROMS) OF 489-587</scope>
</reference>
<reference key="81">
    <citation type="journal article" date="2001" name="J. Mol. Biol.">
        <title>Structural mechanisms of drug resistance for mutations at codons 181 and 188 in HIV-1 reverse transcriptase and the improved resilience of second generation non-nucleoside inhibitors.</title>
        <authorList>
            <person name="Ren J.S."/>
            <person name="Nichols C.E."/>
            <person name="Bird L.E."/>
            <person name="Chamberlain P.P."/>
            <person name="Weaver K.L."/>
            <person name="Short S.A."/>
            <person name="Stuart D.I."/>
            <person name="Stammers D.K."/>
        </authorList>
    </citation>
    <scope>X-RAY CRYSTALLOGRAPHY (2.4 ANGSTROMS) OF 588-1147 IN COMPLEX WITH INHIBITORS</scope>
</reference>
<reference key="82">
    <citation type="journal article" date="2002" name="Biochem. Biophys. Res. Commun.">
        <title>Effects of remote mutation on the autolysis of HIV-1 PR: X-ray and NMR investigations.</title>
        <authorList>
            <person name="Kumar M."/>
            <person name="Kannan K.K."/>
            <person name="Hosur M.V."/>
            <person name="Bhavesh N.S."/>
            <person name="Chatterjee A."/>
            <person name="Mittal R."/>
            <person name="Hosur R.V."/>
        </authorList>
    </citation>
    <scope>X-RAY CRYSTALLOGRAPHY (2.1 ANGSTROMS) OF 489-587</scope>
</reference>
<reference key="83">
    <citation type="journal article" date="2003" name="Biochemistry">
        <title>Solution structure of the RNase H domain of the HIV-1 reverse transcriptase in the presence of magnesium.</title>
        <authorList>
            <person name="Pari K."/>
            <person name="Mueller G.A."/>
            <person name="DeRose E.F."/>
            <person name="Kirby T.W."/>
            <person name="London R.E."/>
        </authorList>
    </citation>
    <scope>STRUCTURE BY NMR OF 1014-1147</scope>
</reference>
<reference key="84">
    <citation type="journal article" date="2004" name="J. Mol. Biol.">
        <title>Crystal structures of HIV-1 reverse transcriptases mutated at codons 100, 106 and 108 and mechanisms of resistance to non-nucleoside inhibitors.</title>
        <authorList>
            <person name="Ren J.S."/>
            <person name="Nichols C.E."/>
            <person name="Chamberlain P.P."/>
            <person name="Weaver K.L."/>
            <person name="Short S.A."/>
            <person name="Stammers D.K."/>
        </authorList>
    </citation>
    <scope>X-RAY CRYSTALLOGRAPHY (3.0 ANGSTROMS) OF 588-1147 IN COMPLEX WITH INHIBITORS</scope>
</reference>
<reference key="85">
    <citation type="journal article" date="2004" name="J. Med. Chem.">
        <title>Design of non-nucleoside inhibitors of HIV-1 reverse transcriptase with improved drug resistance properties. 2.</title>
        <authorList>
            <person name="Freeman G.A."/>
            <person name="Andrews C.W. III"/>
            <person name="Hopkins A.L."/>
            <person name="Lowell G.S."/>
            <person name="Schaller L.T."/>
            <person name="Cowan J.R."/>
            <person name="Gonzales S.S."/>
            <person name="Koszalka G.W."/>
            <person name="Hazen R.J."/>
            <person name="Boone L.R."/>
            <person name="Ferris R.G."/>
            <person name="Creech K.L."/>
            <person name="Roberts G.B."/>
            <person name="Short S.A."/>
            <person name="Weaver K.L."/>
            <person name="Reynolds D.J."/>
            <person name="Milton J."/>
            <person name="Ren J.S."/>
            <person name="Stuart D.I."/>
            <person name="Stammers D.K."/>
            <person name="Chan J.H."/>
        </authorList>
    </citation>
    <scope>X-RAY CRYSTALLOGRAPHY (3.0 ANGSTROMS) OF 588-1147 IN COMPLEX WITH INHIBITORS</scope>
</reference>
<gene>
    <name type="primary">gag-pol</name>
</gene>
<feature type="initiator methionine" description="Removed; by host" evidence="1">
    <location>
        <position position="1"/>
    </location>
</feature>
<feature type="chain" id="PRO_0000223620" description="Gag-Pol polyprotein">
    <location>
        <begin position="2"/>
        <end position="1435"/>
    </location>
</feature>
<feature type="chain" id="PRO_0000042439" description="Matrix protein p17" evidence="1">
    <location>
        <begin position="2"/>
        <end position="132"/>
    </location>
</feature>
<feature type="chain" id="PRO_0000042440" description="Capsid protein p24" evidence="1">
    <location>
        <begin position="133"/>
        <end position="363"/>
    </location>
</feature>
<feature type="peptide" id="PRO_0000042441" description="Spacer peptide 1" evidence="1">
    <location>
        <begin position="364"/>
        <end position="377"/>
    </location>
</feature>
<feature type="chain" id="PRO_0000042442" description="Nucleocapsid protein p7" evidence="1">
    <location>
        <begin position="378"/>
        <end position="432"/>
    </location>
</feature>
<feature type="peptide" id="PRO_0000246716" description="Transframe peptide" evidence="6">
    <location>
        <begin position="433"/>
        <end position="440"/>
    </location>
</feature>
<feature type="chain" id="PRO_0000042443" description="p6-pol" evidence="6">
    <location>
        <begin position="441"/>
        <end position="488"/>
    </location>
</feature>
<feature type="chain" id="PRO_0000038665" description="Protease">
    <location>
        <begin position="489"/>
        <end position="587"/>
    </location>
</feature>
<feature type="chain" id="PRO_0000042444" description="Reverse transcriptase/ribonuclease H">
    <location>
        <begin position="588"/>
        <end position="1147"/>
    </location>
</feature>
<feature type="chain" id="PRO_0000042445" description="p51 RT">
    <location>
        <begin position="588"/>
        <end position="1027"/>
    </location>
</feature>
<feature type="chain" id="PRO_0000042446" description="p15">
    <location>
        <begin position="1028"/>
        <end position="1147"/>
    </location>
</feature>
<feature type="chain" id="PRO_0000042447" description="Integrase" evidence="1">
    <location>
        <begin position="1148"/>
        <end position="1435"/>
    </location>
</feature>
<feature type="domain" description="Peptidase A2" evidence="8">
    <location>
        <begin position="508"/>
        <end position="577"/>
    </location>
</feature>
<feature type="domain" description="Reverse transcriptase" evidence="9">
    <location>
        <begin position="631"/>
        <end position="821"/>
    </location>
</feature>
<feature type="domain" description="RNase H type-1" evidence="10">
    <location>
        <begin position="1021"/>
        <end position="1144"/>
    </location>
</feature>
<feature type="domain" description="Integrase catalytic" evidence="12">
    <location>
        <begin position="1201"/>
        <end position="1351"/>
    </location>
</feature>
<feature type="zinc finger region" description="CCHC-type 1" evidence="7">
    <location>
        <begin position="390"/>
        <end position="407"/>
    </location>
</feature>
<feature type="zinc finger region" description="CCHC-type 2" evidence="7">
    <location>
        <begin position="411"/>
        <end position="428"/>
    </location>
</feature>
<feature type="zinc finger region" description="Integrase-type" evidence="11">
    <location>
        <begin position="1150"/>
        <end position="1191"/>
    </location>
</feature>
<feature type="DNA-binding region" description="Integrase-type" evidence="13">
    <location>
        <begin position="1370"/>
        <end position="1417"/>
    </location>
</feature>
<feature type="region of interest" description="Interaction with Gp41" evidence="5">
    <location>
        <begin position="7"/>
        <end position="31"/>
    </location>
</feature>
<feature type="region of interest" description="Interaction with host CALM1" evidence="42">
    <location>
        <begin position="8"/>
        <end position="43"/>
    </location>
</feature>
<feature type="region of interest" description="Interaction with host AP3D1" evidence="5">
    <location>
        <begin position="12"/>
        <end position="19"/>
    </location>
</feature>
<feature type="region of interest" description="Interaction with membrane phosphatidylinositol 4,5-bisphosphate and RNA" evidence="5">
    <location>
        <begin position="14"/>
        <end position="33"/>
    </location>
</feature>
<feature type="region of interest" description="Interaction with membrane phosphatidylinositol 4,5-bisphosphate" evidence="5">
    <location>
        <begin position="73"/>
        <end position="77"/>
    </location>
</feature>
<feature type="region of interest" description="Disordered" evidence="15">
    <location>
        <begin position="106"/>
        <end position="128"/>
    </location>
</feature>
<feature type="region of interest" description="Interaction with host PPIA/CYPA and NUP153" evidence="5">
    <location>
        <begin position="189"/>
        <end position="227"/>
    </location>
</feature>
<feature type="region of interest" description="PPIA/CYPA-binding loop">
    <location>
        <begin position="217"/>
        <end position="225"/>
    </location>
</feature>
<feature type="region of interest" description="Dimerization/Multimerization of capsid protein p24">
    <location>
        <begin position="277"/>
        <end position="363"/>
    </location>
</feature>
<feature type="region of interest" description="Disordered" evidence="15">
    <location>
        <begin position="448"/>
        <end position="481"/>
    </location>
</feature>
<feature type="region of interest" description="Dimerization of protease" evidence="38">
    <location>
        <begin position="489"/>
        <end position="493"/>
    </location>
</feature>
<feature type="region of interest" description="Dimerization of protease" evidence="38">
    <location>
        <begin position="537"/>
        <end position="543"/>
    </location>
</feature>
<feature type="region of interest" description="Dimerization of protease" evidence="38">
    <location>
        <begin position="576"/>
        <end position="588"/>
    </location>
</feature>
<feature type="region of interest" description="RT 'primer grip'" evidence="1">
    <location>
        <begin position="814"/>
        <end position="822"/>
    </location>
</feature>
<feature type="short sequence motif" description="Nuclear export signal" evidence="1">
    <location>
        <begin position="16"/>
        <end position="22"/>
    </location>
</feature>
<feature type="short sequence motif" description="Nuclear localization signal" evidence="1">
    <location>
        <begin position="26"/>
        <end position="32"/>
    </location>
</feature>
<feature type="short sequence motif" description="Tryptophan repeat motif" evidence="1">
    <location>
        <begin position="985"/>
        <end position="1001"/>
    </location>
</feature>
<feature type="active site" description="For protease activity; shared with dimeric partner" evidence="14 58">
    <location>
        <position position="513"/>
    </location>
</feature>
<feature type="binding site" evidence="1">
    <location>
        <position position="697"/>
    </location>
    <ligand>
        <name>Mg(2+)</name>
        <dbReference type="ChEBI" id="CHEBI:18420"/>
        <label>1</label>
        <note>catalytic; for reverse transcriptase activity</note>
    </ligand>
</feature>
<feature type="binding site" evidence="1">
    <location>
        <position position="772"/>
    </location>
    <ligand>
        <name>Mg(2+)</name>
        <dbReference type="ChEBI" id="CHEBI:18420"/>
        <label>1</label>
        <note>catalytic; for reverse transcriptase activity</note>
    </ligand>
</feature>
<feature type="binding site" evidence="1">
    <location>
        <position position="773"/>
    </location>
    <ligand>
        <name>Mg(2+)</name>
        <dbReference type="ChEBI" id="CHEBI:18420"/>
        <label>1</label>
        <note>catalytic; for reverse transcriptase activity</note>
    </ligand>
</feature>
<feature type="binding site">
    <location>
        <position position="1030"/>
    </location>
    <ligand>
        <name>Mg(2+)</name>
        <dbReference type="ChEBI" id="CHEBI:18420"/>
        <label>2</label>
        <note>catalytic; for RNase H activity</note>
    </ligand>
</feature>
<feature type="binding site" evidence="20">
    <location>
        <position position="1065"/>
    </location>
    <ligand>
        <name>Mg(2+)</name>
        <dbReference type="ChEBI" id="CHEBI:18420"/>
        <label>2</label>
        <note>catalytic; for RNase H activity</note>
    </ligand>
</feature>
<feature type="binding site">
    <location>
        <position position="1085"/>
    </location>
    <ligand>
        <name>Mg(2+)</name>
        <dbReference type="ChEBI" id="CHEBI:18420"/>
        <label>2</label>
        <note>catalytic; for RNase H activity</note>
    </ligand>
</feature>
<feature type="binding site" evidence="20">
    <location>
        <position position="1136"/>
    </location>
    <ligand>
        <name>Mg(2+)</name>
        <dbReference type="ChEBI" id="CHEBI:18420"/>
        <label>2</label>
        <note>catalytic; for RNase H activity</note>
    </ligand>
</feature>
<feature type="binding site" evidence="11">
    <location>
        <position position="1159"/>
    </location>
    <ligand>
        <name>Zn(2+)</name>
        <dbReference type="ChEBI" id="CHEBI:29105"/>
    </ligand>
</feature>
<feature type="binding site" evidence="11">
    <location>
        <position position="1163"/>
    </location>
    <ligand>
        <name>Zn(2+)</name>
        <dbReference type="ChEBI" id="CHEBI:29105"/>
    </ligand>
</feature>
<feature type="binding site" evidence="11">
    <location>
        <position position="1187"/>
    </location>
    <ligand>
        <name>Zn(2+)</name>
        <dbReference type="ChEBI" id="CHEBI:29105"/>
    </ligand>
</feature>
<feature type="binding site" evidence="11">
    <location>
        <position position="1190"/>
    </location>
    <ligand>
        <name>Zn(2+)</name>
        <dbReference type="ChEBI" id="CHEBI:29105"/>
    </ligand>
</feature>
<feature type="binding site" evidence="1">
    <location>
        <position position="1211"/>
    </location>
    <ligand>
        <name>Mg(2+)</name>
        <dbReference type="ChEBI" id="CHEBI:18420"/>
        <label>3</label>
        <note>catalytic; for integrase activity</note>
    </ligand>
</feature>
<feature type="binding site" evidence="1">
    <location>
        <position position="1263"/>
    </location>
    <ligand>
        <name>Mg(2+)</name>
        <dbReference type="ChEBI" id="CHEBI:18420"/>
        <label>3</label>
        <note>catalytic; for integrase activity</note>
    </ligand>
</feature>
<feature type="binding site" evidence="55">
    <location>
        <position position="1299"/>
    </location>
    <ligand>
        <name>Mg(2+)</name>
        <dbReference type="ChEBI" id="CHEBI:18420"/>
        <label>3</label>
        <note>catalytic; for integrase activity</note>
    </ligand>
</feature>
<feature type="site" description="Cleavage; by viral protease" evidence="1">
    <location>
        <begin position="132"/>
        <end position="133"/>
    </location>
</feature>
<feature type="site" description="Cis/trans isomerization of proline peptide bond; by human PPIA/CYPA">
    <location>
        <begin position="221"/>
        <end position="222"/>
    </location>
</feature>
<feature type="site" description="Cleavage; by viral protease" evidence="1">
    <location>
        <begin position="363"/>
        <end position="364"/>
    </location>
</feature>
<feature type="site" description="Cleavage; by viral protease" evidence="1">
    <location>
        <begin position="377"/>
        <end position="378"/>
    </location>
</feature>
<feature type="site" description="Cleavage; by viral protease" evidence="6">
    <location>
        <begin position="393"/>
        <end position="394"/>
    </location>
</feature>
<feature type="site" description="Cleavage; by viral protease" evidence="6">
    <location>
        <begin position="426"/>
        <end position="427"/>
    </location>
</feature>
<feature type="site" description="Cleavage; by viral protease" evidence="6">
    <location>
        <begin position="432"/>
        <end position="433"/>
    </location>
</feature>
<feature type="site" description="Cleavage; by viral protease" evidence="1">
    <location>
        <begin position="440"/>
        <end position="441"/>
    </location>
</feature>
<feature type="site" description="Cleavage; by viral protease" evidence="56">
    <location>
        <begin position="488"/>
        <end position="489"/>
    </location>
</feature>
<feature type="site" description="Cleavage; by viral protease" evidence="1">
    <location>
        <begin position="587"/>
        <end position="588"/>
    </location>
</feature>
<feature type="site" description="Essential for RT p66/p51 heterodimerization" evidence="1">
    <location>
        <position position="988"/>
    </location>
</feature>
<feature type="site" description="Essential for RT p66/p51 heterodimerization" evidence="1">
    <location>
        <position position="1001"/>
    </location>
</feature>
<feature type="site" description="Cleavage; by viral protease; partial" evidence="1">
    <location>
        <begin position="1027"/>
        <end position="1028"/>
    </location>
</feature>
<feature type="site" description="Cleavage; by viral protease" evidence="1">
    <location>
        <begin position="1147"/>
        <end position="1148"/>
    </location>
</feature>
<feature type="modified residue" description="Phosphotyrosine; by host" evidence="1">
    <location>
        <position position="132"/>
    </location>
</feature>
<feature type="lipid moiety-binding region" description="N-myristoyl glycine; by host" evidence="1">
    <location>
        <position position="2"/>
    </location>
</feature>
<feature type="sequence variant" description="Confers to resistance to A-77003; when associated with other amino acid changes.">
    <original>R</original>
    <variation>K</variation>
    <location>
        <position position="496"/>
    </location>
</feature>
<feature type="sequence variant" description="Confers to resistance to A-77003.">
    <original>R</original>
    <variation>Q</variation>
    <location>
        <position position="496"/>
    </location>
</feature>
<feature type="sequence variant" description="Confers resistance to amprenavir, atazanavir, lopinavir; when associated with other amino acid changes.">
    <original>L</original>
    <variation>F</variation>
    <location>
        <position position="498"/>
    </location>
</feature>
<feature type="sequence variant" description="Confers resistance to indinavir, lopinavir, ritonavir and saquinavir; when associated with other amino acid changes.">
    <original>L</original>
    <variation>I</variation>
    <location>
        <position position="498"/>
    </location>
</feature>
<feature type="sequence variant" description="Confers resistance to indinavir and lopinavir; when associated with other amino acid changes.">
    <original>L</original>
    <variation>R</variation>
    <location>
        <position position="498"/>
    </location>
</feature>
<feature type="sequence variant" description="Confers resistance to indinavir and lopinavir; when associated with other amino acid changes.">
    <original>L</original>
    <variation>V</variation>
    <location>
        <position position="498"/>
    </location>
</feature>
<feature type="sequence variant" description="Confers resistance to atazanavir; when associated with other amino acid changes.">
    <original>L</original>
    <variation>Y</variation>
    <location>
        <position position="498"/>
    </location>
</feature>
<feature type="sequence variant" description="Confers resistance to tipranavir.">
    <original>I</original>
    <variation>V</variation>
    <location>
        <position position="503"/>
    </location>
</feature>
<feature type="sequence variant" description="Confers resistance to lopinavir, ritonavir and saquinavir; when associated with other amino acid changes.">
    <original>G</original>
    <variation>E</variation>
    <location>
        <position position="504"/>
    </location>
</feature>
<feature type="sequence variant" description="Confers resistance to lopinavir.">
    <original>K</original>
    <variation>I</variation>
    <location>
        <position position="508"/>
    </location>
</feature>
<feature type="sequence variant" description="Confers resistance to indinavir, lopinavir and nelfinavir; when associated with other amino acid changes.">
    <original>K</original>
    <variation>M</variation>
    <location>
        <position position="508"/>
    </location>
</feature>
<feature type="sequence variant" description="Confers resistance to indinavir, lopinavir and ritonavir; when associated with other amino acid changes.">
    <original>K</original>
    <variation>R</variation>
    <location>
        <position position="508"/>
    </location>
</feature>
<feature type="sequence variant" description="Confers resistance to BILA 2185 BS.">
    <original>L</original>
    <variation>I</variation>
    <location>
        <position position="511"/>
    </location>
</feature>
<feature type="sequence variant" description="Confers resistance to amprenavir, indinavir, lopinavir, ritonavir and saquinavir; when associated with other amino acid changes.">
    <original>L</original>
    <variation>I</variation>
    <location>
        <position position="512"/>
    </location>
</feature>
<feature type="sequence variant" description="Confers resistance to nelfinavir; when associated with other amino acid changes.">
    <original>D</original>
    <variation>N</variation>
    <location>
        <position position="518"/>
    </location>
</feature>
<feature type="sequence variant" description="Confers resistance to A-77003, amprenavir, atazanavir, indinavir, kynostatin, lopinavir, ritonavir and saquinavir; when associated with other amino acid changes.">
    <original>V</original>
    <variation>I</variation>
    <location>
        <position position="520"/>
    </location>
</feature>
<feature type="sequence variant" description="Confers resistance to atazanavir nelfinavir and ritonavir; when associated with other amino acid changes.">
    <original>L</original>
    <variation>F</variation>
    <location>
        <position position="521"/>
    </location>
</feature>
<feature type="sequence variant" description="Confers resistance to lopinavir; when associated with other amino acid changes.">
    <original>E</original>
    <variation>Q</variation>
    <location>
        <position position="522"/>
    </location>
</feature>
<feature type="sequence variant" description="Confers resistance to tipranavir.">
    <original>E</original>
    <variation>D</variation>
    <location>
        <position position="523"/>
    </location>
</feature>
<feature type="sequence variant" description="Confers resistance to nelfinavir and ritonavir; when associated with other amino acid changes.">
    <original>M</original>
    <variation>I</variation>
    <location>
        <position position="524"/>
    </location>
</feature>
<feature type="sequence variant" description="Confers resistance to ritonavir; when associated with other amino acid changes.">
    <original>M</original>
    <variation>L</variation>
    <location>
        <position position="524"/>
    </location>
</feature>
<feature type="sequence variant" description="Confers resistance to indinavir and tipranavir; when associated with other amino acid changes.">
    <original>S</original>
    <variation>D</variation>
    <location>
        <position position="525"/>
    </location>
</feature>
<feature type="sequence variant" description="Confers resistance to tipranavir.">
    <original>R</original>
    <variation>K</variation>
    <location>
        <position position="529"/>
    </location>
</feature>
<feature type="sequence variant" description="Confers resistance to DMD-323; when associated with other amino acid changes.">
    <original>K</original>
    <variation>I</variation>
    <location>
        <position position="533"/>
    </location>
</feature>
<feature type="sequence variant" description="Confers resistance to A-77003.">
    <original>M</original>
    <variation>F</variation>
    <location>
        <position position="534"/>
    </location>
</feature>
<feature type="sequence variant" description="Confers resistance to A-77003, amprenavir, atazanavir, indinavir, kynostatin, lopinavir, ritonavir, saquinavir and telinavir; when associated with other amino acid changes.">
    <original>M</original>
    <variation>I</variation>
    <location>
        <position position="534"/>
    </location>
</feature>
<feature type="sequence variant" description="Confers resistance to A-77003, amprenavir, indinavir, lopinavir, ritonavir and saquinavir; when associated with other amino acid changes.">
    <original>M</original>
    <variation>L</variation>
    <location>
        <position position="534"/>
    </location>
</feature>
<feature type="sequence variant" description="Confers resistance to amprenavir, lopinavir, kynostatin, ritonavir and saquinavir; when associated with other amino acid changes.">
    <original>I</original>
    <variation>V</variation>
    <location>
        <position position="535"/>
    </location>
</feature>
<feature type="sequence variant" description="Confers resistance to A-77003, amprenavir, indinavir, ritonavir, saquinavir and telinavir; when associated with other amino acid changes.">
    <original>G</original>
    <variation>V</variation>
    <location>
        <position position="536"/>
    </location>
</feature>
<feature type="sequence variant" description="Confers resistance to atazanavir; when associated with other amino acid changes.">
    <original>I</original>
    <variation>L</variation>
    <location>
        <position position="538"/>
    </location>
</feature>
<feature type="sequence variant" description="Confers resistance to amprenavir, lopinavir and ritonavir; when associated with other amino acid changes.">
    <original>I</original>
    <variation>V</variation>
    <location>
        <position position="538"/>
    </location>
</feature>
<feature type="sequence variant" description="Confers resistance to lopinavir and telinavir; when associated with other amino acid changes.">
    <original>F</original>
    <variation>L</variation>
    <location>
        <position position="541"/>
    </location>
</feature>
<feature type="sequence variant" description="Confers resistance to indinavir, ritonavir and saquinavir; when associated with other amino acid changes.">
    <original>F</original>
    <variation>Y</variation>
    <location>
        <position position="541"/>
    </location>
</feature>
<feature type="sequence variant" description="Confers resistance to lopinavir.">
    <original>I</original>
    <variation>A</variation>
    <location>
        <position position="542"/>
    </location>
</feature>
<feature type="sequence variant" description="Confers resistance to amprenavir and lopinavir; when associated with other amino acid changes.">
    <original>I</original>
    <variation>L</variation>
    <location>
        <position position="542"/>
    </location>
</feature>
<feature type="sequence variant" description="Confers resistance to amprenavir and lopinavir.">
    <original>I</original>
    <variation>M</variation>
    <location>
        <position position="542"/>
    </location>
</feature>
<feature type="sequence variant" description="Confers resistance to lopinavir.">
    <original>I</original>
    <variation>S</variation>
    <location>
        <position position="542"/>
    </location>
</feature>
<feature type="sequence variant" description="Confers resistance to lopinavir; when associated with other amino acid changes.">
    <original>I</original>
    <variation>T</variation>
    <location>
        <position position="542"/>
    </location>
</feature>
<feature type="sequence variant" description="Confers resistance to indinavir, lopinavir, ritonavir and saquinavir; when associated with other amino acid changes.">
    <original>I</original>
    <variation>V</variation>
    <location>
        <position position="542"/>
    </location>
</feature>
<feature type="sequence variant" description="Confers resistance to nelfinavir.">
    <original>K</original>
    <variation>R</variation>
    <location>
        <position position="543"/>
    </location>
</feature>
<feature type="sequence variant" description="Confers resistance to nelfinavir.">
    <original>R</original>
    <variation>K</variation>
    <location>
        <position position="545"/>
    </location>
</feature>
<feature type="sequence variant" description="Confers resistance to lopinavir and ritonavir; when associated with other amino acid changes.">
    <original>Q</original>
    <variation>E</variation>
    <location>
        <position position="546"/>
    </location>
</feature>
<feature type="sequence variant" description="Confers resistance to tripanavir.">
    <original>D</original>
    <variation>E</variation>
    <location>
        <position position="548"/>
    </location>
</feature>
<feature type="sequence variant" description="Confers resistance to lopinavir; when associated with other amino acid changes.">
    <original>Q</original>
    <variation>H</variation>
    <location>
        <position position="549"/>
    </location>
</feature>
<feature type="sequence variant" description="Confers resistance to atazanavir, indinavir, lopinavir, ritonavir and saquinavir; when associated with other amino acid changes.">
    <original>L</original>
    <variation>P</variation>
    <location>
        <position position="551"/>
    </location>
</feature>
<feature type="sequence variant" description="Confers resistance to lopinavir.">
    <original>L</original>
    <variation>T</variation>
    <location>
        <position position="551"/>
    </location>
</feature>
<feature type="sequence variant" description="Confers resistance to lopinavir; when associated with other amino acid changes.">
    <original>E</original>
    <variation>Q</variation>
    <location>
        <position position="553"/>
    </location>
</feature>
<feature type="sequence variant" description="Confers resistance to indinavir, ritonavir and saquinavir; when associated with other amino acid changes.">
    <original>I</original>
    <variation>F</variation>
    <location>
        <position position="554"/>
    </location>
</feature>
<feature type="sequence variant" description="Confers resistance to lopinavir; when associated with other amino acid changes.">
    <original>H</original>
    <variation>Y</variation>
    <location>
        <position position="557"/>
    </location>
</feature>
<feature type="sequence variant" description="Confers resistance to lopinavir; when associated with other amino acid changes.">
    <original>A</original>
    <variation>I</variation>
    <location>
        <position position="559"/>
    </location>
</feature>
<feature type="sequence variant" description="Confers resistance to lopinavir; when associated with other amino acid changes.">
    <original>A</original>
    <variation>L</variation>
    <location>
        <position position="559"/>
    </location>
</feature>
<feature type="sequence variant" description="Confers resistance to A-77003, indinavir, lopinavir, nelfinavir and tripanavir; when associated with other amino acid changes.">
    <original>A</original>
    <variation>T</variation>
    <location>
        <position position="559"/>
    </location>
</feature>
<feature type="sequence variant" description="Confers resistance to amprenavir, atazanavir, indinavir, kynostatin, lopinavir, nelfinavir, ritonavir, saquinavir and telinavir; when associated with other amino acid changes.">
    <original>A</original>
    <variation>V</variation>
    <location>
        <position position="559"/>
    </location>
</feature>
<feature type="sequence variant" description="Confers resistance to indinavir, nelfinavir, ritonavir and saquinavir; when associated with other amino acid changes.">
    <original>G</original>
    <variation>S</variation>
    <location>
        <position position="561"/>
    </location>
</feature>
<feature type="sequence variant" description="Confers resistance to indinavir, nelfinavir, ritonavir and saquinavir; when associated with other amino acid changes.">
    <original>V</original>
    <variation>I</variation>
    <location>
        <position position="565"/>
    </location>
</feature>
<feature type="sequence variant" description="Confers resistance to A-77003, indinavir, lopinavir, nelfinavir, ritonavir and saquinavir; when associated with other amino acid changes.">
    <original>V</original>
    <variation>A</variation>
    <location>
        <position position="570"/>
    </location>
</feature>
<feature type="sequence variant" description="Confers resistance to lopinavir and ritonavir; when associated with other amino acid changes.">
    <original>V</original>
    <variation>F</variation>
    <location>
        <position position="570"/>
    </location>
</feature>
<feature type="sequence variant" description="Confers resistance to A-77003 and kynostatin; when associated with other amino acid changes.">
    <original>V</original>
    <variation>I</variation>
    <location>
        <position position="570"/>
    </location>
</feature>
<feature type="sequence variant" description="Confers resistance to lopinavir and ritonavir.">
    <original>V</original>
    <variation>S</variation>
    <location>
        <position position="570"/>
    </location>
</feature>
<feature type="sequence variant" description="Confers resistance to indinavir, lopinavir, ritonavir and saquinavir; when associated with other amino acid changes.">
    <original>V</original>
    <variation>T</variation>
    <location>
        <position position="570"/>
    </location>
</feature>
<feature type="sequence variant" description="Confers resistance to atazanavir, indinavir, lopinavir, nelfinavir, ritonavir and saquinavir; when associated with other amino acid changes.">
    <original>I</original>
    <variation>A</variation>
    <location>
        <position position="572"/>
    </location>
</feature>
<feature type="sequence variant" description="Confers resistance to amprenavir, atazanavir, indinavir, kynostatin, lopinavir, nelfinavir, ritonavir, saquinavir and telinavir; when associated with other amino acid changes.">
    <original>I</original>
    <variation>V</variation>
    <location>
        <position position="572"/>
    </location>
</feature>
<feature type="sequence variant" description="Confers resistance to nelfinavir; when associated with other amino acid changes.">
    <original>N</original>
    <variation>D</variation>
    <location>
        <position position="576"/>
    </location>
</feature>
<feature type="sequence variant" description="Confers resistance to atazanavir, indinavir and nelfinavir; when associated with other amino acid changes.">
    <original>N</original>
    <variation>S</variation>
    <location>
        <position position="576"/>
    </location>
</feature>
<feature type="sequence variant" description="Confers resistance to atazanavir; when associated with other amino acid changes.">
    <original>L</original>
    <variation>M</variation>
    <location>
        <position position="577"/>
    </location>
</feature>
<feature type="sequence variant" description="Confers resistance to indinavir, lopinavir, nelfinavir, ritonavir and saquinavir; when associated with other amino acid changes.">
    <original>L</original>
    <variation>M</variation>
    <location>
        <position position="578"/>
    </location>
</feature>
<feature type="sequence variant" description="Confers resistance to lopinavir, ritonavir and saquinavir; when associated with other amino acid changes.">
    <original>T</original>
    <variation>S</variation>
    <location>
        <position position="579"/>
    </location>
</feature>
<feature type="sequence variant" description="Confers resistance to indinavir.">
    <original>I</original>
    <variation>L</variation>
    <location>
        <position position="581"/>
    </location>
</feature>
<feature type="sequence variant" description="Confers resistance to zidovudine; when associated with other amino acid changes.">
    <original>M</original>
    <variation>L</variation>
    <location>
        <position position="628"/>
    </location>
</feature>
<feature type="sequence variant" description="Confers resistance to lamivudine.">
    <original>E</original>
    <variation>A</variation>
    <location>
        <position position="631"/>
    </location>
</feature>
<feature type="sequence variant" description="Confers resistance to zidovudine; when associated with other amino acid changes.">
    <original>E</original>
    <variation>D</variation>
    <location>
        <position position="631"/>
    </location>
</feature>
<feature type="sequence variant" description="Confers resistance to stavudine.">
    <original>P</original>
    <variation>R</variation>
    <location>
        <position position="639"/>
    </location>
</feature>
<feature type="sequence variant" description="Confers resistance to stavudine.">
    <original>N</original>
    <variation>D</variation>
    <location>
        <position position="641"/>
    </location>
</feature>
<feature type="sequence variant" description="Confers multi-NRTI resistance; when associated with other amino acid changes.">
    <original>A</original>
    <variation>V</variation>
    <location>
        <position position="649"/>
    </location>
</feature>
<feature type="sequence variant" description="Confers resistance to abacavir, adefovir, didenosine, lamivudine, stavudine, tenofir and zidovuline; when associated with other amino acid changes.">
    <original>K</original>
    <variation>R</variation>
    <location>
        <position position="652"/>
    </location>
</feature>
<feature type="sequence variant" description="Confers resistance to zidovudine.">
    <original>D</original>
    <variation>A</variation>
    <location>
        <position position="654"/>
    </location>
</feature>
<feature type="sequence variant" description="Confers multi-NRTI resistance.">
    <original>D</original>
    <variation>E</variation>
    <location>
        <position position="654"/>
    </location>
</feature>
<feature type="sequence variant" description="Confers multi-NRTI resistance.">
    <original>D</original>
    <variation>G</variation>
    <location>
        <position position="654"/>
    </location>
</feature>
<feature type="sequence variant" description="Confers resistance to zidovudine.">
    <original>D</original>
    <variation>N</variation>
    <location>
        <position position="654"/>
    </location>
</feature>
<feature type="sequence variant" description="Confers multi-NRTI resistance.">
    <original>D</original>
    <variation>S</variation>
    <location>
        <position position="654"/>
    </location>
</feature>
<feature type="sequence variant" description="Confers multi-NRTI resistance; when associated with other amino acid changes.">
    <original>S</original>
    <variation>G</variation>
    <location>
        <position position="655"/>
    </location>
</feature>
<feature type="sequence variant" description="Confers multi-NRTI resistance.">
    <original>S</original>
    <variation>N</variation>
    <location>
        <position position="655"/>
    </location>
</feature>
<feature type="sequence variant" description="Confers multi-NRTI resistance.">
    <original>S</original>
    <variation>Y</variation>
    <location>
        <position position="655"/>
    </location>
</feature>
<feature type="sequence variant" description="Confers resistance to lamivudine and stavudine.">
    <original>T</original>
    <variation>A</variation>
    <location>
        <position position="656"/>
    </location>
</feature>
<feature type="sequence variant" description="Confers resistance to lamivudine, stavudine and rarely to zalcitabine.">
    <original>T</original>
    <variation>D</variation>
    <location>
        <position position="656"/>
    </location>
</feature>
<feature type="sequence variant" description="Confers resistance to didanosine, zalcitabine and zidovudine.">
    <original>T</original>
    <variation>G</variation>
    <location>
        <position position="656"/>
    </location>
</feature>
<feature type="sequence variant" description="Confers resistance to lamivudine and stavudine.">
    <original>T</original>
    <variation>N</variation>
    <location>
        <position position="656"/>
    </location>
</feature>
<feature type="sequence variant" description="Confers resistance to adefovir and lamivudine.">
    <original>K</original>
    <variation>E</variation>
    <location>
        <position position="657"/>
    </location>
</feature>
<feature type="sequence variant" description="Confers resistance to zidovudine; when associated with other amino acid changes.">
    <original>K</original>
    <variation>R</variation>
    <location>
        <position position="657"/>
    </location>
</feature>
<feature type="sequence variant" description="Confers resistance to didanosine and stavudine.">
    <original>K</original>
    <variation>S</variation>
    <location>
        <position position="657"/>
    </location>
</feature>
<feature type="sequence variant" description="Confers resistance to HBY 097.">
    <original>L</original>
    <variation>I</variation>
    <location>
        <position position="661"/>
    </location>
</feature>
<feature type="sequence variant" description="Confers resistance to abacavir, didanosine, HBY 097 and zalcitabine; when associated with other amino acid changes.">
    <original>L</original>
    <variation>V</variation>
    <location>
        <position position="661"/>
    </location>
</feature>
<feature type="sequence variant" description="Confers multi-NRTI resistance; when associated with other amino acid changes.">
    <original>V</original>
    <variation>I</variation>
    <location>
        <position position="662"/>
    </location>
</feature>
<feature type="sequence variant" description="Confers resistance to HBY 097.">
    <original>V</original>
    <variation>L</variation>
    <location>
        <position position="662"/>
    </location>
</feature>
<feature type="sequence variant" description="Confers resistance to stavudine and zalcitabine.">
    <original>V</original>
    <variation>M</variation>
    <location>
        <position position="662"/>
    </location>
</feature>
<feature type="sequence variant" description="Confers resistance to d4C, didanosine, stavudine and zalcitabine.">
    <original>V</original>
    <variation>T</variation>
    <location>
        <position position="662"/>
    </location>
</feature>
<feature type="sequence variant" description="Confers multi-NRTI resistance; when associated with other amino acid changes.">
    <original>F</original>
    <variation>L</variation>
    <location>
        <position position="664"/>
    </location>
</feature>
<feature type="sequence variant" description="Confers resistance to pyrophosphate analog PFA.">
    <original>W</original>
    <variation>G</variation>
    <location>
        <position position="675"/>
    </location>
</feature>
<feature type="sequence variant" description="Confers resistance to pyrophosphate analog PFA.">
    <original>W</original>
    <variation>S</variation>
    <location>
        <position position="675"/>
    </location>
</feature>
<feature type="sequence variant" description="Confers resistance to pyrophosphate analog PFA.">
    <original>E</original>
    <variation>G</variation>
    <location>
        <position position="676"/>
    </location>
</feature>
<feature type="sequence variant" description="Confers resistance to pyrophosphate analog PFA.">
    <original>E</original>
    <variation>K</variation>
    <location>
        <position position="676"/>
    </location>
</feature>
<feature type="sequence variant" description="Confers resistance to pyrophosphate analog PFA.">
    <original>L</original>
    <variation>I</variation>
    <location>
        <position position="679"/>
    </location>
</feature>
<feature type="sequence variant" description="Confers resistance to nevirapine and efavirenz.">
    <original>L</original>
    <variation>I</variation>
    <location>
        <position position="687"/>
    </location>
</feature>
<feature type="sequence variant" description="Confers resistance to atevirdine, efavirenz, nevirapine and zidovudine.">
    <original>K</original>
    <variation>E</variation>
    <location>
        <position position="688"/>
    </location>
</feature>
<feature type="sequence variant" description="Confers resistance to TMC125; when associated with E-142.">
    <original>K</original>
    <variation>P</variation>
    <location>
        <position position="688"/>
    </location>
</feature>
<feature type="sequence variant" description="Confers resistance to efavirenz; when associated with I-19.">
    <original>K</original>
    <variation>Q</variation>
    <location>
        <position position="688"/>
    </location>
</feature>
<feature type="sequence variant" description="Confers resistance to atevirdine; when associated with other amino acid changes.">
    <original>K</original>
    <variation>E</variation>
    <location>
        <position position="690"/>
    </location>
</feature>
<feature type="sequence variant" description="Confers resistance to atevirdine, efavirenz, emivirine and nevirapine; when associated with other amino acid changes.">
    <original>K</original>
    <variation>N</variation>
    <location>
        <position position="690"/>
    </location>
</feature>
<feature type="sequence variant" description="Confers resistance to emivirine and trovirdine; when associated with other D-179 and C-181.">
    <original>K</original>
    <variation>R</variation>
    <location>
        <position position="690"/>
    </location>
</feature>
<feature type="sequence variant" description="Confers resistance to nevirapine.">
    <original>V</original>
    <variation>A</variation>
    <location>
        <position position="693"/>
    </location>
</feature>
<feature type="sequence variant" description="Confers resistance to HBY 097.">
    <original>V</original>
    <variation>I</variation>
    <location>
        <position position="693"/>
    </location>
</feature>
<feature type="sequence variant" description="Confers resistance to delavirdine, efavirenz and nevirapine.">
    <original>V</original>
    <variation>M</variation>
    <location>
        <position position="693"/>
    </location>
</feature>
<feature type="sequence variant" description="Confers resistance to efavirenz, emivirine, nevirapine and trovirdine; when associated with other amino acid changes.">
    <original>V</original>
    <variation>I</variation>
    <location>
        <position position="695"/>
    </location>
</feature>
<feature type="sequence variant" description="Confers resistance to abacavir; when associated with other amino acid changes.">
    <original>Y</original>
    <variation>F</variation>
    <location>
        <position position="702"/>
    </location>
</feature>
<feature type="sequence variant" description="Confers multi-NRTI resistance; when associated with other amino acid changes.">
    <original>F</original>
    <variation>Y</variation>
    <location>
        <position position="703"/>
    </location>
</feature>
<feature type="sequence variant" description="Confers resistance to zidovudine; when associated with other amino acid changes.">
    <original>V</original>
    <variation>I</variation>
    <location>
        <position position="705"/>
    </location>
</feature>
<feature type="sequence variant" description="Confers resistance to lodenosine.">
    <original>P</original>
    <variation>S</variation>
    <location>
        <position position="706"/>
    </location>
</feature>
<feature type="sequence variant" description="Confers resistance to delavirdine, efavirenz and nevirapine; when associated with I-239.">
    <original>I</original>
    <variation>L</variation>
    <location>
        <position position="722"/>
    </location>
</feature>
<feature type="sequence variant" description="Confers resistance to delavirdine, efavirenz and nevirapine; when associated with I-239.">
    <original>I</original>
    <variation>M</variation>
    <location>
        <position position="722"/>
    </location>
</feature>
<feature type="sequence variant" description="Confers resistance to delavirdine, efavirenz and nevirapine; when associated with I-239.">
    <original>I</original>
    <variation>T</variation>
    <location>
        <position position="722"/>
    </location>
</feature>
<feature type="sequence variant" description="Confers resistance to emivirine.">
    <original>E</original>
    <variation>K</variation>
    <location>
        <position position="725"/>
    </location>
</feature>
<feature type="sequence variant" description="Confers both multi-NRTI and multi-NNRTI resistance.">
    <original>Q</original>
    <variation>M</variation>
    <location>
        <position position="732"/>
    </location>
</feature>
<feature type="sequence variant" description="Confers multi-NRTI resistance; when associated with other amino acid changes.">
    <original>Q</original>
    <variation>M</variation>
    <location>
        <position position="738"/>
    </location>
</feature>
<feature type="sequence variant" description="Confers resistance to pyrophosphate analog PFA.">
    <original>S</original>
    <variation>A</variation>
    <location>
        <position position="743"/>
    </location>
</feature>
<feature type="sequence variant" description="Confers resistance to lamivudine.">
    <original>P</original>
    <variation>S</variation>
    <location>
        <position position="744"/>
    </location>
</feature>
<feature type="sequence variant" description="Confers resistance to pyrophosphate analog PFA.">
    <original>Q</original>
    <variation>L</variation>
    <location>
        <position position="748"/>
    </location>
</feature>
<feature type="sequence variant" description="Confers resistance to efavirenz, tivirapine and trovirdine; when associated with other amino acid changes.">
    <original>V</original>
    <variation>D</variation>
    <location>
        <position position="766"/>
    </location>
</feature>
<feature type="sequence variant" description="Confers multi-NNRTI resistance.">
    <original>Y</original>
    <variation>C</variation>
    <location>
        <position position="768"/>
    </location>
</feature>
<feature type="sequence variant" description="Confers resistance to lamivudine and emtricitabine.">
    <original>M</original>
    <variation>I</variation>
    <location>
        <position position="771"/>
    </location>
</feature>
<feature type="sequence variant" description="Confers resistance to abacavir, didanosine, emtricitabine, lamivudine and zalcitabine.">
    <original>M</original>
    <variation>T</variation>
    <location>
        <position position="771"/>
    </location>
</feature>
<feature type="sequence variant" description="Confers resistance to lamivudine.">
    <original>M</original>
    <variation>V</variation>
    <location>
        <position position="771"/>
    </location>
</feature>
<feature type="sequence variant" description="Confers resistance to nevirapine.">
    <original>Y</original>
    <variation>C</variation>
    <location>
        <position position="775"/>
    </location>
</feature>
<feature type="sequence variant" description="Confers resistance to atevirdine, efavirenz, loviride and zidovudine.">
    <original>Y</original>
    <variation>H</variation>
    <location>
        <position position="775"/>
    </location>
</feature>
<feature type="sequence variant" description="Confers resistance to efavirenz.">
    <original>Y</original>
    <variation>L</variation>
    <location>
        <position position="775"/>
    </location>
</feature>
<feature type="sequence variant" description="Confers resistance to HBY 097.">
    <original>V</original>
    <variation>I</variation>
    <location>
        <position position="776"/>
    </location>
</feature>
<feature type="sequence variant" description="Confers resistance to efavirenz and nevirapine.">
    <original>G</original>
    <variation>A</variation>
    <location>
        <position position="777"/>
    </location>
</feature>
<feature type="sequence variant" description="Confers resistance to efavirenz and nevirapine.">
    <original>G</original>
    <variation>C</variation>
    <location>
        <position position="777"/>
    </location>
</feature>
<feature type="sequence variant" description="Confers resistance to efavirenz, nevirapine and quinoxaline.">
    <original>G</original>
    <variation>E</variation>
    <location>
        <position position="777"/>
    </location>
</feature>
<feature type="sequence variant" description="Confers resistance to efavirenz, HBY 097 and nevirapine.">
    <original>G</original>
    <variation>Q</variation>
    <location>
        <position position="777"/>
    </location>
</feature>
<feature type="sequence variant" description="Confers resistance to efavirenz and nevirapine.">
    <original>G</original>
    <variation>S</variation>
    <location>
        <position position="777"/>
    </location>
</feature>
<feature type="sequence variant" description="Confers resistance to efavirenz, HBY 097 and nevirapine.">
    <original>G</original>
    <variation>T</variation>
    <location>
        <position position="777"/>
    </location>
</feature>
<feature type="sequence variant" description="Confers resistance to efavirenz and nevirapine.">
    <original>G</original>
    <variation>V</variation>
    <location>
        <position position="777"/>
    </location>
</feature>
<feature type="sequence variant" description="Confers resistance to lamivudine, pyrophosphate analog PFA and zidovudine.">
    <original>H</original>
    <variation>Y</variation>
    <location>
        <position position="795"/>
    </location>
</feature>
<feature type="sequence variant" description="Confers resistance to zidovudine.">
    <original>L</original>
    <variation>W</variation>
    <location>
        <position position="797"/>
    </location>
</feature>
<feature type="sequence variant" description="Confers resistance to lamivudine and zidovudine.">
    <original>R</original>
    <variation>K</variation>
    <location>
        <position position="798"/>
    </location>
</feature>
<feature type="sequence variant" description="Confers resistance to ph-AZT and zidovudine.">
    <original>L</original>
    <variation>F</variation>
    <location>
        <position position="801"/>
    </location>
</feature>
<feature type="sequence variant" description="Confers resistance to zidovudine; when associated with other amino acid changes.">
    <original>T</original>
    <variation>F</variation>
    <location>
        <position position="802"/>
    </location>
</feature>
<feature type="sequence variant" description="Confers resistance to zidovudine; when associated with other amino acid changes.">
    <original>T</original>
    <variation>Y</variation>
    <location>
        <position position="802"/>
    </location>
</feature>
<feature type="sequence variant" description="Confers resistance to zidovudine.">
    <original>K</original>
    <variation>E</variation>
    <location>
        <position position="806"/>
    </location>
</feature>
<feature type="sequence variant" description="Confers resistance to zidovudine; when associated with other amino acid changes.">
    <original>K</original>
    <variation>Q</variation>
    <location>
        <position position="806"/>
    </location>
</feature>
<feature type="sequence variant" description="Confers resistance to lamivudine, stavudine, zalcicabine and zidovudine.">
    <original>K</original>
    <variation>R</variation>
    <location>
        <position position="806"/>
    </location>
</feature>
<feature type="sequence variant" description="Confers resistance to efavirenz, emivirine, HBY 097 and quinoxaline; when associated with A-17.">
    <original>P</original>
    <variation>H</variation>
    <location>
        <position position="812"/>
    </location>
</feature>
<feature type="sequence variant" description="Confers resistance to atevirdine and delavirdine.">
    <original>P</original>
    <variation>L</variation>
    <location>
        <position position="823"/>
    </location>
</feature>
<feature type="sequence variant" description="Confers resistance to atevirdine and zidovudine; when associated with other amino acid changes.">
    <original>K</original>
    <variation>T</variation>
    <location>
        <position position="825"/>
    </location>
</feature>
<feature type="sequence variant" description="Confers resistance to delavirdine, efavirenz and nevirapine.">
    <original>L</original>
    <variation>I</variation>
    <location>
        <position position="870"/>
    </location>
</feature>
<feature type="sequence variant" description="Confers resistance to delavirdine and nevirapine.">
    <original>Y</original>
    <variation>F</variation>
    <location>
        <position position="905"/>
    </location>
</feature>
<feature type="sequence variant" description="Confers resistance to abacavir, lamivudine and zidovudine.">
    <original>G</original>
    <variation>D</variation>
    <location>
        <position position="920"/>
    </location>
</feature>
<feature type="sequence variant" description="Confers resistance to abacavir, lamivudine and zidovudine.">
    <original>G</original>
    <variation>E</variation>
    <location>
        <position position="920"/>
    </location>
</feature>
<feature type="sequence variant" description="Confers resistance to abacavir, lamivudine and zidovudine.">
    <original>T</original>
    <variation>I</variation>
    <location>
        <position position="973"/>
    </location>
</feature>
<feature type="mutagenesis site" description="No influence on the PIP2- or concentration-dependent myristyl switch mechanism." evidence="29">
    <original>S</original>
    <variation>D</variation>
    <location>
        <position position="6"/>
    </location>
</feature>
<feature type="mutagenesis site" description="No influence on the PIP2- or concentration-dependent myristyl switch mechanism." evidence="29">
    <original>S</original>
    <variation>D</variation>
    <location>
        <position position="9"/>
    </location>
</feature>
<feature type="mutagenesis site" description="Replication-defective, induces nuclear mislocalization of matrix protein; when associated with G-22." evidence="17">
    <original>K</original>
    <variation>A</variation>
    <location>
        <position position="18"/>
    </location>
</feature>
<feature type="mutagenesis site" description="Replication-defective, induces nuclear mislocalization of matrix protein; when associated with A-18." evidence="17">
    <original>R</original>
    <variation>G</variation>
    <location>
        <position position="22"/>
    </location>
</feature>
<feature type="mutagenesis site" description="No effect on subcellular localization of matrix protein; when associated with A-18 and G-22." evidence="17">
    <original>K</original>
    <variation>A</variation>
    <location>
        <position position="27"/>
    </location>
</feature>
<feature type="mutagenesis site" description="No influence on the PIP2- or concentration-dependent myristyl switch mechanism." evidence="29">
    <original>S</original>
    <variation>D</variation>
    <location>
        <position position="67"/>
    </location>
</feature>
<feature type="mutagenesis site" description="No influence on the PIP2- or concentration-dependent myristyl switch mechanism." evidence="29">
    <original>S</original>
    <variation>D</variation>
    <location>
        <position position="72"/>
    </location>
</feature>
<feature type="mutagenesis site" description="3-fold decrease of PPIA-binding affinity." evidence="52">
    <original>P</original>
    <variation>A</variation>
    <location>
        <position position="217"/>
    </location>
</feature>
<feature type="mutagenesis site" description="2.7-fold decrease of PPIA-binding affinity." evidence="52">
    <original>V</original>
    <variation>A</variation>
    <location>
        <position position="218"/>
    </location>
</feature>
<feature type="mutagenesis site" description="8-fold decrease of PPIA-binding affinity." evidence="52">
    <original>H</original>
    <variation>A</variation>
    <variation>Q</variation>
    <location>
        <position position="219"/>
    </location>
</feature>
<feature type="mutagenesis site" description="44-fold decrease of PPIA-binding affinity." evidence="52">
    <original>A</original>
    <variation>G</variation>
    <location>
        <position position="220"/>
    </location>
</feature>
<feature type="mutagenesis site" description="3.4-fold decrease of PPIA-binding affinity." evidence="52">
    <original>A</original>
    <variation>V</variation>
    <location>
        <position position="220"/>
    </location>
</feature>
<feature type="mutagenesis site" description="31-fold decrease of PPIA-binding affinity." evidence="52">
    <original>G</original>
    <variation>A</variation>
    <location>
        <position position="221"/>
    </location>
</feature>
<feature type="mutagenesis site" description="154-fold decrease of PPIA-binding affinity." evidence="52">
    <original>G</original>
    <variation>V</variation>
    <location>
        <position position="221"/>
    </location>
</feature>
<feature type="mutagenesis site" description="36-fold decrease of PPIA-binding affinity." evidence="52">
    <original>P</original>
    <variation>A</variation>
    <location>
        <position position="222"/>
    </location>
</feature>
<feature type="mutagenesis site" description="More than 150-fold decrease of PPIA-binding affinity." evidence="52">
    <original>P</original>
    <variation>V</variation>
    <location>
        <position position="222"/>
    </location>
</feature>
<feature type="mutagenesis site" description="1.2-fold decrease of PPIA-binding affinity." evidence="52">
    <original>I</original>
    <variation>A</variation>
    <location>
        <position position="223"/>
    </location>
</feature>
<feature type="mutagenesis site" description="1.0-fold decrease of PPIA-binding affinity." evidence="52">
    <original>I</original>
    <variation>V</variation>
    <location>
        <position position="223"/>
    </location>
</feature>
<feature type="mutagenesis site" description="2.3-fold decrease of PPIA-binding affinity." evidence="52">
    <original>A</original>
    <variation>G</variation>
    <location>
        <position position="224"/>
    </location>
</feature>
<feature type="mutagenesis site" description="1.7-fold decrease of PPIA-binding affinity." evidence="52">
    <original>A</original>
    <variation>V</variation>
    <location>
        <position position="224"/>
    </location>
</feature>
<feature type="mutagenesis site" description="1.6-fold decrease of PPIA-binding affinity." evidence="52">
    <original>P</original>
    <variation>A</variation>
    <location>
        <position position="225"/>
    </location>
</feature>
<feature type="mutagenesis site" description="Decreases infectivity and replication." evidence="27">
    <original>N</original>
    <variation>F</variation>
    <variation>G</variation>
    <location>
        <position position="394"/>
    </location>
</feature>
<feature type="mutagenesis site" description="Complete loss of infectivity and in vitro chaperone activity." evidence="19">
    <original>H</original>
    <variation>C</variation>
    <location>
        <position position="400"/>
    </location>
</feature>
<feature type="mutagenesis site" description="Complete loss of infectivity and DNA synthesis." evidence="19">
    <original>C</original>
    <variation>H</variation>
    <location>
        <position position="405"/>
    </location>
</feature>
<feature type="mutagenesis site" description="Partial loss of infectivity. Complete loss of in vitro chaperone activity." evidence="19">
    <original>H</original>
    <variation>C</variation>
    <location>
        <position position="421"/>
    </location>
</feature>
<feature type="mutagenesis site" description="Partial loss of infectivity." evidence="19">
    <original>C</original>
    <variation>H</variation>
    <location>
        <position position="426"/>
    </location>
</feature>
<feature type="mutagenesis site" description="Complete loss of RT p66/p51 cleavage." evidence="25">
    <original>FPQ</original>
    <variation>IPK</variation>
    <location>
        <begin position="488"/>
        <end position="490"/>
    </location>
</feature>
<feature type="mutagenesis site" description="Abolished protease activity." evidence="45">
    <original>D</original>
    <variation>H</variation>
    <location>
        <position position="513"/>
    </location>
</feature>
<feature type="mutagenesis site" description="Complete loss of RT dimerization." evidence="25">
    <original>L</original>
    <variation>A</variation>
    <location>
        <position position="821"/>
    </location>
</feature>
<feature type="mutagenesis site" description="Complete loss of RNase H activity." evidence="20">
    <original>E</original>
    <variation>Q</variation>
    <location>
        <position position="1065"/>
    </location>
</feature>
<feature type="mutagenesis site" description="Complete loss of RNase H activity." evidence="20">
    <original>D</original>
    <variation>N</variation>
    <location>
        <position position="1136"/>
    </location>
</feature>
<feature type="mutagenesis site" description="No effect on integrase activity in vitro." evidence="49">
    <original>H</original>
    <variation>C</variation>
    <location>
        <position position="1159"/>
    </location>
</feature>
<feature type="mutagenesis site" description="75% increase of integrase activity in vitro." evidence="49">
    <original>H</original>
    <variation>C</variation>
    <variation>V</variation>
    <location>
        <position position="1163"/>
    </location>
</feature>
<feature type="mutagenesis site" description="Complete loss of integrase activity in vivo." evidence="48">
    <original>C</original>
    <variation>A</variation>
    <location>
        <position position="1187"/>
    </location>
</feature>
<feature type="mutagenesis site" description="Complete loss of integrase activity in vivo." evidence="48">
    <original>C</original>
    <variation>A</variation>
    <location>
        <position position="1190"/>
    </location>
</feature>
<feature type="mutagenesis site" description="75% increase of integrase activity in vitro." evidence="49">
    <original>Q</original>
    <variation>C</variation>
    <location>
        <position position="1200"/>
    </location>
</feature>
<feature type="mutagenesis site" description="Complete loss of integrase activity in vivo." evidence="48">
    <original>W</original>
    <variation>A</variation>
    <location>
        <position position="1208"/>
    </location>
</feature>
<feature type="mutagenesis site" description="Complete loss of integrase activity in vivo and in vitro." evidence="48 49 53">
    <original>D</original>
    <variation>A</variation>
    <variation>V</variation>
    <location>
        <position position="1211"/>
    </location>
</feature>
<feature type="mutagenesis site" description="No effect on infectivity." evidence="48">
    <original>T</original>
    <variation>A</variation>
    <location>
        <position position="1213"/>
    </location>
</feature>
<feature type="mutagenesis site" description="Complete loss of integrase activity." evidence="48">
    <original>V</original>
    <variation>P</variation>
    <location>
        <position position="1222"/>
    </location>
</feature>
<feature type="mutagenesis site" description="Complete loss of integrase activity in vivo." evidence="48 49">
    <original>S</original>
    <variation>A</variation>
    <location>
        <position position="1228"/>
    </location>
</feature>
<feature type="mutagenesis site" description="No effect on integrase activity in vitro." evidence="48 49">
    <original>S</original>
    <variation>R</variation>
    <location>
        <position position="1228"/>
    </location>
</feature>
<feature type="mutagenesis site" description="No effect infectivity." evidence="48">
    <original>T</original>
    <variation>A</variation>
    <location>
        <position position="1262"/>
    </location>
</feature>
<feature type="mutagenesis site" description="Complete loss of integrase activity in vivo and in vitro." evidence="48 49 53">
    <original>D</original>
    <variation>A</variation>
    <variation>I</variation>
    <location>
        <position position="1263"/>
    </location>
</feature>
<feature type="mutagenesis site" description="No effect on infectivity." evidence="48">
    <original>G</original>
    <variation>A</variation>
    <location>
        <position position="1270"/>
    </location>
</feature>
<feature type="mutagenesis site" description="Complete loss of integrase activity in vivo." evidence="48">
    <original>I</original>
    <variation>P</variation>
    <location>
        <position position="1282"/>
    </location>
</feature>
<feature type="mutagenesis site" description="No effect on infectivity." evidence="48">
    <original>V</original>
    <variation>A</variation>
    <location>
        <position position="1298"/>
    </location>
</feature>
<feature type="mutagenesis site" description="Complete loss of integrase activity in vitro." evidence="48 49 53">
    <original>E</original>
    <variation>G</variation>
    <variation>P</variation>
    <location>
        <position position="1299"/>
    </location>
</feature>
<feature type="mutagenesis site" description="Slow down virus replication." evidence="48">
    <original>K</original>
    <variation>P</variation>
    <location>
        <position position="1306"/>
    </location>
</feature>
<feature type="mutagenesis site" description="Complete loss of integrase activity in vivo." evidence="48">
    <original>A</original>
    <variation>P</variation>
    <location>
        <position position="1326"/>
    </location>
</feature>
<feature type="mutagenesis site" description="75% increase of integrase activity in vitro." evidence="49">
    <original>R</original>
    <variation>C</variation>
    <location>
        <position position="1346"/>
    </location>
</feature>
<feature type="mutagenesis site" description="Complete loss of infectivity. No effect on integrase activity in vitro." evidence="48 49">
    <original>W</original>
    <variation>A</variation>
    <location>
        <position position="1382"/>
    </location>
</feature>
<feature type="mutagenesis site" description="75% increase of integrase activity in vitro." evidence="48 49">
    <original>W</original>
    <variation>E</variation>
    <location>
        <position position="1382"/>
    </location>
</feature>
<feature type="strand" evidence="69">
    <location>
        <begin position="7"/>
        <end position="10"/>
    </location>
</feature>
<feature type="helix" evidence="69">
    <location>
        <begin position="11"/>
        <end position="18"/>
    </location>
</feature>
<feature type="strand" evidence="69">
    <location>
        <begin position="19"/>
        <end position="21"/>
    </location>
</feature>
<feature type="strand" evidence="69">
    <location>
        <begin position="23"/>
        <end position="25"/>
    </location>
</feature>
<feature type="helix" evidence="69">
    <location>
        <begin position="31"/>
        <end position="45"/>
    </location>
</feature>
<feature type="strand" evidence="69">
    <location>
        <begin position="46"/>
        <end position="48"/>
    </location>
</feature>
<feature type="turn" evidence="69">
    <location>
        <begin position="50"/>
        <end position="52"/>
    </location>
</feature>
<feature type="helix" evidence="69">
    <location>
        <begin position="54"/>
        <end position="67"/>
    </location>
</feature>
<feature type="turn" evidence="69">
    <location>
        <begin position="68"/>
        <end position="70"/>
    </location>
</feature>
<feature type="helix" evidence="69">
    <location>
        <begin position="72"/>
        <end position="90"/>
    </location>
</feature>
<feature type="helix" evidence="69">
    <location>
        <begin position="97"/>
        <end position="108"/>
    </location>
</feature>
<feature type="helix" evidence="69">
    <location>
        <begin position="109"/>
        <end position="112"/>
    </location>
</feature>
<feature type="strand" evidence="69">
    <location>
        <begin position="116"/>
        <end position="118"/>
    </location>
</feature>
<feature type="turn" evidence="87">
    <location>
        <begin position="268"/>
        <end position="271"/>
    </location>
</feature>
<feature type="helix" evidence="71">
    <location>
        <begin position="282"/>
        <end position="284"/>
    </location>
</feature>
<feature type="helix" evidence="71">
    <location>
        <begin position="293"/>
        <end position="304"/>
    </location>
</feature>
<feature type="helix" evidence="71">
    <location>
        <begin position="311"/>
        <end position="324"/>
    </location>
</feature>
<feature type="helix" evidence="71">
    <location>
        <begin position="330"/>
        <end position="337"/>
    </location>
</feature>
<feature type="helix" evidence="71">
    <location>
        <begin position="343"/>
        <end position="349"/>
    </location>
</feature>
<feature type="turn" evidence="71">
    <location>
        <begin position="350"/>
        <end position="353"/>
    </location>
</feature>
<feature type="strand" evidence="71">
    <location>
        <begin position="357"/>
        <end position="360"/>
    </location>
</feature>
<feature type="strand" evidence="61">
    <location>
        <begin position="393"/>
        <end position="395"/>
    </location>
</feature>
<feature type="turn" evidence="61">
    <location>
        <begin position="402"/>
        <end position="404"/>
    </location>
</feature>
<feature type="strand" evidence="61">
    <location>
        <begin position="414"/>
        <end position="416"/>
    </location>
</feature>
<feature type="turn" evidence="61">
    <location>
        <begin position="423"/>
        <end position="425"/>
    </location>
</feature>
<feature type="strand" evidence="64">
    <location>
        <begin position="490"/>
        <end position="492"/>
    </location>
</feature>
<feature type="strand" evidence="84">
    <location>
        <begin position="493"/>
        <end position="495"/>
    </location>
</feature>
<feature type="strand" evidence="84">
    <location>
        <begin position="498"/>
        <end position="503"/>
    </location>
</feature>
<feature type="strand" evidence="84">
    <location>
        <begin position="506"/>
        <end position="512"/>
    </location>
</feature>
<feature type="strand" evidence="84">
    <location>
        <begin position="517"/>
        <end position="521"/>
    </location>
</feature>
<feature type="strand" evidence="84">
    <location>
        <begin position="530"/>
        <end position="537"/>
    </location>
</feature>
<feature type="strand" evidence="84">
    <location>
        <begin position="540"/>
        <end position="554"/>
    </location>
</feature>
<feature type="strand" evidence="84">
    <location>
        <begin position="557"/>
        <end position="566"/>
    </location>
</feature>
<feature type="strand" evidence="66">
    <location>
        <begin position="569"/>
        <end position="573"/>
    </location>
</feature>
<feature type="helix" evidence="84">
    <location>
        <begin position="575"/>
        <end position="578"/>
    </location>
</feature>
<feature type="turn" evidence="84">
    <location>
        <begin position="579"/>
        <end position="582"/>
    </location>
</feature>
<feature type="strand" evidence="84">
    <location>
        <begin position="584"/>
        <end position="586"/>
    </location>
</feature>
<feature type="helix" evidence="92">
    <location>
        <begin position="591"/>
        <end position="593"/>
    </location>
</feature>
<feature type="strand" evidence="88">
    <location>
        <begin position="597"/>
        <end position="599"/>
    </location>
</feature>
<feature type="strand" evidence="72">
    <location>
        <begin position="600"/>
        <end position="602"/>
    </location>
</feature>
<feature type="strand" evidence="73">
    <location>
        <begin position="607"/>
        <end position="611"/>
    </location>
</feature>
<feature type="strand" evidence="77">
    <location>
        <begin position="613"/>
        <end position="618"/>
    </location>
</feature>
<feature type="helix" evidence="76">
    <location>
        <begin position="625"/>
        <end position="629"/>
    </location>
</feature>
<feature type="turn" evidence="70">
    <location>
        <begin position="630"/>
        <end position="632"/>
    </location>
</feature>
<feature type="strand" evidence="92">
    <location>
        <begin position="633"/>
        <end position="636"/>
    </location>
</feature>
<feature type="strand" evidence="72">
    <location>
        <begin position="639"/>
        <end position="641"/>
    </location>
</feature>
<feature type="strand" evidence="92">
    <location>
        <begin position="647"/>
        <end position="650"/>
    </location>
</feature>
<feature type="turn" evidence="78">
    <location>
        <begin position="653"/>
        <end position="656"/>
    </location>
</feature>
<feature type="strand" evidence="92">
    <location>
        <begin position="659"/>
        <end position="662"/>
    </location>
</feature>
<feature type="helix" evidence="92">
    <location>
        <begin position="665"/>
        <end position="670"/>
    </location>
</feature>
<feature type="helix" evidence="81">
    <location>
        <begin position="672"/>
        <end position="676"/>
    </location>
</feature>
<feature type="turn" evidence="81">
    <location>
        <begin position="677"/>
        <end position="679"/>
    </location>
</feature>
<feature type="helix" evidence="89">
    <location>
        <begin position="684"/>
        <end position="686"/>
    </location>
</feature>
<feature type="helix" evidence="92">
    <location>
        <begin position="687"/>
        <end position="689"/>
    </location>
</feature>
<feature type="strand" evidence="92">
    <location>
        <begin position="690"/>
        <end position="697"/>
    </location>
</feature>
<feature type="helix" evidence="92">
    <location>
        <begin position="699"/>
        <end position="704"/>
    </location>
</feature>
<feature type="strand" evidence="60">
    <location>
        <begin position="705"/>
        <end position="707"/>
    </location>
</feature>
<feature type="turn" evidence="92">
    <location>
        <begin position="709"/>
        <end position="711"/>
    </location>
</feature>
<feature type="helix" evidence="92">
    <location>
        <begin position="712"/>
        <end position="715"/>
    </location>
</feature>
<feature type="strand" evidence="92">
    <location>
        <begin position="717"/>
        <end position="719"/>
    </location>
</feature>
<feature type="helix" evidence="92">
    <location>
        <begin position="722"/>
        <end position="724"/>
    </location>
</feature>
<feature type="strand" evidence="91">
    <location>
        <begin position="725"/>
        <end position="727"/>
    </location>
</feature>
<feature type="strand" evidence="92">
    <location>
        <begin position="729"/>
        <end position="735"/>
    </location>
</feature>
<feature type="helix" evidence="92">
    <location>
        <begin position="742"/>
        <end position="761"/>
    </location>
</feature>
<feature type="strand" evidence="59">
    <location>
        <begin position="762"/>
        <end position="765"/>
    </location>
</feature>
<feature type="strand" evidence="92">
    <location>
        <begin position="766"/>
        <end position="770"/>
    </location>
</feature>
<feature type="strand" evidence="92">
    <location>
        <begin position="773"/>
        <end position="778"/>
    </location>
</feature>
<feature type="helix" evidence="92">
    <location>
        <begin position="782"/>
        <end position="798"/>
    </location>
</feature>
<feature type="turn" evidence="89">
    <location>
        <begin position="806"/>
        <end position="808"/>
    </location>
</feature>
<feature type="turn" evidence="90">
    <location>
        <begin position="813"/>
        <end position="816"/>
    </location>
</feature>
<feature type="strand" evidence="92">
    <location>
        <begin position="819"/>
        <end position="821"/>
    </location>
</feature>
<feature type="helix" evidence="92">
    <location>
        <begin position="823"/>
        <end position="825"/>
    </location>
</feature>
<feature type="strand" evidence="89">
    <location>
        <begin position="826"/>
        <end position="828"/>
    </location>
</feature>
<feature type="strand" evidence="68">
    <location>
        <begin position="837"/>
        <end position="840"/>
    </location>
</feature>
<feature type="helix" evidence="89">
    <location>
        <begin position="841"/>
        <end position="854"/>
    </location>
</feature>
<feature type="turn" evidence="89">
    <location>
        <begin position="855"/>
        <end position="857"/>
    </location>
</feature>
<feature type="strand" evidence="65">
    <location>
        <begin position="858"/>
        <end position="860"/>
    </location>
</feature>
<feature type="helix" evidence="89">
    <location>
        <begin position="864"/>
        <end position="869"/>
    </location>
</feature>
<feature type="turn" evidence="81">
    <location>
        <begin position="870"/>
        <end position="872"/>
    </location>
</feature>
<feature type="strand" evidence="74">
    <location>
        <begin position="876"/>
        <end position="879"/>
    </location>
</feature>
<feature type="helix" evidence="89">
    <location>
        <begin position="884"/>
        <end position="897"/>
    </location>
</feature>
<feature type="strand" evidence="65">
    <location>
        <begin position="902"/>
        <end position="904"/>
    </location>
</feature>
<feature type="strand" evidence="86">
    <location>
        <begin position="908"/>
        <end position="910"/>
    </location>
</feature>
<feature type="strand" evidence="92">
    <location>
        <begin position="913"/>
        <end position="919"/>
    </location>
</feature>
<feature type="turn" evidence="92">
    <location>
        <begin position="920"/>
        <end position="922"/>
    </location>
</feature>
<feature type="strand" evidence="92">
    <location>
        <begin position="923"/>
        <end position="929"/>
    </location>
</feature>
<feature type="strand" evidence="92">
    <location>
        <begin position="937"/>
        <end position="942"/>
    </location>
</feature>
<feature type="strand" evidence="81">
    <location>
        <begin position="945"/>
        <end position="949"/>
    </location>
</feature>
<feature type="helix" evidence="92">
    <location>
        <begin position="951"/>
        <end position="970"/>
    </location>
</feature>
<feature type="strand" evidence="92">
    <location>
        <begin position="975"/>
        <end position="977"/>
    </location>
</feature>
<feature type="helix" evidence="92">
    <location>
        <begin position="982"/>
        <end position="992"/>
    </location>
</feature>
<feature type="strand" evidence="89">
    <location>
        <begin position="993"/>
        <end position="995"/>
    </location>
</feature>
<feature type="strand" evidence="90">
    <location>
        <begin position="1001"/>
        <end position="1003"/>
    </location>
</feature>
<feature type="helix" evidence="81">
    <location>
        <begin position="1008"/>
        <end position="1013"/>
    </location>
</feature>
<feature type="strand" evidence="67">
    <location>
        <begin position="1022"/>
        <end position="1024"/>
    </location>
</feature>
<feature type="strand" evidence="80">
    <location>
        <begin position="1025"/>
        <end position="1033"/>
    </location>
</feature>
<feature type="turn" evidence="80">
    <location>
        <begin position="1035"/>
        <end position="1037"/>
    </location>
</feature>
<feature type="strand" evidence="80">
    <location>
        <begin position="1040"/>
        <end position="1046"/>
    </location>
</feature>
<feature type="strand" evidence="75">
    <location>
        <begin position="1047"/>
        <end position="1049"/>
    </location>
</feature>
<feature type="strand" evidence="80">
    <location>
        <begin position="1051"/>
        <end position="1058"/>
    </location>
</feature>
<feature type="helix" evidence="80">
    <location>
        <begin position="1061"/>
        <end position="1075"/>
    </location>
</feature>
<feature type="strand" evidence="80">
    <location>
        <begin position="1078"/>
        <end position="1085"/>
    </location>
</feature>
<feature type="helix" evidence="80">
    <location>
        <begin position="1087"/>
        <end position="1093"/>
    </location>
</feature>
<feature type="strand" evidence="81">
    <location>
        <begin position="1098"/>
        <end position="1102"/>
    </location>
</feature>
<feature type="helix" evidence="80">
    <location>
        <begin position="1105"/>
        <end position="1112"/>
    </location>
</feature>
<feature type="strand" evidence="80">
    <location>
        <begin position="1116"/>
        <end position="1122"/>
    </location>
</feature>
<feature type="strand" evidence="79">
    <location>
        <begin position="1125"/>
        <end position="1127"/>
    </location>
</feature>
<feature type="helix" evidence="80">
    <location>
        <begin position="1130"/>
        <end position="1140"/>
    </location>
</feature>
<feature type="turn" evidence="80">
    <location>
        <begin position="1141"/>
        <end position="1143"/>
    </location>
</feature>
<feature type="helix" evidence="63">
    <location>
        <begin position="1204"/>
        <end position="1206"/>
    </location>
</feature>
<feature type="strand" evidence="63">
    <location>
        <begin position="1207"/>
        <end position="1215"/>
    </location>
</feature>
<feature type="strand" evidence="63">
    <location>
        <begin position="1218"/>
        <end position="1225"/>
    </location>
</feature>
<feature type="turn" evidence="63">
    <location>
        <begin position="1226"/>
        <end position="1228"/>
    </location>
</feature>
<feature type="strand" evidence="63">
    <location>
        <begin position="1231"/>
        <end position="1240"/>
    </location>
</feature>
<feature type="helix" evidence="63">
    <location>
        <begin position="1241"/>
        <end position="1254"/>
    </location>
</feature>
<feature type="strand" evidence="63">
    <location>
        <begin position="1259"/>
        <end position="1261"/>
    </location>
</feature>
<feature type="helix" evidence="63">
    <location>
        <begin position="1266"/>
        <end position="1268"/>
    </location>
</feature>
<feature type="helix" evidence="63">
    <location>
        <begin position="1271"/>
        <end position="1280"/>
    </location>
</feature>
<feature type="strand" evidence="85">
    <location>
        <begin position="1283"/>
        <end position="1285"/>
    </location>
</feature>
<feature type="helix" evidence="82">
    <location>
        <begin position="1292"/>
        <end position="1294"/>
    </location>
</feature>
<feature type="helix" evidence="63">
    <location>
        <begin position="1302"/>
        <end position="1312"/>
    </location>
</feature>
<feature type="helix" evidence="63">
    <location>
        <begin position="1313"/>
        <end position="1315"/>
    </location>
</feature>
<feature type="helix" evidence="63">
    <location>
        <begin position="1319"/>
        <end position="1332"/>
    </location>
</feature>
<feature type="strand" evidence="63">
    <location>
        <begin position="1335"/>
        <end position="1339"/>
    </location>
</feature>
<feature type="helix" evidence="63">
    <location>
        <begin position="1343"/>
        <end position="1355"/>
    </location>
</feature>
<feature type="helix" evidence="62">
    <location>
        <begin position="1358"/>
        <end position="1368"/>
    </location>
</feature>
<feature type="strand" evidence="83">
    <location>
        <begin position="1371"/>
        <end position="1375"/>
    </location>
</feature>
<feature type="strand" evidence="83">
    <location>
        <begin position="1377"/>
        <end position="1380"/>
    </location>
</feature>
<feature type="strand" evidence="83">
    <location>
        <begin position="1382"/>
        <end position="1392"/>
    </location>
</feature>
<feature type="strand" evidence="83">
    <location>
        <begin position="1395"/>
        <end position="1400"/>
    </location>
</feature>
<feature type="strand" evidence="83">
    <location>
        <begin position="1403"/>
        <end position="1408"/>
    </location>
</feature>
<feature type="helix" evidence="83">
    <location>
        <begin position="1409"/>
        <end position="1411"/>
    </location>
</feature>
<feature type="strand" evidence="83">
    <location>
        <begin position="1412"/>
        <end position="1415"/>
    </location>
</feature>
<evidence type="ECO:0000250" key="1"/>
<evidence type="ECO:0000250" key="2">
    <source>
        <dbReference type="UniProtKB" id="P03366"/>
    </source>
</evidence>
<evidence type="ECO:0000250" key="3">
    <source>
        <dbReference type="UniProtKB" id="P03367"/>
    </source>
</evidence>
<evidence type="ECO:0000250" key="4">
    <source>
        <dbReference type="UniProtKB" id="P12493"/>
    </source>
</evidence>
<evidence type="ECO:0000250" key="5">
    <source>
        <dbReference type="UniProtKB" id="P12497"/>
    </source>
</evidence>
<evidence type="ECO:0000255" key="6"/>
<evidence type="ECO:0000255" key="7">
    <source>
        <dbReference type="PROSITE-ProRule" id="PRU00047"/>
    </source>
</evidence>
<evidence type="ECO:0000255" key="8">
    <source>
        <dbReference type="PROSITE-ProRule" id="PRU00275"/>
    </source>
</evidence>
<evidence type="ECO:0000255" key="9">
    <source>
        <dbReference type="PROSITE-ProRule" id="PRU00405"/>
    </source>
</evidence>
<evidence type="ECO:0000255" key="10">
    <source>
        <dbReference type="PROSITE-ProRule" id="PRU00408"/>
    </source>
</evidence>
<evidence type="ECO:0000255" key="11">
    <source>
        <dbReference type="PROSITE-ProRule" id="PRU00450"/>
    </source>
</evidence>
<evidence type="ECO:0000255" key="12">
    <source>
        <dbReference type="PROSITE-ProRule" id="PRU00457"/>
    </source>
</evidence>
<evidence type="ECO:0000255" key="13">
    <source>
        <dbReference type="PROSITE-ProRule" id="PRU00506"/>
    </source>
</evidence>
<evidence type="ECO:0000255" key="14">
    <source>
        <dbReference type="PROSITE-ProRule" id="PRU10094"/>
    </source>
</evidence>
<evidence type="ECO:0000256" key="15">
    <source>
        <dbReference type="SAM" id="MobiDB-lite"/>
    </source>
</evidence>
<evidence type="ECO:0000269" key="16">
    <source>
    </source>
</evidence>
<evidence type="ECO:0000269" key="17">
    <source>
    </source>
</evidence>
<evidence type="ECO:0000269" key="18">
    <source>
    </source>
</evidence>
<evidence type="ECO:0000269" key="19">
    <source>
    </source>
</evidence>
<evidence type="ECO:0000269" key="20">
    <source>
    </source>
</evidence>
<evidence type="ECO:0000269" key="21">
    <source>
    </source>
</evidence>
<evidence type="ECO:0000269" key="22">
    <source>
    </source>
</evidence>
<evidence type="ECO:0000269" key="23">
    <source>
    </source>
</evidence>
<evidence type="ECO:0000269" key="24">
    <source>
    </source>
</evidence>
<evidence type="ECO:0000269" key="25">
    <source>
    </source>
</evidence>
<evidence type="ECO:0000269" key="26">
    <source>
    </source>
</evidence>
<evidence type="ECO:0000269" key="27">
    <source>
    </source>
</evidence>
<evidence type="ECO:0000269" key="28">
    <source>
    </source>
</evidence>
<evidence type="ECO:0000269" key="29">
    <source>
    </source>
</evidence>
<evidence type="ECO:0000269" key="30">
    <source>
    </source>
</evidence>
<evidence type="ECO:0000269" key="31">
    <source>
    </source>
</evidence>
<evidence type="ECO:0000269" key="32">
    <source>
    </source>
</evidence>
<evidence type="ECO:0000269" key="33">
    <source>
    </source>
</evidence>
<evidence type="ECO:0000269" key="34">
    <source>
    </source>
</evidence>
<evidence type="ECO:0000269" key="35">
    <source>
    </source>
</evidence>
<evidence type="ECO:0000269" key="36">
    <source>
    </source>
</evidence>
<evidence type="ECO:0000269" key="37">
    <source>
    </source>
</evidence>
<evidence type="ECO:0000269" key="38">
    <source>
    </source>
</evidence>
<evidence type="ECO:0000269" key="39">
    <source>
    </source>
</evidence>
<evidence type="ECO:0000269" key="40">
    <source>
    </source>
</evidence>
<evidence type="ECO:0000269" key="41">
    <source>
    </source>
</evidence>
<evidence type="ECO:0000269" key="42">
    <source>
    </source>
</evidence>
<evidence type="ECO:0000269" key="43">
    <source>
    </source>
</evidence>
<evidence type="ECO:0000269" key="44">
    <source>
    </source>
</evidence>
<evidence type="ECO:0000269" key="45">
    <source>
    </source>
</evidence>
<evidence type="ECO:0000269" key="46">
    <source>
    </source>
</evidence>
<evidence type="ECO:0000269" key="47">
    <source>
    </source>
</evidence>
<evidence type="ECO:0000269" key="48">
    <source>
    </source>
</evidence>
<evidence type="ECO:0000269" key="49">
    <source>
    </source>
</evidence>
<evidence type="ECO:0000269" key="50">
    <source>
    </source>
</evidence>
<evidence type="ECO:0000269" key="51">
    <source>
    </source>
</evidence>
<evidence type="ECO:0000269" key="52">
    <source>
    </source>
</evidence>
<evidence type="ECO:0000269" key="53">
    <source>
    </source>
</evidence>
<evidence type="ECO:0000269" key="54">
    <source>
    </source>
</evidence>
<evidence type="ECO:0000305" key="55"/>
<evidence type="ECO:0000305" key="56">
    <source>
    </source>
</evidence>
<evidence type="ECO:0000305" key="57">
    <source>
    </source>
</evidence>
<evidence type="ECO:0000305" key="58">
    <source>
    </source>
</evidence>
<evidence type="ECO:0007829" key="59">
    <source>
        <dbReference type="PDB" id="1C0T"/>
    </source>
</evidence>
<evidence type="ECO:0007829" key="60">
    <source>
        <dbReference type="PDB" id="1EP4"/>
    </source>
</evidence>
<evidence type="ECO:0007829" key="61">
    <source>
        <dbReference type="PDB" id="1ESK"/>
    </source>
</evidence>
<evidence type="ECO:0007829" key="62">
    <source>
        <dbReference type="PDB" id="1EX4"/>
    </source>
</evidence>
<evidence type="ECO:0007829" key="63">
    <source>
        <dbReference type="PDB" id="1EXQ"/>
    </source>
</evidence>
<evidence type="ECO:0007829" key="64">
    <source>
        <dbReference type="PDB" id="1HVR"/>
    </source>
</evidence>
<evidence type="ECO:0007829" key="65">
    <source>
        <dbReference type="PDB" id="1JLG"/>
    </source>
</evidence>
<evidence type="ECO:0007829" key="66">
    <source>
        <dbReference type="PDB" id="1ODW"/>
    </source>
</evidence>
<evidence type="ECO:0007829" key="67">
    <source>
        <dbReference type="PDB" id="1RT2"/>
    </source>
</evidence>
<evidence type="ECO:0007829" key="68">
    <source>
        <dbReference type="PDB" id="1RTH"/>
    </source>
</evidence>
<evidence type="ECO:0007829" key="69">
    <source>
        <dbReference type="PDB" id="1TAM"/>
    </source>
</evidence>
<evidence type="ECO:0007829" key="70">
    <source>
        <dbReference type="PDB" id="1VRU"/>
    </source>
</evidence>
<evidence type="ECO:0007829" key="71">
    <source>
        <dbReference type="PDB" id="2KOD"/>
    </source>
</evidence>
<evidence type="ECO:0007829" key="72">
    <source>
        <dbReference type="PDB" id="2RF2"/>
    </source>
</evidence>
<evidence type="ECO:0007829" key="73">
    <source>
        <dbReference type="PDB" id="2WHH"/>
    </source>
</evidence>
<evidence type="ECO:0007829" key="74">
    <source>
        <dbReference type="PDB" id="2YNI"/>
    </source>
</evidence>
<evidence type="ECO:0007829" key="75">
    <source>
        <dbReference type="PDB" id="3DRP"/>
    </source>
</evidence>
<evidence type="ECO:0007829" key="76">
    <source>
        <dbReference type="PDB" id="3KJV"/>
    </source>
</evidence>
<evidence type="ECO:0007829" key="77">
    <source>
        <dbReference type="PDB" id="3KT2"/>
    </source>
</evidence>
<evidence type="ECO:0007829" key="78">
    <source>
        <dbReference type="PDB" id="3LAK"/>
    </source>
</evidence>
<evidence type="ECO:0007829" key="79">
    <source>
        <dbReference type="PDB" id="3LP1"/>
    </source>
</evidence>
<evidence type="ECO:0007829" key="80">
    <source>
        <dbReference type="PDB" id="3QIO"/>
    </source>
</evidence>
<evidence type="ECO:0007829" key="81">
    <source>
        <dbReference type="PDB" id="3QIP"/>
    </source>
</evidence>
<evidence type="ECO:0007829" key="82">
    <source>
        <dbReference type="PDB" id="5HRN"/>
    </source>
</evidence>
<evidence type="ECO:0007829" key="83">
    <source>
        <dbReference type="PDB" id="5TC2"/>
    </source>
</evidence>
<evidence type="ECO:0007829" key="84">
    <source>
        <dbReference type="PDB" id="6DV4"/>
    </source>
</evidence>
<evidence type="ECO:0007829" key="85">
    <source>
        <dbReference type="PDB" id="6EX9"/>
    </source>
</evidence>
<evidence type="ECO:0007829" key="86">
    <source>
        <dbReference type="PDB" id="6P1X"/>
    </source>
</evidence>
<evidence type="ECO:0007829" key="87">
    <source>
        <dbReference type="PDB" id="6VPZ"/>
    </source>
</evidence>
<evidence type="ECO:0007829" key="88">
    <source>
        <dbReference type="PDB" id="7DPQ"/>
    </source>
</evidence>
<evidence type="ECO:0007829" key="89">
    <source>
        <dbReference type="PDB" id="7SLS"/>
    </source>
</evidence>
<evidence type="ECO:0007829" key="90">
    <source>
        <dbReference type="PDB" id="8TCJ"/>
    </source>
</evidence>
<evidence type="ECO:0007829" key="91">
    <source>
        <dbReference type="PDB" id="8TCK"/>
    </source>
</evidence>
<evidence type="ECO:0007829" key="92">
    <source>
        <dbReference type="PDB" id="8TCM"/>
    </source>
</evidence>